<reference key="1">
    <citation type="journal article" date="1986" name="J. Immunol.">
        <title>The primary structure of HLA-A32 suggests a region involved in formation of the Bw4/Bw6 epitopes.</title>
        <authorList>
            <person name="Wan A.M."/>
            <person name="Ennis P."/>
            <person name="Parham P."/>
            <person name="Holmes N."/>
        </authorList>
    </citation>
    <scope>NUCLEOTIDE SEQUENCE OF 25-298 (ALLELE A*32:01)</scope>
</reference>
<reference key="2">
    <citation type="journal article" date="1987" name="J. Immunol.">
        <title>Multiple genetic mechanisms have contributed to the generation of the HLA-A2/A28 family of class I MHC molecules.</title>
        <authorList>
            <person name="Holmes N."/>
            <person name="Ennis P."/>
            <person name="Wan A.M."/>
            <person name="Denney D.W."/>
            <person name="Parham P."/>
        </authorList>
    </citation>
    <scope>NUCLEOTIDE SEQUENCE [MRNA] (ALLELE A*02:05)</scope>
</reference>
<reference key="3">
    <citation type="journal article" date="1988" name="EMBO J.">
        <title>Nucleotide sequences of chimpanzee MHC class I alleles: evidence for trans-species mode of evolution.</title>
        <authorList>
            <person name="Mayer W.E."/>
            <person name="Jonker M."/>
            <person name="Klein D."/>
            <person name="Ivanyi P."/>
            <person name="van Seventer G."/>
            <person name="Klein J."/>
        </authorList>
    </citation>
    <scope>NUCLEOTIDE SEQUENCE [MRNA] (ALLELE A*11:01)</scope>
</reference>
<reference key="4">
    <citation type="journal article" date="1989" name="Immunogenetics">
        <title>Molecular mapping of a new public HLA class I epitope shared by all HLA-B and HLA-C antigens and defined by a monoclonal antibody.</title>
        <authorList>
            <person name="Trapani J.A."/>
            <person name="Mizuno S."/>
            <person name="Kang S.H."/>
            <person name="Yang S.Y."/>
            <person name="Dupont B."/>
        </authorList>
    </citation>
    <scope>NUCLEOTIDE SEQUENCE [MRNA] (ALLELE A*29:01)</scope>
</reference>
<reference key="5">
    <citation type="journal article" date="1989" name="J. Immunol.">
        <title>Molecular analysis of the serologically defined HLA-Aw19 antigens. A genetically distinct family of HLA-A antigens comprising A29, A31, A32, and Aw33, but probably not A30.</title>
        <authorList>
            <person name="Kato K."/>
            <person name="Trapani J.A."/>
            <person name="Allopenna J."/>
            <person name="Dupont B."/>
            <person name="Yang S.Y."/>
        </authorList>
    </citation>
    <scope>NUCLEOTIDE SEQUENCE [GENOMIC DNA / MRNA] (ALLELES A*30:01; A*31:01 AND A*33:01)</scope>
</reference>
<reference key="6">
    <citation type="journal article" date="1989" name="J. Immunol.">
        <title>Diversity and diversification of HLA-A,B,C alleles.</title>
        <authorList>
            <person name="Parham P."/>
            <person name="Lawlor D.A."/>
            <person name="Lomen C.E."/>
            <person name="Ennis P.D."/>
        </authorList>
    </citation>
    <scope>NUCLEOTIDE SEQUENCE [GENOMIC DNA / MRNA] (ALLELE A*01:01)</scope>
</reference>
<reference key="7">
    <citation type="journal article" date="1990" name="Proc. Natl. Acad. Sci. U.S.A.">
        <title>Rapid cloning of HLA-A,B cDNA by using the polymerase chain reaction: frequency and nature of errors produced in amplification.</title>
        <authorList>
            <person name="Ennis P.D."/>
            <person name="Zemmour J."/>
            <person name="Salter R.D."/>
            <person name="Parham P."/>
        </authorList>
    </citation>
    <scope>NUCLEOTIDE SEQUENCE [MRNA] (ALLELES A*02:01 AND A*25:01)</scope>
</reference>
<reference key="8">
    <citation type="journal article" date="1991" name="C. R. Acad. Sci. III, Sci. Vie">
        <title>HLA-A29 sub-types and 'Birdshot' choroido-retinopathy susceptibility: a possible 'resistance motif' in the HLA-A29.1 molecule.</title>
        <authorList>
            <person name="Tabary T."/>
            <person name="Prochnicka-Chalufour A."/>
            <person name="Cornillet P."/>
            <person name="Lehoang P."/>
            <person name="Betuel H."/>
            <person name="Cohen H.M."/>
        </authorList>
    </citation>
    <scope>NUCLEOTIDE SEQUENCE [MRNA] (ALLELE A*29:02)</scope>
</reference>
<reference key="9">
    <citation type="journal article" date="1992" name="Immunogenetics">
        <title>Molecular definition of an elusive third HLA-A9 molecule: HLA-A9.3.</title>
        <authorList>
            <person name="Little A.-M."/>
            <person name="Madrigal J.A."/>
            <person name="Parham P."/>
        </authorList>
    </citation>
    <scope>NUCLEOTIDE SEQUENCE [MRNA] (ALLELES A*23:01 AND A*24:02)</scope>
</reference>
<reference key="10">
    <citation type="journal article" date="1992" name="J. Immunol.">
        <title>Distinctive HLA-A,B antigens of black populations formed by interallelic conversion.</title>
        <authorList>
            <person name="Madrigal J.A."/>
            <person name="Belich M.P."/>
            <person name="Hildebrand W.H."/>
            <person name="Benjamin R.J."/>
            <person name="Little A.-M."/>
            <person name="Zemmour J."/>
            <person name="Ennis P.D."/>
            <person name="Ward F.E."/>
            <person name="Petzl-Erler M.L."/>
            <person name="Martell R.W."/>
            <person name="du Toit E.D."/>
            <person name="Parham P."/>
        </authorList>
    </citation>
    <scope>NUCLEOTIDE SEQUENCE [MRNA] (ALLELES A*34:01; A*36:01; A*43:01; A*66:01 AND A*74:01)</scope>
</reference>
<reference key="11">
    <citation type="journal article" date="1992" name="Nature">
        <title>Unusual HLA-B alleles in two tribes of Brazilian Indians.</title>
        <authorList>
            <person name="Belich M.P."/>
            <person name="Madrigal J.A."/>
            <person name="Hildebrand W.H."/>
            <person name="Zemmour J."/>
            <person name="Williams R.C."/>
            <person name="Luz R."/>
            <person name="Petzl-Erler M.L."/>
            <person name="Parham P."/>
        </authorList>
    </citation>
    <scope>NUCLEOTIDE SEQUENCE [MRNA] (ALLELE A*31:01)</scope>
</reference>
<reference key="12">
    <citation type="journal article" date="1993" name="Tissue Antigens">
        <title>Structural diversity in the HLA-A10 family of alleles: correlations with serology.</title>
        <authorList>
            <person name="Madrigal J.A."/>
            <person name="Hildebrand W.H."/>
            <person name="Belich M.P."/>
            <person name="Benjamin R.J."/>
            <person name="Little A.-M."/>
            <person name="Zemmour J."/>
            <person name="Ennis P.D."/>
            <person name="Ward F.E."/>
            <person name="Petzl-Erler M.L."/>
            <person name="du Toit E.D."/>
            <person name="Parham P."/>
        </authorList>
    </citation>
    <scope>NUCLEOTIDE SEQUENCE [MRNA] (ALLELE A*26:01)</scope>
</reference>
<reference key="13">
    <citation type="journal article" date="1993" name="Tissue Antigens">
        <title>A sixth family of HLA-A alleles defined by HLA-A*8001.</title>
        <authorList>
            <person name="Domena J.D."/>
            <person name="Hildebrand W.H."/>
            <person name="Bias W.B."/>
            <person name="Parham P."/>
        </authorList>
    </citation>
    <scope>NUCLEOTIDE SEQUENCE [MRNA] (ALLELE A*80:01)</scope>
</reference>
<reference key="14">
    <citation type="journal article" date="1994" name="Hum. Immunol.">
        <title>Sequences of four splits of HLA-A10 group. Implications for serologic cross-reactivities and their evolution.</title>
        <authorList>
            <person name="Ishikawa Y."/>
            <person name="Tokunaga K."/>
            <person name="Lin L."/>
            <person name="Imanishi T."/>
            <person name="Saitou S."/>
            <person name="Kashiwase K."/>
            <person name="Akaza T."/>
            <person name="Tadokoro K."/>
            <person name="Juji T."/>
        </authorList>
    </citation>
    <scope>NUCLEOTIDE SEQUENCE [MRNA] (ALLELES A*26:01)</scope>
    <source>
        <tissue>Blood</tissue>
    </source>
</reference>
<reference key="15">
    <citation type="journal article" date="1994" name="Immunogenetics">
        <title>Characterization of a new and highly distinguishable HLA-A allele in a Spanish family.</title>
        <authorList>
            <person name="Balas A."/>
            <person name="Garcia-Sanchez F."/>
            <person name="Gomez-Reino F."/>
            <person name="Vicario J.L."/>
        </authorList>
    </citation>
    <scope>NUCLEOTIDE SEQUENCE [MRNA] (ALLELE A*80:01)</scope>
</reference>
<reference key="16">
    <citation type="journal article" date="1994" name="Tissue Antigens">
        <title>Sequence analysis of serological HLA-A11 split antigens, A11.1 and A11.2.</title>
        <authorList>
            <person name="Lin L."/>
            <person name="Tokunaga K."/>
            <person name="Ishikawa Y."/>
            <person name="Bannai M."/>
            <person name="Kashiwase K."/>
            <person name="Kuwata S."/>
            <person name="Akaza T."/>
            <person name="Tadokoro K."/>
            <person name="Shibata Y."/>
            <person name="Juji T."/>
        </authorList>
    </citation>
    <scope>NUCLEOTIDE SEQUENCE [MRNA] (ALLELE A*11:01)</scope>
</reference>
<reference key="17">
    <citation type="journal article" date="1994" name="Tissue Antigens">
        <title>Correct sequence of the A*3001 allele obtained by PCR-SSP typing and automated nucleotide sequencing.</title>
        <authorList>
            <person name="Olerup O."/>
            <person name="Daniels T.J."/>
            <person name="Baxter-Lowe L."/>
        </authorList>
    </citation>
    <scope>NUCLEOTIDE SEQUENCE [MRNA] (ALLELE A*30:01)</scope>
</reference>
<reference key="18">
    <citation type="journal article" date="2006" name="Tissue Antigens">
        <title>Identification and frequency of a novel HLA-A allele, A*110104.</title>
        <authorList>
            <person name="Sun Y."/>
            <person name="Liu S."/>
            <person name="Luo Y."/>
            <person name="Liang F."/>
            <person name="Xi Y."/>
        </authorList>
    </citation>
    <scope>NUCLEOTIDE SEQUENCE [MRNA] (ALLELE A*11:01) (ISOFORM 2)</scope>
</reference>
<reference key="19">
    <citation type="journal article" date="1984" name="EMBO J.">
        <title>Complete nucleotide sequence of a functional class I HLA gene, HLA-A3: implications for the evolution of HLA genes.</title>
        <authorList>
            <person name="Strachan T."/>
            <person name="Sodoyer R."/>
            <person name="Damotte M."/>
            <person name="Jordan B.R."/>
        </authorList>
    </citation>
    <scope>NUCLEOTIDE SEQUENCE [GENOMIC DNA] (ALLELE A*03:01)</scope>
</reference>
<reference key="20">
    <citation type="journal article" date="1985" name="EMBO J.">
        <title>Exon shuffling in vivo can generate novel HLA class I molecules.</title>
        <authorList>
            <person name="Holmes N."/>
            <person name="Parham P."/>
        </authorList>
    </citation>
    <scope>NUCLEOTIDE SEQUENCE [GENOMIC DNA] OF 26-297 (ALLELES A*68:01 AND A*69:01)</scope>
</reference>
<reference key="21">
    <citation type="journal article" date="1985" name="J. Immunol.">
        <title>Cloning and complete sequence of an HLA-A2 gene: analysis of two HLA-A alleles at the nucleotide level.</title>
        <authorList>
            <person name="Koller B.H."/>
            <person name="Orr H.T."/>
        </authorList>
    </citation>
    <scope>NUCLEOTIDE SEQUENCE [GENOMIC DNA] (ALLELE A*02:01)</scope>
</reference>
<reference key="22">
    <citation type="journal article" date="1987" name="Immunogenetics">
        <title>DNA sequence of HLA-A11: remarkable homology with HLA-A3 allows identification of residues involved in epitopes recognized by antibodies and T cells.</title>
        <authorList>
            <person name="Cowan E.P."/>
            <person name="Jelachich M.L."/>
            <person name="Biddison W.E."/>
            <person name="Coligan J.E."/>
        </authorList>
    </citation>
    <scope>NUCLEOTIDE SEQUENCE [GENOMIC DNA] OF 26-365 (ALLELE A*11:01)</scope>
</reference>
<reference key="23">
    <citation type="journal article" date="1990" name="Nucleic Acids Res.">
        <title>Nucleotide sequence of an HLA-A1 gene.</title>
        <authorList>
            <person name="Girdlestone J."/>
        </authorList>
    </citation>
    <scope>NUCLEOTIDE SEQUENCE [GENOMIC DNA] (ALLELE A*01:01)</scope>
</reference>
<reference key="24">
    <citation type="journal article" date="1994" name="Hum. Immunol.">
        <title>HLA class I allele (HLA-A2) expression defect associated with a mutation in its enhancer B inverted CAT box in two families.</title>
        <authorList>
            <person name="Balas A."/>
            <person name="Garcia-Sanchez F."/>
            <person name="Gomez-Reino F."/>
            <person name="Vicario J.L."/>
        </authorList>
    </citation>
    <scope>NUCLEOTIDE SEQUENCE [GENOMIC DNA] (ALLELE A*02:01)</scope>
    <source>
        <tissue>Blood</tissue>
    </source>
</reference>
<reference key="25">
    <citation type="journal article" date="1996" name="Tissue Antigens">
        <title>On the sequence of A*3101.</title>
        <authorList>
            <person name="Arnett K.L."/>
            <person name="Adams E.J."/>
            <person name="Parham P."/>
        </authorList>
    </citation>
    <scope>NUCLEOTIDE SEQUENCE [GENOMIC DNA] (ALLELE A*31:01)</scope>
</reference>
<reference key="26">
    <citation type="journal article" date="1997" name="Tissue Antigens">
        <title>An intronic mutation responsible for a low level of expression of an HLA-A*24 allele.</title>
        <authorList>
            <person name="Laforet M."/>
            <person name="Froelich N."/>
            <person name="Parissiadis A."/>
            <person name="Bausinger H."/>
            <person name="Pfeiffer B."/>
            <person name="Tongio M.M."/>
        </authorList>
    </citation>
    <scope>NUCLEOTIDE SEQUENCE [GENOMIC DNA] (ALLELE A*24:02)</scope>
</reference>
<reference key="27">
    <citation type="journal article" date="1997" name="Tissue Antigens">
        <title>A nucleotide insertion in exon 4 is responsible for the absence of expression of an HLA-A*01 allele.</title>
        <authorList>
            <person name="Laforet M."/>
            <person name="Froelich N."/>
            <person name="Parissiadis A."/>
            <person name="Pfeiffer B."/>
            <person name="Schell A."/>
            <person name="Faller B."/>
            <person name="Woehl-Jaegle M.L."/>
            <person name="Cazenave J.-P."/>
            <person name="Tongio M.M."/>
        </authorList>
    </citation>
    <scope>NUCLEOTIDE SEQUENCE [GENOMIC DNA] (ALLELE A*01:01)</scope>
</reference>
<reference key="28">
    <citation type="journal article" date="2009" name="Int. J. Immunogenet.">
        <title>Analysis of the complete genomic sequence of HLA-A alleles in the Chinese Han population.</title>
        <authorList>
            <person name="Zhu F."/>
            <person name="He Y."/>
            <person name="Zhang W."/>
            <person name="He J."/>
            <person name="He J."/>
            <person name="Xu X."/>
            <person name="Yan L."/>
        </authorList>
    </citation>
    <scope>NUCLEOTIDE SEQUENCE [GENOMIC DNA] (ALLELE A*69:01)</scope>
</reference>
<reference key="29">
    <citation type="submission" date="1993-12" db="EMBL/GenBank/DDBJ databases">
        <authorList>
            <person name="Domena J.D."/>
        </authorList>
    </citation>
    <scope>NUCLEOTIDE SEQUENCE [MRNA] (ALLELE A*32:01)</scope>
</reference>
<reference key="30">
    <citation type="submission" date="1994-11" db="EMBL/GenBank/DDBJ databases">
        <authorList>
            <person name="Hurley C.K."/>
        </authorList>
    </citation>
    <scope>NUCLEOTIDE SEQUENCE [MRNA] (ALLELE A*74:01)</scope>
</reference>
<reference key="31">
    <citation type="submission" date="1995-07" db="EMBL/GenBank/DDBJ databases">
        <authorList>
            <person name="Ellexson M.E."/>
            <person name="Hildebrand W.H."/>
        </authorList>
    </citation>
    <scope>NUCLEOTIDE SEQUENCE [MRNA] (ALLELE A*03:01)</scope>
</reference>
<reference key="32">
    <citation type="submission" date="2004-09" db="EMBL/GenBank/DDBJ databases">
        <title>Full length sequence of an HLA-A*0301 intron 2 variant.</title>
        <authorList>
            <person name="Mayor N.P."/>
        </authorList>
    </citation>
    <scope>NUCLEOTIDE SEQUENCE [GENOMIC DNA] (ALLELE A*03:01)</scope>
</reference>
<reference key="33">
    <citation type="journal article" date="2004" name="Genome Res.">
        <title>The status, quality, and expansion of the NIH full-length cDNA project: the Mammalian Gene Collection (MGC).</title>
        <authorList>
            <consortium name="The MGC Project Team"/>
        </authorList>
    </citation>
    <scope>NUCLEOTIDE SEQUENCE [LARGE SCALE MRNA]</scope>
    <source>
        <tissue>Brain</tissue>
    </source>
</reference>
<reference key="34">
    <citation type="journal article" date="2003" name="Nature">
        <title>The DNA sequence and analysis of human chromosome 6.</title>
        <authorList>
            <person name="Mungall A.J."/>
            <person name="Palmer S.A."/>
            <person name="Sims S.K."/>
            <person name="Edwards C.A."/>
            <person name="Ashurst J.L."/>
            <person name="Wilming L."/>
            <person name="Jones M.C."/>
            <person name="Horton R."/>
            <person name="Hunt S.E."/>
            <person name="Scott C.E."/>
            <person name="Gilbert J.G.R."/>
            <person name="Clamp M.E."/>
            <person name="Bethel G."/>
            <person name="Milne S."/>
            <person name="Ainscough R."/>
            <person name="Almeida J.P."/>
            <person name="Ambrose K.D."/>
            <person name="Andrews T.D."/>
            <person name="Ashwell R.I.S."/>
            <person name="Babbage A.K."/>
            <person name="Bagguley C.L."/>
            <person name="Bailey J."/>
            <person name="Banerjee R."/>
            <person name="Barker D.J."/>
            <person name="Barlow K.F."/>
            <person name="Bates K."/>
            <person name="Beare D.M."/>
            <person name="Beasley H."/>
            <person name="Beasley O."/>
            <person name="Bird C.P."/>
            <person name="Blakey S.E."/>
            <person name="Bray-Allen S."/>
            <person name="Brook J."/>
            <person name="Brown A.J."/>
            <person name="Brown J.Y."/>
            <person name="Burford D.C."/>
            <person name="Burrill W."/>
            <person name="Burton J."/>
            <person name="Carder C."/>
            <person name="Carter N.P."/>
            <person name="Chapman J.C."/>
            <person name="Clark S.Y."/>
            <person name="Clark G."/>
            <person name="Clee C.M."/>
            <person name="Clegg S."/>
            <person name="Cobley V."/>
            <person name="Collier R.E."/>
            <person name="Collins J.E."/>
            <person name="Colman L.K."/>
            <person name="Corby N.R."/>
            <person name="Coville G.J."/>
            <person name="Culley K.M."/>
            <person name="Dhami P."/>
            <person name="Davies J."/>
            <person name="Dunn M."/>
            <person name="Earthrowl M.E."/>
            <person name="Ellington A.E."/>
            <person name="Evans K.A."/>
            <person name="Faulkner L."/>
            <person name="Francis M.D."/>
            <person name="Frankish A."/>
            <person name="Frankland J."/>
            <person name="French L."/>
            <person name="Garner P."/>
            <person name="Garnett J."/>
            <person name="Ghori M.J."/>
            <person name="Gilby L.M."/>
            <person name="Gillson C.J."/>
            <person name="Glithero R.J."/>
            <person name="Grafham D.V."/>
            <person name="Grant M."/>
            <person name="Gribble S."/>
            <person name="Griffiths C."/>
            <person name="Griffiths M.N.D."/>
            <person name="Hall R."/>
            <person name="Halls K.S."/>
            <person name="Hammond S."/>
            <person name="Harley J.L."/>
            <person name="Hart E.A."/>
            <person name="Heath P.D."/>
            <person name="Heathcott R."/>
            <person name="Holmes S.J."/>
            <person name="Howden P.J."/>
            <person name="Howe K.L."/>
            <person name="Howell G.R."/>
            <person name="Huckle E."/>
            <person name="Humphray S.J."/>
            <person name="Humphries M.D."/>
            <person name="Hunt A.R."/>
            <person name="Johnson C.M."/>
            <person name="Joy A.A."/>
            <person name="Kay M."/>
            <person name="Keenan S.J."/>
            <person name="Kimberley A.M."/>
            <person name="King A."/>
            <person name="Laird G.K."/>
            <person name="Langford C."/>
            <person name="Lawlor S."/>
            <person name="Leongamornlert D.A."/>
            <person name="Leversha M."/>
            <person name="Lloyd C.R."/>
            <person name="Lloyd D.M."/>
            <person name="Loveland J.E."/>
            <person name="Lovell J."/>
            <person name="Martin S."/>
            <person name="Mashreghi-Mohammadi M."/>
            <person name="Maslen G.L."/>
            <person name="Matthews L."/>
            <person name="McCann O.T."/>
            <person name="McLaren S.J."/>
            <person name="McLay K."/>
            <person name="McMurray A."/>
            <person name="Moore M.J.F."/>
            <person name="Mullikin J.C."/>
            <person name="Niblett D."/>
            <person name="Nickerson T."/>
            <person name="Novik K.L."/>
            <person name="Oliver K."/>
            <person name="Overton-Larty E.K."/>
            <person name="Parker A."/>
            <person name="Patel R."/>
            <person name="Pearce A.V."/>
            <person name="Peck A.I."/>
            <person name="Phillimore B.J.C.T."/>
            <person name="Phillips S."/>
            <person name="Plumb R.W."/>
            <person name="Porter K.M."/>
            <person name="Ramsey Y."/>
            <person name="Ranby S.A."/>
            <person name="Rice C.M."/>
            <person name="Ross M.T."/>
            <person name="Searle S.M."/>
            <person name="Sehra H.K."/>
            <person name="Sheridan E."/>
            <person name="Skuce C.D."/>
            <person name="Smith S."/>
            <person name="Smith M."/>
            <person name="Spraggon L."/>
            <person name="Squares S.L."/>
            <person name="Steward C.A."/>
            <person name="Sycamore N."/>
            <person name="Tamlyn-Hall G."/>
            <person name="Tester J."/>
            <person name="Theaker A.J."/>
            <person name="Thomas D.W."/>
            <person name="Thorpe A."/>
            <person name="Tracey A."/>
            <person name="Tromans A."/>
            <person name="Tubby B."/>
            <person name="Wall M."/>
            <person name="Wallis J.M."/>
            <person name="West A.P."/>
            <person name="White S.S."/>
            <person name="Whitehead S.L."/>
            <person name="Whittaker H."/>
            <person name="Wild A."/>
            <person name="Willey D.J."/>
            <person name="Wilmer T.E."/>
            <person name="Wood J.M."/>
            <person name="Wray P.W."/>
            <person name="Wyatt J.C."/>
            <person name="Young L."/>
            <person name="Younger R.M."/>
            <person name="Bentley D.R."/>
            <person name="Coulson A."/>
            <person name="Durbin R.M."/>
            <person name="Hubbard T."/>
            <person name="Sulston J.E."/>
            <person name="Dunham I."/>
            <person name="Rogers J."/>
            <person name="Beck S."/>
        </authorList>
    </citation>
    <scope>NUCLEOTIDE SEQUENCE [LARGE SCALE GENOMIC DNA]</scope>
</reference>
<reference key="35">
    <citation type="journal article" date="1979" name="Proc. Natl. Acad. Sci. U.S.A.">
        <title>Comparison of amino acid sequences of two human histocompatibility antigens, HLA-A2 and HLA-B7: location of putative alloantigenic sites.</title>
        <authorList>
            <person name="Orr H.T."/>
            <person name="Lopez de Castro J.A."/>
            <person name="Parham P."/>
            <person name="Ploegh H.L."/>
            <person name="Strominger J.L."/>
        </authorList>
    </citation>
    <scope>PROTEIN SEQUENCE OF 25-295 (ALLELE A*02:01)</scope>
</reference>
<reference key="36">
    <citation type="journal article" date="1982" name="Proc. Natl. Acad. Sci. U.S.A.">
        <title>Structure of crossreactive human histocompatibility antigens HLA-A28 and HLA-A2: possible implications for the generation of HLA polymorphism.</title>
        <authorList>
            <person name="Lopez de Castro J.A."/>
            <person name="Strominger J.L."/>
            <person name="Strong D.M."/>
            <person name="Orr H.T."/>
        </authorList>
    </citation>
    <scope>PROTEIN SEQUENCE OF 25-294 (ALLELE A*68:01)</scope>
</reference>
<reference key="37">
    <citation type="journal article" date="1988" name="J. Immunol.">
        <title>Analysis of the molecular basis of HLA-A3 recognition by cytotoxic T cells using defined mutants of the HLA-A3 molecule.</title>
        <authorList>
            <person name="Jelachich M.L."/>
            <person name="Cowan E.P."/>
            <person name="Turner R.V."/>
            <person name="Coligan J.E."/>
            <person name="Biddison W.E."/>
        </authorList>
    </citation>
    <scope>FUNCTION (ALLELE A*03:01)</scope>
    <scope>CHARACTERIZATION OF VARIANT VAL-176</scope>
</reference>
<reference key="38">
    <citation type="journal article" date="1989" name="Nature">
        <title>Polymorphism in the alpha 3 domain of HLA-A molecules affects binding to CD8.</title>
        <authorList>
            <person name="Salter R.D."/>
            <person name="Norment A.M."/>
            <person name="Chen B.P."/>
            <person name="Clayberger C."/>
            <person name="Krensky A.M."/>
            <person name="Littman D.R."/>
            <person name="Parham P."/>
        </authorList>
    </citation>
    <scope>FUNCTION (ALLELES A*02:01 AND A*68:01)</scope>
    <scope>INTERACTION WITH CD8A</scope>
    <scope>DOMAIN</scope>
    <scope>CHARACTERIZATION OF VARIANT VAL-269</scope>
</reference>
<reference key="39">
    <citation type="journal article" date="1992" name="J. Exp. Med.">
        <title>A nonapeptide encoded by human gene MAGE-1 is recognized on HLA-A1 by cytolytic T lymphocytes directed against tumor antigen MZ2-E.</title>
        <authorList>
            <person name="Traversari C."/>
            <person name="van der Bruggen P."/>
            <person name="Luescher I.F."/>
            <person name="Lurquin C."/>
            <person name="Chomez P."/>
            <person name="Van Pel A."/>
            <person name="De Plaen E."/>
            <person name="Amar-Costesec A."/>
            <person name="Boon T."/>
        </authorList>
    </citation>
    <scope>FUNCTION (ALLELE A*01:01)</scope>
</reference>
<reference key="40">
    <citation type="journal article" date="1993" name="J. Immunol.">
        <title>HLA-A1 and HLA-A3 T cell epitopes derived from influenza virus proteins predicted from peptide binding motifs.</title>
        <authorList>
            <person name="DiBrino M."/>
            <person name="Tsuchida T."/>
            <person name="Turner R.V."/>
            <person name="Parker K.C."/>
            <person name="Coligan J.E."/>
            <person name="Biddison W.E."/>
        </authorList>
    </citation>
    <scope>FUNCTION (ALLELES A*01:01 AND A*03:01)</scope>
    <scope>INTERACTION WITH B2M AND PEPTIDE</scope>
</reference>
<reference key="41">
    <citation type="journal article" date="1993" name="Proc. Natl. Acad. Sci. U.S.A.">
        <title>Endogenous peptides bound to HLA-A3 possess a specific combination of anchor residues that permit identification of potential antigenic peptides.</title>
        <authorList>
            <person name="DiBrino M."/>
            <person name="Parker K.C."/>
            <person name="Shiloach J."/>
            <person name="Knierman M."/>
            <person name="Lukszo J."/>
            <person name="Turner R.V."/>
            <person name="Biddison W.E."/>
            <person name="Coligan J.E."/>
        </authorList>
    </citation>
    <scope>FUNCTION (ALLELE A*03:01)</scope>
    <scope>INTERACTION WITH B2M AND PEPTIDE</scope>
</reference>
<reference key="42">
    <citation type="journal article" date="1994" name="J. Immunol.">
        <title>Endogenous peptides with distinct amino acid anchor residue motifs bind to HLA-A1 and HLA-B8.</title>
        <authorList>
            <person name="DiBrino M."/>
            <person name="Parker K.C."/>
            <person name="Shiloach J."/>
            <person name="Turner R.V."/>
            <person name="Tsuchida T."/>
            <person name="Garfield M."/>
            <person name="Biddison W.E."/>
            <person name="Coligan J.E."/>
        </authorList>
    </citation>
    <scope>FUNCTION (ALLELE A*01:01)</scope>
    <scope>INTERACTION WITH B2M AND PEPTIDE</scope>
</reference>
<reference key="43">
    <citation type="journal article" date="1996" name="Curr. Biol.">
        <title>Point mutations in the alpha 2 domain of HLA-A2.1 define a functionally relevant interaction with TAP.</title>
        <authorList>
            <person name="Lewis J.W."/>
            <person name="Neisig A."/>
            <person name="Neefjes J."/>
            <person name="Elliott T."/>
        </authorList>
    </citation>
    <scope>FUNCTION (ALLELE A*02:01)</scope>
    <scope>MUTAGENESIS OF SER-156 AND THR-158</scope>
    <scope>DOMAIN</scope>
    <scope>INTERACTION WITH B2M</scope>
    <scope>INTERACTION WITH TAP1-TAP2 COMPLEX</scope>
    <scope>SUBCELLULAR LOCATION</scope>
</reference>
<reference key="44">
    <citation type="journal article" date="1996" name="Immunity">
        <title>A point mutation in HLA-A*0201 results in failure to bind the TAP complex and to present virus-derived peptides to CTL.</title>
        <authorList>
            <person name="Peace-Brewer A.L."/>
            <person name="Tussey L.G."/>
            <person name="Matsui M."/>
            <person name="Li G."/>
            <person name="Quinn D.G."/>
            <person name="Frelinger J.A."/>
        </authorList>
    </citation>
    <scope>FUNCTION (ALLELE A*02:01)</scope>
    <scope>INTERACTION WITH TAP1-TAP2 COMPLEX</scope>
    <scope>MUTAGENESIS OF THR-158</scope>
</reference>
<reference key="45">
    <citation type="journal article" date="1996" name="Proc. Natl. Acad. Sci. U.S.A.">
        <title>Definition of the HLA-A29 peptide ligand motif allows prediction of potential T-cell epitopes from the retinal soluble antigen, a candidate autoantigen in birdshot retinopathy.</title>
        <authorList>
            <person name="Boisgerault F."/>
            <person name="Khalil I."/>
            <person name="Tieng V."/>
            <person name="Connan F."/>
            <person name="Tabary T."/>
            <person name="Cohen J.H."/>
            <person name="Choppin J."/>
            <person name="Charron D."/>
            <person name="Toubert A."/>
        </authorList>
    </citation>
    <scope>FUNCTION (ALLELE A*29:02)</scope>
</reference>
<reference key="46">
    <citation type="journal article" date="1997" name="Immunity">
        <title>Characterization of an antigen that is recognized on a melanoma showing partial HLA loss by CTL expressing an NK inhibitory receptor.</title>
        <authorList>
            <person name="Ikeda H."/>
            <person name="Lethe B.G."/>
            <person name="Lehmann F."/>
            <person name="van Baren N."/>
            <person name="Baurain J.-F."/>
            <person name="de Smet C."/>
            <person name="Chambost H."/>
            <person name="Vitale M."/>
            <person name="Moretta A."/>
            <person name="Boon T."/>
            <person name="Coulie P.G."/>
        </authorList>
    </citation>
    <scope>FUNCTION (ALLELE A*24:02)</scope>
</reference>
<reference key="47">
    <citation type="journal article" date="1998" name="J. Immunol.">
        <title>Identification of new melanoma epitopes on melanosomal proteins recognized by tumor infiltrating T lymphocytes restricted by HLA-A1, -A2, and -A3 alleles.</title>
        <authorList>
            <person name="Kawakami Y."/>
            <person name="Robbins P.F."/>
            <person name="Wang X."/>
            <person name="Tupesis J.P."/>
            <person name="Parkhurst M.R."/>
            <person name="Kang X."/>
            <person name="Sakaguchi K."/>
            <person name="Appella E."/>
            <person name="Rosenberg S.A."/>
        </authorList>
    </citation>
    <scope>FUNCTION (ALLELE A*03:01)</scope>
</reference>
<reference key="48">
    <citation type="journal article" date="1999" name="AIDS">
        <title>HLA-A*1101-restricted cytotoxic T lymphocyte recognition of HIV-1 Pol protein.</title>
        <authorList>
            <person name="Fukada K."/>
            <person name="Chujoh Y."/>
            <person name="Tomiyama H."/>
            <person name="Miwa K."/>
            <person name="Kaneko Y."/>
            <person name="Oka S."/>
            <person name="Takiguchi M."/>
        </authorList>
    </citation>
    <scope>FUNCTION (ALLELE A*11:01)</scope>
</reference>
<reference key="49">
    <citation type="journal article" date="2001" name="J. Virol.">
        <title>Free major histocompatibility complex class I heavy chain is preferentially targeted for degradation by human T-cell leukemia/lymphotropic virus type 1 p12(I) protein.</title>
        <authorList>
            <person name="Johnson J.M."/>
            <person name="Nicot C."/>
            <person name="Fullen J."/>
            <person name="Ciminale V."/>
            <person name="Casareto L."/>
            <person name="Mulloy J.C."/>
            <person name="Jacobson S."/>
            <person name="Franchini G."/>
        </authorList>
    </citation>
    <scope>INTERACTION WITH HTLV-1 ACCESSORY PROTEIN P12I (MICROBIAL INFECTION)</scope>
</reference>
<reference key="50">
    <citation type="journal article" date="2002" name="EMBO J.">
        <title>Ubiquitylation of MHC class I by the K3 viral protein signals internalization and TSG101-dependent degradation.</title>
        <authorList>
            <person name="Hewitt E.W."/>
            <person name="Duncan L."/>
            <person name="Mufti D."/>
            <person name="Baker J."/>
            <person name="Stevenson P.G."/>
            <person name="Lehner P.J."/>
        </authorList>
    </citation>
    <scope>INTERACTION WITH HUMAN HERPESVIRUS 8 MIR1 PROTEIN (MICROBIAL INFECTION)</scope>
    <scope>UBIQUITINATION (MICROBIAL INFECTION)</scope>
</reference>
<reference key="51">
    <citation type="journal article" date="2002" name="Proc. Natl. Acad. Sci. U.S.A.">
        <title>Differential presentation of a soluble exogenous tumor antigen, NY-ESO-1, by distinct human dendritic cell populations.</title>
        <authorList>
            <person name="Nagata Y."/>
            <person name="Ono S."/>
            <person name="Matsuo M."/>
            <person name="Gnjatic S."/>
            <person name="Valmori D."/>
            <person name="Ritter G."/>
            <person name="Garrett W."/>
            <person name="Old L.J."/>
            <person name="Mellman I."/>
        </authorList>
    </citation>
    <scope>FUNCTION (ALLELE A*02:01)</scope>
</reference>
<reference key="52">
    <citation type="journal article" date="2003" name="Blood">
        <title>Tetramer-assisted identification and characterization of epitopes recognized by HLA A*2402-restricted Epstein-Barr virus-specific CD8+ T cells.</title>
        <authorList>
            <person name="Kuzushima K."/>
            <person name="Hayashi N."/>
            <person name="Kudoh A."/>
            <person name="Akatsuka Y."/>
            <person name="Tsujimura K."/>
            <person name="Morishima Y."/>
            <person name="Tsurumi T."/>
        </authorList>
    </citation>
    <scope>FUNCTION (ALLELE A*24:02)</scope>
</reference>
<reference key="53">
    <citation type="journal article" date="2005" name="Vaccine">
        <title>Identification and characterization of HIV-1-specific CD8+ T cell epitopes presented by HLA-A*2601.</title>
        <authorList>
            <person name="Satoh M."/>
            <person name="Takamiya Y."/>
            <person name="Oka S."/>
            <person name="Tokunaga K."/>
            <person name="Takiguchi M."/>
        </authorList>
    </citation>
    <scope>FUNCTION (ALLELE A*26:01)</scope>
</reference>
<reference key="54">
    <citation type="journal article" date="2006" name="Clin. Cancer Res.">
        <title>Identification of a highly immunogenic HLA-A*01-binding T cell epitope of WT1.</title>
        <authorList>
            <person name="Asemissen A.M."/>
            <person name="Keilholz U."/>
            <person name="Tenzer S."/>
            <person name="Mueller M."/>
            <person name="Walter S."/>
            <person name="Stevanovic S."/>
            <person name="Schild H."/>
            <person name="Letsch A."/>
            <person name="Thiel E."/>
            <person name="Rammensee H.G."/>
            <person name="Scheibenbogen C."/>
        </authorList>
    </citation>
    <scope>FUNCTION (ALLELE A*01:01)</scope>
</reference>
<reference key="55">
    <citation type="journal article" date="2007" name="J. Immunol.">
        <title>Cutting Edge: Allele-specific and peptide-dependent interactions between KIR3DL1 and HLA-A and HLA-B.</title>
        <authorList>
            <person name="Thananchai H."/>
            <person name="Gillespie G."/>
            <person name="Martin M.P."/>
            <person name="Bashirova A."/>
            <person name="Yawata N."/>
            <person name="Yawata M."/>
            <person name="Easterbrook P."/>
            <person name="McVicar D.W."/>
            <person name="Maenaka K."/>
            <person name="Parham P."/>
            <person name="Carrington M."/>
            <person name="Dong T."/>
            <person name="Rowland-Jones S."/>
        </authorList>
    </citation>
    <scope>FUNCTION (ALLELES A*23:01; A*24:02 AND A*32:01)</scope>
    <scope>INTERACTION WITH KIR3DL1</scope>
</reference>
<reference key="56">
    <citation type="journal article" date="2007" name="J. Virol.">
        <title>Role of immunoproteasome catalytic subunits in the immune response to hepatitis B virus.</title>
        <authorList>
            <person name="Robek M.D."/>
            <person name="Garcia M.L."/>
            <person name="Boyd B.S."/>
            <person name="Chisari F.V."/>
        </authorList>
    </citation>
    <scope>FUNCTION (ALLELE A*02:01)</scope>
</reference>
<reference key="57">
    <citation type="journal article" date="2008" name="Blood">
        <title>Human leukocyte antigens A23, A24, and A32 but not A25 are ligands for KIR3DL1.</title>
        <authorList>
            <person name="Stern M."/>
            <person name="Ruggeri L."/>
            <person name="Capanni M."/>
            <person name="Mancusi A."/>
            <person name="Velardi A."/>
        </authorList>
    </citation>
    <scope>FUNCTION (ALLELE A*24:02)</scope>
    <scope>INTERACTION WITH KIR3DL1</scope>
</reference>
<reference key="58">
    <citation type="journal article" date="2008" name="Blood">
        <title>A mechanism for the HLA-A*01-associated risk for EBV+ Hodgkin lymphoma and infectious mononucleosis.</title>
        <authorList>
            <person name="Brennan R.M."/>
            <person name="Burrows S.R."/>
        </authorList>
    </citation>
    <scope>FUNCTION (ALLELE A*01:01)</scope>
</reference>
<reference key="59">
    <citation type="journal article" date="2009" name="J. Proteome Res.">
        <title>Glycoproteomics analysis of human liver tissue by combination of multiple enzyme digestion and hydrazide chemistry.</title>
        <authorList>
            <person name="Chen R."/>
            <person name="Jiang X."/>
            <person name="Sun D."/>
            <person name="Han G."/>
            <person name="Wang F."/>
            <person name="Ye M."/>
            <person name="Wang L."/>
            <person name="Zou H."/>
        </authorList>
    </citation>
    <scope>GLYCOSYLATION [LARGE SCALE ANALYSIS] AT ASN-110</scope>
    <source>
        <tissue>Liver</tissue>
    </source>
</reference>
<reference key="60">
    <citation type="journal article" date="2009" name="Nat. Methods">
        <title>Parallel detection of antigen-specific T-cell responses by multidimensional encoding of MHC multimers.</title>
        <authorList>
            <person name="Hadrup S.R."/>
            <person name="Bakker A.H."/>
            <person name="Shu C.J."/>
            <person name="Andersen R.S."/>
            <person name="van Veluw J."/>
            <person name="Hombrink P."/>
            <person name="Castermans E."/>
            <person name="Thor Straten P."/>
            <person name="Blank C."/>
            <person name="Haanen J.B."/>
            <person name="Heemskerk M.H."/>
            <person name="Schumacher T.N."/>
        </authorList>
    </citation>
    <scope>FUNCTION (ALLELE A*03:01)</scope>
</reference>
<reference key="61">
    <citation type="journal article" date="2010" name="Nat. Immunol.">
        <title>Production of an antigenic peptide by insulin-degrading enzyme.</title>
        <authorList>
            <person name="Parmentier N."/>
            <person name="Stroobant V."/>
            <person name="Colau D."/>
            <person name="de Diesbach P."/>
            <person name="Morel S."/>
            <person name="Chapiro J."/>
            <person name="van Endert P."/>
            <person name="Van den Eynde B.J."/>
        </authorList>
    </citation>
    <scope>FUNCTION (ALLELE A*01:01)</scope>
</reference>
<reference key="62">
    <citation type="journal article" date="2010" name="Tissue Antigens">
        <title>Nomenclature for factors of the HLA system, 2010.</title>
        <authorList>
            <person name="Marsh S.G."/>
            <person name="Albert E.D."/>
            <person name="Bodmer W.F."/>
            <person name="Bontrop R.E."/>
            <person name="Dupont B."/>
            <person name="Erlich H.A."/>
            <person name="Fernandez-Vina M."/>
            <person name="Geraghty D.E."/>
            <person name="Holdsworth R."/>
            <person name="Hurley C.K."/>
            <person name="Lau M."/>
            <person name="Lee K.W."/>
            <person name="Mach B."/>
            <person name="Maiers M."/>
            <person name="Mayr W.R."/>
            <person name="Mueller C.R."/>
            <person name="Parham P."/>
            <person name="Petersdorf E.W."/>
            <person name="Sasazuki T."/>
            <person name="Strominger J.L."/>
            <person name="Svejgaard A."/>
            <person name="Terasaki P.I."/>
            <person name="Tiercy J.M."/>
            <person name="Trowsdale J."/>
        </authorList>
    </citation>
    <scope>NOMENCLATURE</scope>
</reference>
<reference key="63">
    <citation type="journal article" date="2011" name="J. Immunol.">
        <title>Distinct functions for the glycans of tapasin and heavy chains in the assembly of MHC class I molecules.</title>
        <authorList>
            <person name="Rizvi S.M."/>
            <person name="Del Cid N."/>
            <person name="Lybarger L."/>
            <person name="Raghavan M."/>
        </authorList>
    </citation>
    <scope>INDUCTION BY IFNG</scope>
    <scope>GLYCOSYLATION AT ASN-110</scope>
    <scope>MUTAGENESIS OF ASN-110</scope>
    <scope>SUBCELLULAR LOCATION</scope>
    <scope>INTERACTION WITH TAPBP</scope>
</reference>
<reference key="64">
    <citation type="journal article" date="2011" name="J. Immunol.">
        <title>HLA-A*7401-mediated control of HIV viremia is independent of its linkage disequilibrium with HLA-B*5703.</title>
        <authorList>
            <person name="Matthews P.C."/>
            <person name="Adland E."/>
            <person name="Listgarten J."/>
            <person name="Leslie A."/>
            <person name="Mkhwanazi N."/>
            <person name="Carlson J.M."/>
            <person name="Harndahl M."/>
            <person name="Stryhn A."/>
            <person name="Payne R.P."/>
            <person name="Ogwu A."/>
            <person name="Huang K.H."/>
            <person name="Frater J."/>
            <person name="Paioni P."/>
            <person name="Kloverpris H."/>
            <person name="Jooste P."/>
            <person name="Goedhals D."/>
            <person name="van Vuuren C."/>
            <person name="Steyn D."/>
            <person name="Riddell L."/>
            <person name="Chen F."/>
            <person name="Luzzi G."/>
            <person name="Balachandran T."/>
            <person name="Ndung'u T."/>
            <person name="Buus S."/>
            <person name="Carrington M."/>
            <person name="Shapiro R."/>
            <person name="Heckerman D."/>
            <person name="Goulder P.J."/>
        </authorList>
    </citation>
    <scope>FUNCTION (ALLELE A*74:01)</scope>
</reference>
<reference key="65">
    <citation type="journal article" date="2013" name="J. Proteome Res.">
        <title>Toward a comprehensive characterization of a human cancer cell phosphoproteome.</title>
        <authorList>
            <person name="Zhou H."/>
            <person name="Di Palma S."/>
            <person name="Preisinger C."/>
            <person name="Peng M."/>
            <person name="Polat A.N."/>
            <person name="Heck A.J."/>
            <person name="Mohammed S."/>
        </authorList>
    </citation>
    <scope>PHOSPHORYLATION [LARGE SCALE ANALYSIS] AT SER-356 AND SER-359</scope>
    <scope>IDENTIFICATION BY MASS SPECTROMETRY [LARGE SCALE ANALYSIS]</scope>
    <source>
        <tissue>Cervix carcinoma</tissue>
    </source>
</reference>
<reference key="66">
    <citation type="journal article" date="2013" name="Sci. Rep.">
        <title>Structure of TCR and antigen complexes at an immunodominant CTL epitope in HIV-1 infection.</title>
        <authorList>
            <person name="Shimizu A."/>
            <person name="Kawana-Tachikawa A."/>
            <person name="Yamagata A."/>
            <person name="Han C."/>
            <person name="Zhu D."/>
            <person name="Sato Y."/>
            <person name="Nakamura H."/>
            <person name="Koibuchi T."/>
            <person name="Carlson J."/>
            <person name="Martin E."/>
            <person name="Brumme C.J."/>
            <person name="Shi Y."/>
            <person name="Gao G.F."/>
            <person name="Brumme Z.L."/>
            <person name="Fukai S."/>
            <person name="Iwamoto A."/>
        </authorList>
    </citation>
    <scope>FUNCTION (ALLELE A*24:02)</scope>
</reference>
<reference key="67">
    <citation type="journal article" date="2014" name="J. Proteomics">
        <title>An enzyme assisted RP-RPLC approach for in-depth analysis of human liver phosphoproteome.</title>
        <authorList>
            <person name="Bian Y."/>
            <person name="Song C."/>
            <person name="Cheng K."/>
            <person name="Dong M."/>
            <person name="Wang F."/>
            <person name="Huang J."/>
            <person name="Sun D."/>
            <person name="Wang L."/>
            <person name="Ye M."/>
            <person name="Zou H."/>
        </authorList>
    </citation>
    <scope>PHOSPHORYLATION [LARGE SCALE ANALYSIS] AT SER-343; TYR-344; SER-349; SER-350; SER-352; SER-356 AND SER-359</scope>
    <scope>IDENTIFICATION BY MASS SPECTROMETRY [LARGE SCALE ANALYSIS]</scope>
    <source>
        <tissue>Liver</tissue>
    </source>
</reference>
<reference key="68">
    <citation type="journal article" date="2015" name="Proteomics">
        <title>N-terminome analysis of the human mitochondrial proteome.</title>
        <authorList>
            <person name="Vaca Jacome A.S."/>
            <person name="Rabilloud T."/>
            <person name="Schaeffer-Reiss C."/>
            <person name="Rompais M."/>
            <person name="Ayoub D."/>
            <person name="Lane L."/>
            <person name="Bairoch A."/>
            <person name="Van Dorsselaer A."/>
            <person name="Carapito C."/>
        </authorList>
    </citation>
    <scope>IDENTIFICATION BY MASS SPECTROMETRY [LARGE SCALE ANALYSIS]</scope>
</reference>
<reference key="69">
    <citation type="journal article" date="2015" name="Tissue Antigens">
        <title>A comprehensive analysis of peptides presented by HLA-A1.</title>
        <authorList>
            <person name="Giam K."/>
            <person name="Ayala-Perez R."/>
            <person name="Illing P.T."/>
            <person name="Schittenhelm R.B."/>
            <person name="Croft N.P."/>
            <person name="Purcell A.W."/>
            <person name="Dudek N.L."/>
        </authorList>
    </citation>
    <scope>FUNCTION (ALLELE A*01:01)</scope>
    <scope>SUBCELLULAR LOCATION</scope>
</reference>
<reference key="70">
    <citation type="journal article" date="2016" name="Proc. Natl. Acad. Sci. U.S.A.">
        <title>Interaction of TAPBPR, a tapasin homolog, with MHC-I molecules promotes peptide editing.</title>
        <authorList>
            <person name="Morozov G.I."/>
            <person name="Zhao H."/>
            <person name="Mage M.G."/>
            <person name="Boyd L.F."/>
            <person name="Jiang J."/>
            <person name="Dolan M.A."/>
            <person name="Venna R."/>
            <person name="Norcross M.A."/>
            <person name="McMurtrey C.P."/>
            <person name="Hildebrand W."/>
            <person name="Schuck P."/>
            <person name="Natarajan K."/>
            <person name="Margulies D.H."/>
        </authorList>
    </citation>
    <scope>INTERACTION WITH TAPBPL</scope>
</reference>
<reference key="71">
    <citation type="journal article" date="2016" name="Proc. Natl. Acad. Sci. U.S.A.">
        <title>Immunoproteasome deficiency is a feature of non-small cell lung cancer with a mesenchymal phenotype and is associated with a poor outcome.</title>
        <authorList>
            <person name="Tripathi S.C."/>
            <person name="Peters H.L."/>
            <person name="Taguchi A."/>
            <person name="Katayama H."/>
            <person name="Wang H."/>
            <person name="Momin A."/>
            <person name="Jolly M.K."/>
            <person name="Celiktas M."/>
            <person name="Rodriguez-Canales J."/>
            <person name="Liu H."/>
            <person name="Behrens C."/>
            <person name="Wistuba I.I."/>
            <person name="Ben-Jacob E."/>
            <person name="Levine H."/>
            <person name="Molldrem J.J."/>
            <person name="Hanash S.M."/>
            <person name="Ostrin E.J."/>
        </authorList>
    </citation>
    <scope>FUNCTION (ALLELE A*02:01)</scope>
</reference>
<reference key="72">
    <citation type="journal article" date="2016" name="Sci. Rep.">
        <title>Proteasomes generate spliced epitopes by two different mechanisms and as efficiently as non-spliced epitopes.</title>
        <authorList>
            <person name="Ebstein F."/>
            <person name="Textoris-Taube K."/>
            <person name="Keller C."/>
            <person name="Golnik R."/>
            <person name="Vigneron N."/>
            <person name="Van den Eynde B.J."/>
            <person name="Schuler-Thurner B."/>
            <person name="Schadendorf D."/>
            <person name="Lorenz F.K."/>
            <person name="Uckert W."/>
            <person name="Urban S."/>
            <person name="Lehmann A."/>
            <person name="Albrecht-Koepke N."/>
            <person name="Janek K."/>
            <person name="Henklein P."/>
            <person name="Niewienda A."/>
            <person name="Kloetzel P.M."/>
            <person name="Mishto M."/>
        </authorList>
    </citation>
    <scope>FUNCTION (ALLELE A*03:01)</scope>
</reference>
<reference key="73">
    <citation type="journal article" date="2019" name="J. Immunol.">
        <title>Measuring Antiviral Capacity of T Cell Responses to Adenovirus.</title>
        <authorList>
            <person name="Keib A."/>
            <person name="Mei Y.F."/>
            <person name="Cicin-Sain L."/>
            <person name="Busch D.H."/>
            <person name="Dennehy K.M."/>
        </authorList>
    </citation>
    <scope>FUNCTION (ALLELE A*01:01)</scope>
</reference>
<reference key="74">
    <citation type="journal article" date="2020" name="Nat. Immunol.">
        <title>Broad and strong memory CD4+ and CD8+ T cells induced by SARS-CoV-2 in UK convalescent individuals following COVID-19.</title>
        <authorList>
            <consortium name="Oxford Immunology Network Covid-19 Response T cell Consortium"/>
            <consortium name="ISARIC4C Investigators"/>
            <person name="Peng Y."/>
            <person name="Mentzer A.J."/>
            <person name="Liu G."/>
            <person name="Yao X."/>
            <person name="Yin Z."/>
            <person name="Dong D."/>
            <person name="Dejnirattisai W."/>
            <person name="Rostron T."/>
            <person name="Supasa P."/>
            <person name="Liu C."/>
            <person name="Lopez-Camacho C."/>
            <person name="Slon-Campos J."/>
            <person name="Zhao Y."/>
            <person name="Stuart D.I."/>
            <person name="Paesen G.C."/>
            <person name="Grimes J.M."/>
            <person name="Antson A.A."/>
            <person name="Bayfield O.W."/>
            <person name="Hawkins D.E.D.P."/>
            <person name="Ker D.S."/>
            <person name="Wang B."/>
            <person name="Turtle L."/>
            <person name="Subramaniam K."/>
            <person name="Thomson P."/>
            <person name="Zhang P."/>
            <person name="Dold C."/>
            <person name="Ratcliff J."/>
            <person name="Simmonds P."/>
            <person name="de Silva T."/>
            <person name="Sopp P."/>
            <person name="Wellington D."/>
            <person name="Rajapaksa U."/>
            <person name="Chen Y.L."/>
            <person name="Salio M."/>
            <person name="Napolitani G."/>
            <person name="Paes W."/>
            <person name="Borrow P."/>
            <person name="Kessler B.M."/>
            <person name="Fry J.W."/>
            <person name="Schwabe N.F."/>
            <person name="Semple M.G."/>
            <person name="Baillie J.K."/>
            <person name="Moore S.C."/>
            <person name="Openshaw P.J.M."/>
            <person name="Ansari M.A."/>
            <person name="Dunachie S."/>
            <person name="Barnes E."/>
            <person name="Frater J."/>
            <person name="Kerr G."/>
            <person name="Goulder P."/>
            <person name="Lockett T."/>
            <person name="Levin R."/>
            <person name="Zhang Y."/>
            <person name="Jing R."/>
            <person name="Ho L.P."/>
            <person name="Cornall R.J."/>
            <person name="Conlon C.P."/>
            <person name="Klenerman P."/>
            <person name="Screaton G.R."/>
            <person name="Mongkolsapaya J."/>
            <person name="McMichael A."/>
            <person name="Knight J.C."/>
            <person name="Ogg G."/>
            <person name="Dong T."/>
        </authorList>
    </citation>
    <scope>FUNCTION (ALLELES A*01:01; A*03:01 AND A*11:01)</scope>
</reference>
<reference key="75">
    <citation type="journal article" date="2022" name="Nat. Chem. Biol.">
        <title>TAPBPR employs a ligand-independent docking mechanism to chaperone MR1 molecules.</title>
        <authorList>
            <person name="McShan A.C."/>
            <person name="Devlin C.A."/>
            <person name="Papadaki G.F."/>
            <person name="Sun Y."/>
            <person name="Green A.I."/>
            <person name="Morozov G.I."/>
            <person name="Burslem G.M."/>
            <person name="Procko E."/>
            <person name="Sgourakis N.G."/>
        </authorList>
    </citation>
    <scope>INTERACTION WITH TAPBPL</scope>
</reference>
<reference key="76">
    <citation type="journal article" date="2023" name="Nat. Immunol.">
        <title>HLA class I signal peptide polymorphism determines the level of CD94/NKG2-HLA-E-mediated regulation of effector cell responses.</title>
        <authorList>
            <person name="Lin Z."/>
            <person name="Bashirova A.A."/>
            <person name="Viard M."/>
            <person name="Garner L."/>
            <person name="Quastel M."/>
            <person name="Beiersdorfer M."/>
            <person name="Kasprzak W.K."/>
            <person name="Akdag M."/>
            <person name="Yuki Y."/>
            <person name="Ojeda P."/>
            <person name="Das S."/>
            <person name="Andresson T."/>
            <person name="Naranbhai V."/>
            <person name="Horowitz A."/>
            <person name="McMichael A.J."/>
            <person name="Hoelzemer A."/>
            <person name="Gillespie G.M."/>
            <person name="Garcia-Beltran W.F."/>
            <person name="Carrington M."/>
        </authorList>
    </citation>
    <scope>DOMAIN</scope>
    <scope>CHARACTERIZATION OF VARIANTS PRO-5; VAL-10 AND LEU-14</scope>
    <scope>POLYMORPHISM</scope>
</reference>
<reference key="77">
    <citation type="journal article" date="1992" name="Nature">
        <title>Different length peptides bind to HLA-Aw68 similarly at their ends but bulge out in the middle.</title>
        <authorList>
            <person name="Guo H.-C."/>
            <person name="Jardetzky T.S."/>
            <person name="Garrett T.P.J."/>
            <person name="Lane W.S."/>
            <person name="Strominger J.L."/>
            <person name="Wiley D.C."/>
        </authorList>
    </citation>
    <scope>X-RAY CRYSTALLOGRAPHY (1.9 ANGSTROMS) OF 25-294 (ALLELE A*68:01)</scope>
    <scope>FUNCTION (ALLELE A*68:01)</scope>
</reference>
<reference key="78">
    <citation type="journal article" date="1992" name="Nature">
        <title>Atomic structure of a human MHC molecule presenting an influenza virus peptide.</title>
        <authorList>
            <person name="Silver M.L."/>
            <person name="Guo H.-C."/>
            <person name="Strominger J.L."/>
            <person name="Wiley D.C."/>
        </authorList>
    </citation>
    <scope>X-RAY CRYSTALLOGRAPHY (1.9 ANGSTROMS) OF 25-294 (ALLELE A*68:01)</scope>
    <scope>FUNCTION (ALLELE A*68:01)</scope>
</reference>
<reference key="79">
    <citation type="journal article" date="1993" name="Cell">
        <title>The antigenic identity of peptide-MHC complexes: a comparison of the conformations of five viral peptides presented by HLA-A2.</title>
        <authorList>
            <person name="Madden D.R."/>
            <person name="Garboczi D.N."/>
            <person name="Wiley D.C."/>
        </authorList>
    </citation>
    <scope>X-RAY CRYSTALLOGRAPHY (2.50 ANGSTROMS) OF 25-299 (ALLELE A*02:01) IN COMPLEX WITH B2M AND PEPTIDE</scope>
    <scope>FUNCTION (ALLELE A*02:01)</scope>
    <scope>DISULFIDE BOND</scope>
    <scope>DOMAIN</scope>
</reference>
<reference key="80">
    <citation type="journal article" date="1994" name="Nature">
        <title>Three-dimensional structure of a peptide extending from one end of a class I MHC binding site.</title>
        <authorList>
            <person name="Collins E.J."/>
            <person name="Garboczi D.N."/>
            <person name="Wiley D.C."/>
        </authorList>
    </citation>
    <scope>X-RAY CRYSTALLOGRAPHY (2.00 ANGSTROMS) OF 25-299 (ALLELE A*02:01) IN COMPLEX WITH B2M AND PEPTIDE</scope>
    <scope>FUNCTION (ALLELE A*02:01)</scope>
</reference>
<reference key="81">
    <citation type="journal article" date="1996" name="Nature">
        <title>Structure of the complex between human T-cell receptor, viral peptide and HLA-A2.</title>
        <authorList>
            <person name="Garboczi D.N."/>
            <person name="Ghosh P."/>
            <person name="Utz U."/>
            <person name="Fan Q.R."/>
            <person name="Biddison W.E."/>
            <person name="Wiley D.C."/>
        </authorList>
    </citation>
    <scope>X-RAY CRYSTALLOGRAPHY (2.60 ANGSTROMS) OF 25-299 (ALLELE A*02:01) IN COMPLEX WITH B2M AND PEPTIDE</scope>
    <scope>FUNCTION (ALLELE A*02:01)</scope>
    <scope>DOMAIN</scope>
</reference>
<reference key="82">
    <citation type="journal article" date="1997" name="Nature">
        <title>Crystal structure of the complex between human CD8alpha(alpha) and HLA-A2.</title>
        <authorList>
            <person name="Gao G.F."/>
            <person name="Tormo J."/>
            <person name="Gerth U.C."/>
            <person name="Wyer J.R."/>
            <person name="McMichael A.J."/>
            <person name="Stuart D.I."/>
            <person name="Bell J.I."/>
            <person name="Jones E.Y."/>
            <person name="Jakobsen B.K."/>
        </authorList>
    </citation>
    <scope>X-RAY CRYSTALLOGRAPHY (2.65 ANGSTROMS) OF 25-300 (ALLELE A*02:01) IN COMPLEX WITH B2M AND PEPTIDE</scope>
    <scope>INTERACTION WITH CD8A</scope>
    <scope>FUNCTION (ALLELE A*02:01)</scope>
</reference>
<reference key="83">
    <citation type="journal article" date="2001" name="J. Mol. Biol.">
        <title>High-resolution structure of HLA-A*0201 in complex with a tumour-specific antigenic peptide encoded by the MAGE-A4 gene.</title>
        <authorList>
            <person name="Hillig R.C."/>
            <person name="Coulie P.G."/>
            <person name="Stroobant V."/>
            <person name="Saenger W."/>
            <person name="Ziegler A."/>
            <person name="Hulsmeyer M."/>
        </authorList>
    </citation>
    <scope>X-RAY CRYSTALLOGRAPHY (1.40 ANGSTROMS) OF 25-299 (ALLELE A*02:01) IN COMPLEX WITH B2M AND PEPTIDE</scope>
    <scope>FUNCTION (ALLELE A*02:01)</scope>
</reference>
<reference key="84">
    <citation type="journal article" date="2003" name="Nat. Immunol.">
        <title>A structural basis for immunodominant human T cell receptor recognition.</title>
        <authorList>
            <person name="Stewart-Jones G.B.E."/>
            <person name="McMichael A.J."/>
            <person name="Bell J.I."/>
            <person name="Stuart D.I."/>
            <person name="Jones E.Y."/>
        </authorList>
    </citation>
    <scope>X-RAY CRYSTALLOGRAPHY (1.40 ANGSTROMS) OF 25-300 (ALLELE A*02:01) IN COMPLEX WITH B2M AND PEPTIDE</scope>
    <scope>INTERACTION WITH TCR</scope>
    <scope>FUNCTION (ALLELE A*02:01)</scope>
</reference>
<reference key="85">
    <citation type="journal article" date="2005" name="Acta Crystallogr. D">
        <title>High-resolution structure of HLA-A*1101 in complex with SARS nucleocapsid peptide.</title>
        <authorList>
            <person name="Blicher T."/>
            <person name="Kastrup J.S."/>
            <person name="Buus S."/>
            <person name="Gajhede M."/>
        </authorList>
    </citation>
    <scope>X-RAY CRYSTALLOGRAPHY (1.45 ANGSTROMS) OF 25-299 (ALLELE A*11:01) IN COMPLEX WITH SARS NUCLEOCAPSID PEPTIDE</scope>
    <scope>DISULFIDE BONDS</scope>
</reference>
<reference key="86">
    <citation type="journal article" date="2008" name="Immunity">
        <title>The structural dynamics and energetics of an immunodominant T cell receptor are programmed by its Vbeta domain.</title>
        <authorList>
            <person name="Ishizuka J."/>
            <person name="Stewart-Jones G.B."/>
            <person name="van der Merwe A."/>
            <person name="Bell J.I."/>
            <person name="McMichael A.J."/>
            <person name="Jones E.Y."/>
        </authorList>
    </citation>
    <scope>X-RAY CRYSTALLOGRAPHY (1.60 ANGSTROMS) OF 25-300 (ALLELE A*02:01) IN COMPLEX WITH B2M AND PEPTIDE</scope>
    <scope>INTERACTION WITH TCR</scope>
    <scope>FUNCTION (ALLELE A*02:01)</scope>
</reference>
<reference key="87">
    <citation type="journal article" date="2009" name="J. Immunol.">
        <title>Structural bases for the affinity-driven selection of a public TCR against a dominant human cytomegalovirus epitope.</title>
        <authorList>
            <person name="Gras S."/>
            <person name="Saulquin X."/>
            <person name="Reiser J.B."/>
            <person name="Debeaupuis E."/>
            <person name="Echasserieau K."/>
            <person name="Kissenpfennig A."/>
            <person name="Legoux F."/>
            <person name="Chouquet A."/>
            <person name="Le Gorrec M."/>
            <person name="Machillot P."/>
            <person name="Neveu B."/>
            <person name="Thielens N."/>
            <person name="Malissen B."/>
            <person name="Bonneville M."/>
            <person name="Housset D."/>
        </authorList>
    </citation>
    <scope>X-RAY CRYSTALLOGRAPHY (1.60 ANGSTROMS) OF 25-298 (ALLELE A*02:01) IN COMPLEX WITH B2M AND PEPTIDE</scope>
    <scope>FUNCTION (ALLELE A*02:01)</scope>
    <scope>DOMAIN</scope>
</reference>
<reference key="88">
    <citation type="journal article" date="2009" name="Protein Sci.">
        <title>Conformational changes within the HLA-A1:MAGE-A1 complex induced by binding of a recombinant antibody fragment with TCR-like specificity.</title>
        <authorList>
            <person name="Kumar P."/>
            <person name="Vahedi-Faridi A."/>
            <person name="Saenger W."/>
            <person name="Ziegler A."/>
            <person name="Uchanska-Ziegler B."/>
        </authorList>
    </citation>
    <scope>X-RAY CRYSTALLOGRAPHY (1.80 ANGSTROMS) OF 25-298 (ALLELE A*01:01) IN COMPLEX WITH B2M AND PEPTIDE</scope>
    <scope>FUNCTION (ALLELE A*01:01)</scope>
    <scope>DOMAIN</scope>
    <scope>DISULFIDE BOND</scope>
</reference>
<reference key="89">
    <citation type="journal article" date="2010" name="J. Virol.">
        <title>Novel immunodominant peptide presentation strategy: a featured HLA-A*2402-restricted cytotoxic T-lymphocyte epitope stabilized by intrachain hydrogen bonds from severe acute respiratory syndrome coronavirus nucleocapsid protein.</title>
        <authorList>
            <person name="Liu J."/>
            <person name="Wu P."/>
            <person name="Gao F."/>
            <person name="Qi J."/>
            <person name="Kawana-Tachikawa A."/>
            <person name="Xie J."/>
            <person name="Vavricka C.J."/>
            <person name="Iwamoto A."/>
            <person name="Li T."/>
            <person name="Gao G.F."/>
        </authorList>
    </citation>
    <scope>X-RAY CRYSTALLOGRAPHY (2.4 ANGSTROMS) OF 25-298 (ALLELE A*24:02) IN COMPLEX WITH B2M AND WITH SARS NUCLEOCAPSID PEPTIDE</scope>
    <scope>DISULFIDE BONDS</scope>
    <scope>FUNCTION (ALLELE A*24:02)</scope>
    <scope>DOMAIN</scope>
</reference>
<reference key="90">
    <citation type="journal article" date="2010" name="Mol. Immunol.">
        <title>Structures of native and affinity-enhanced WT1 epitopes bound to HLA-A*0201: implications for WT1-based cancer therapeutics.</title>
        <authorList>
            <person name="Borbulevych O.Y."/>
            <person name="Do P."/>
            <person name="Baker B.M."/>
        </authorList>
    </citation>
    <scope>X-RAY CRYSTALLOGRAPHY (1.89 ANGSTROMS) OF 25-299 (ALLELE A*02:01) IN COMPLEX WITH B2M AND PEPTIDE</scope>
    <scope>FUNCTION (ALLELE A*02:01)</scope>
    <scope>DOMAIN</scope>
</reference>
<reference key="91">
    <citation type="journal article" date="2011" name="Acta Crystallogr. D">
        <title>Structure of HLA-A*0301 in complex with a peptide of proteolipid protein: insights into the role of HLA-A alleles in susceptibility to multiple sclerosis.</title>
        <authorList>
            <person name="McMahon R.M."/>
            <person name="Friis L."/>
            <person name="Siebold C."/>
            <person name="Friese M.A."/>
            <person name="Fugger L."/>
            <person name="Jones E.Y."/>
        </authorList>
    </citation>
    <scope>X-RAY CRYSTALLOGRAPHY (2.6 ANGSTROMS) OF 25-298 (ALLELE A*03:01) IN COMPLEX WITH B2M AND PLP1 ANTIGENIC PEPTIDE</scope>
    <scope>DISULFIDE BONDS</scope>
    <scope>DOMAIN</scope>
</reference>
<reference key="92">
    <citation type="journal article" date="2011" name="Mol. Immunol.">
        <title>Structural basis of cross-allele presentation by HLA-A*0301 and HLA-A*1101 revealed by two HIV-derived peptide complexes.</title>
        <authorList>
            <person name="Zhang S."/>
            <person name="Liu J."/>
            <person name="Cheng H."/>
            <person name="Tan S."/>
            <person name="Qi J."/>
            <person name="Yan J."/>
            <person name="Gao G.F."/>
        </authorList>
    </citation>
    <scope>X-RAY CRYSTALLOGRAPHY (2.00 ANGSTROMS) OF 25-298 (ALLELE A*03:01) IN COMPLEX WITH B2M AND PEPTIDE</scope>
    <scope>DISULFIDE BOND</scope>
    <scope>DOMAIN</scope>
    <scope>FUNCTION (ALLELE A*03:01)</scope>
</reference>
<reference key="93">
    <citation type="journal article" date="2012" name="Nat. Immunol.">
        <title>Structural basis for the killing of human beta cells by CD8(+) T cells in type 1 diabetes.</title>
        <authorList>
            <person name="Bulek A.M."/>
            <person name="Cole D.K."/>
            <person name="Skowera A."/>
            <person name="Dolton G."/>
            <person name="Gras S."/>
            <person name="Madura F."/>
            <person name="Fuller A."/>
            <person name="Miles J.J."/>
            <person name="Gostick E."/>
            <person name="Price D.A."/>
            <person name="Drijfhout J.W."/>
            <person name="Knight R.R."/>
            <person name="Huang G.C."/>
            <person name="Lissin N."/>
            <person name="Molloy P.E."/>
            <person name="Wooldridge L."/>
            <person name="Jakobsen B.K."/>
            <person name="Rossjohn J."/>
            <person name="Peakman M."/>
            <person name="Rizkallah P.J."/>
            <person name="Sewell A.K."/>
        </authorList>
    </citation>
    <scope>X-RAY CRYSTALLOGRAPHY (1.67 ANGSTROMS) OF 25-300 (ALLELE A*02:01) IN COMPLEX WITH B2M AND PEPTIDE</scope>
    <scope>INTERACTION WITH TCR</scope>
    <scope>FUNCTION (ALLELE A*02:01)</scope>
    <scope>DOMAIN</scope>
    <scope>INDUCTION BY CYTOKINES</scope>
    <scope>INVOLVEMENT IN IDDM (ALLELE A*02:01)</scope>
</reference>
<reference key="94">
    <citation type="journal article" date="2014" name="Proc. Natl. Acad. Sci. U.S.A.">
        <title>Preexisting CD8+ T-cell immunity to the H7N9 influenza A virus varies across ethnicities.</title>
        <authorList>
            <person name="Quinones-Parra S."/>
            <person name="Grant E."/>
            <person name="Loh L."/>
            <person name="Nguyen T.H."/>
            <person name="Campbell K.A."/>
            <person name="Tong S.Y."/>
            <person name="Miller A."/>
            <person name="Doherty P.C."/>
            <person name="Vijaykrishna D."/>
            <person name="Rossjohn J."/>
            <person name="Gras S."/>
            <person name="Kedzierska K."/>
        </authorList>
    </citation>
    <scope>X-RAY CRYSTALLOGRAPHY (2.00 ANGSTROMS) OF 25-308 (ALLELE A*01:01) IN COMPLEX WITH B2M AND PEPTIDE</scope>
    <scope>FUNCTION (ALLELE A*01:01)</scope>
    <scope>DOMAIN</scope>
</reference>
<reference key="95">
    <citation type="journal article" date="2016" name="Sci. Rep.">
        <title>Direct molecular mimicry enables off-target cardiovascular toxicity by an enhanced affinity TCR designed for cancer immunotherapy.</title>
        <authorList>
            <person name="Raman M.C."/>
            <person name="Rizkallah P.J."/>
            <person name="Simmons R."/>
            <person name="Donnellan Z."/>
            <person name="Dukes J."/>
            <person name="Bossi G."/>
            <person name="Le Provost G.S."/>
            <person name="Todorov P."/>
            <person name="Baston E."/>
            <person name="Hickman E."/>
            <person name="Mahon T."/>
            <person name="Hassan N."/>
            <person name="Vuidepot A."/>
            <person name="Sami M."/>
            <person name="Cole D.K."/>
            <person name="Jakobsen B.K."/>
        </authorList>
    </citation>
    <scope>X-RAY CRYSTALLOGRAPHY (2.40 ANGSTROMS) OF 25-298 (ALLELE A*01:01) IN COMPLEX WITH B2M AND PEPTIDE</scope>
    <scope>FUNCTION (ALLELE A*01:01)</scope>
    <scope>DOMAIN</scope>
    <scope>DISULFIDE BOND</scope>
</reference>
<reference key="96">
    <citation type="journal article" date="2017" name="Nat. Struct. Mol. Biol.">
        <title>Broad TCR repertoire and diverse structural solutions for recognition of an immunodominant CD8+ T cell epitope.</title>
        <authorList>
            <person name="Song I."/>
            <person name="Gil A."/>
            <person name="Mishra R."/>
            <person name="Ghersi D."/>
            <person name="Selin L.K."/>
            <person name="Stern L.J."/>
        </authorList>
    </citation>
    <scope>X-RAY CRYSTALLOGRAPHY (2.06 ANGSTROMS) OF 25-299 (ALLELE A*02:01) IN COMPLEX WITH B2M AND PEPTIDE</scope>
    <scope>FUNCTION (ALLELE A*02:01)</scope>
    <scope>DOMAIN</scope>
    <scope>DISULFIDE BOND</scope>
</reference>
<reference key="97">
    <citation type="journal article" date="1992" name="Am. J. Ophthalmol.">
        <title>HLA-A29.2 subtype associated with birdshot retinochoroidopathy.</title>
        <authorList>
            <person name="LeHoang P."/>
            <person name="Ozdemir N."/>
            <person name="Benhamou A."/>
            <person name="Tabary T."/>
            <person name="Edelson C."/>
            <person name="Betuel H."/>
            <person name="Semiglia R."/>
            <person name="Cohen J.H."/>
        </authorList>
    </citation>
    <scope>ASSOCIATION OF ALLELE A*29:02 WITH BIRDSHOT CHORIORETINOPATHY</scope>
</reference>
<reference key="98">
    <citation type="journal article" date="2000" name="Tissue Antigens">
        <title>Multiple sclerosis: a modifying influence of HLA class I genes in an HLA class II associated autoimmune disease.</title>
        <authorList>
            <person name="Fogdell-Hahn A."/>
            <person name="Ligers A."/>
            <person name="Groenning M."/>
            <person name="Hillert J."/>
            <person name="Olerup O."/>
        </authorList>
    </citation>
    <scope>ASSOCIATION OF ALLELE A*03:01 WITH MULTIPLE SCLEROSIS</scope>
</reference>
<reference key="99">
    <citation type="journal article" date="2006" name="Diabetes">
        <title>Combination of HLA-A24, -DQA1*03, and -DR9 contributes to acute-onset and early complete beta-cell destruction in type 1 diabetes: longitudinal study of residual beta-cell function.</title>
        <authorList>
            <person name="Nakanishi K."/>
            <person name="Inoko H."/>
        </authorList>
    </citation>
    <scope>ASSOCIATION OF ALLELE A*24:02 WITH IDDM</scope>
</reference>
<reference key="100">
    <citation type="journal article" date="2008" name="J. Clin. Invest.">
        <title>CTLs are targeted to kill beta cells in patients with type 1 diabetes through recognition of a glucose-regulated preproinsulin epitope.</title>
        <authorList>
            <person name="Skowera A."/>
            <person name="Ellis R.J."/>
            <person name="Varela-Calvino R."/>
            <person name="Arif S."/>
            <person name="Huang G.C."/>
            <person name="Van-Krinks C."/>
            <person name="Zaremba A."/>
            <person name="Rackham C."/>
            <person name="Allen J.S."/>
            <person name="Tree T.I."/>
            <person name="Zhao M."/>
            <person name="Dayan C.M."/>
            <person name="Sewell A.K."/>
            <person name="Unger W.W."/>
            <person name="Unger W."/>
            <person name="Drijfhout J.W."/>
            <person name="Ossendorp F."/>
            <person name="Roep B.O."/>
            <person name="Peakman M."/>
        </authorList>
    </citation>
    <scope>ASSOCIATION OF ALLELE A*02:01 WITH IDDM</scope>
</reference>
<reference key="101">
    <citation type="journal article" date="2008" name="Nat. Med.">
        <title>Opposing effects of HLA class I molecules in tuning autoreactive CD8+ T cells in multiple sclerosis.</title>
        <authorList>
            <person name="Friese M.A."/>
            <person name="Jakobsen K.B."/>
            <person name="Friis L."/>
            <person name="Etzensperger R."/>
            <person name="Craner M.J."/>
            <person name="McMahon R.M."/>
            <person name="Jensen L.T."/>
            <person name="Huygelen V."/>
            <person name="Jones E.Y."/>
            <person name="Bell J.I."/>
            <person name="Fugger L."/>
        </authorList>
    </citation>
    <scope>ASSOCIATION OF ALLELE A*03:01 WITH MULTIPLE SCLEROSIS</scope>
</reference>
<reference key="102">
    <citation type="journal article" date="2012" name="Diabetes">
        <title>Circulating preproinsulin signal peptide-specific CD8 T cells restricted by the susceptibility molecule HLA-A24 are expanded at onset of type 1 diabetes and kill beta-cells.</title>
        <authorList>
            <person name="Kronenberg D."/>
            <person name="Knight R.R."/>
            <person name="Estorninho M."/>
            <person name="Ellis R.J."/>
            <person name="Kester M.G."/>
            <person name="de Ru A."/>
            <person name="Eichmann M."/>
            <person name="Huang G.C."/>
            <person name="Powrie J."/>
            <person name="Dayan C.M."/>
            <person name="Skowera A."/>
            <person name="van Veelen P.A."/>
            <person name="Peakman M."/>
        </authorList>
    </citation>
    <scope>ASSOCIATION OF ALLELE A*24:02 WITH IDDM</scope>
</reference>
<reference key="103">
    <citation type="journal article" date="2011" name="N. Engl. J. Med.">
        <title>HLA-A*3101 and carbamazepine-induced hypersensitivity reactions in Europeans.</title>
        <authorList>
            <person name="McCormack M."/>
            <person name="Alfirevic A."/>
            <person name="Bourgeois S."/>
            <person name="Farrell J.J."/>
            <person name="Kasperaviciute D."/>
            <person name="Carrington M."/>
            <person name="Sills G.J."/>
            <person name="Marson T."/>
            <person name="Jia X."/>
            <person name="de Bakker P.I."/>
            <person name="Chinthapalli K."/>
            <person name="Molokhia M."/>
            <person name="Johnson M.R."/>
            <person name="O'Connor G.D."/>
            <person name="Chaila E."/>
            <person name="Alhusaini S."/>
            <person name="Shianna K.V."/>
            <person name="Radtke R.A."/>
            <person name="Heinzen E.L."/>
            <person name="Walley N."/>
            <person name="Pandolfo M."/>
            <person name="Pichler W."/>
            <person name="Park B.K."/>
            <person name="Depondt C."/>
            <person name="Sisodiya S.M."/>
            <person name="Goldstein D.B."/>
            <person name="Deloukas P."/>
            <person name="Delanty N."/>
            <person name="Cavalleri G.L."/>
            <person name="Pirmohamed M."/>
        </authorList>
    </citation>
    <scope>ASSOCIATION OF ALLELE A*31:01 WITH CARBAMAZEPINE-INDUCED HYPERSENSITIVITY REACTIONS</scope>
</reference>
<reference key="104">
    <citation type="journal article" date="2019" name="Sci. Rep.">
        <title>The association analysis between HLA-A*26 and Behcet's disease.</title>
        <authorList>
            <person name="Nakamura J."/>
            <person name="Meguro A."/>
            <person name="Ishii G."/>
            <person name="Mihara T."/>
            <person name="Takeuchi M."/>
            <person name="Mizuki Y."/>
            <person name="Yuda K."/>
            <person name="Yamane T."/>
            <person name="Kawagoe T."/>
            <person name="Ota M."/>
            <person name="Mizuki N."/>
        </authorList>
    </citation>
    <scope>ASSOCIATION OF ALLELE A*26:01 WITH BEHCET DISEASE</scope>
</reference>
<reference key="105">
    <citation type="journal article" date="2017" name="PLoS Genet.">
        <title>Distinguishing functional polymorphism from random variation in the sequences of &gt;10,000 HLA-A, -B and -C alleles.</title>
        <authorList>
            <person name="Robinson J."/>
            <person name="Guethlein L.A."/>
            <person name="Cereb N."/>
            <person name="Yang S.Y."/>
            <person name="Norman P.J."/>
            <person name="Marsh S.G.E."/>
            <person name="Parham P."/>
        </authorList>
    </citation>
    <scope>POLYMORPHISM</scope>
</reference>
<keyword id="KW-0002">3D-structure</keyword>
<keyword id="KW-1064">Adaptive immunity</keyword>
<keyword id="KW-0025">Alternative splicing</keyword>
<keyword id="KW-1003">Cell membrane</keyword>
<keyword id="KW-0903">Direct protein sequencing</keyword>
<keyword id="KW-1015">Disulfide bond</keyword>
<keyword id="KW-0256">Endoplasmic reticulum</keyword>
<keyword id="KW-0325">Glycoprotein</keyword>
<keyword id="KW-0945">Host-virus interaction</keyword>
<keyword id="KW-0391">Immunity</keyword>
<keyword id="KW-0393">Immunoglobulin domain</keyword>
<keyword id="KW-0399">Innate immunity</keyword>
<keyword id="KW-0472">Membrane</keyword>
<keyword id="KW-0490">MHC I</keyword>
<keyword id="KW-0597">Phosphoprotein</keyword>
<keyword id="KW-1267">Proteomics identification</keyword>
<keyword id="KW-1185">Reference proteome</keyword>
<keyword id="KW-0732">Signal</keyword>
<keyword id="KW-0765">Sulfation</keyword>
<keyword id="KW-0812">Transmembrane</keyword>
<keyword id="KW-1133">Transmembrane helix</keyword>
<keyword id="KW-0832">Ubl conjugation</keyword>
<protein>
    <recommendedName>
        <fullName>HLA class I histocompatibility antigen, A alpha chain</fullName>
    </recommendedName>
    <alternativeName>
        <fullName>Human leukocyte antigen A</fullName>
        <shortName>HLA-A</shortName>
    </alternativeName>
</protein>
<dbReference type="EMBL" id="U03862">
    <property type="protein sequence ID" value="AAA03603.1"/>
    <property type="molecule type" value="mRNA"/>
</dbReference>
<dbReference type="EMBL" id="X13111">
    <property type="protein sequence ID" value="CAA31503.1"/>
    <property type="molecule type" value="mRNA"/>
</dbReference>
<dbReference type="EMBL" id="M23739">
    <property type="protein sequence ID" value="AAB47873.1"/>
    <property type="molecule type" value="mRNA"/>
</dbReference>
<dbReference type="EMBL" id="U83415">
    <property type="protein sequence ID" value="AAB53373.1"/>
    <property type="molecule type" value="mRNA"/>
</dbReference>
<dbReference type="EMBL" id="U83416">
    <property type="protein sequence ID" value="AAB53374.1"/>
    <property type="molecule type" value="mRNA"/>
</dbReference>
<dbReference type="EMBL" id="M30576">
    <property type="protein sequence ID" value="AAA59612.1"/>
    <property type="molecule type" value="Genomic_DNA"/>
</dbReference>
<dbReference type="EMBL" id="M30580">
    <property type="protein sequence ID" value="AAB47870.1"/>
    <property type="molecule type" value="Genomic_DNA"/>
</dbReference>
<dbReference type="EMBL" id="M24043">
    <property type="protein sequence ID" value="AAA59652.1"/>
    <property type="molecule type" value="Genomic_DNA"/>
</dbReference>
<dbReference type="EMBL" id="M84379">
    <property type="protein sequence ID" value="AAA59606.1"/>
    <property type="molecule type" value="mRNA"/>
</dbReference>
<dbReference type="EMBL" id="M32321">
    <property type="protein sequence ID" value="AAA36234.1"/>
    <property type="molecule type" value="mRNA"/>
</dbReference>
<dbReference type="EMBL" id="X60108">
    <property type="protein sequence ID" value="CAA42702.1"/>
    <property type="molecule type" value="mRNA"/>
</dbReference>
<dbReference type="EMBL" id="M64740">
    <property type="protein sequence ID" value="AAA59600.1"/>
    <property type="molecule type" value="mRNA"/>
</dbReference>
<dbReference type="EMBL" id="M64742">
    <property type="protein sequence ID" value="AAA03662.1"/>
    <property type="molecule type" value="mRNA"/>
</dbReference>
<dbReference type="EMBL" id="X61700">
    <property type="protein sequence ID" value="CAA43869.1"/>
    <property type="molecule type" value="mRNA"/>
</dbReference>
<dbReference type="EMBL" id="X61701">
    <property type="protein sequence ID" value="CAA43870.1"/>
    <property type="molecule type" value="mRNA"/>
</dbReference>
<dbReference type="EMBL" id="X61703">
    <property type="protein sequence ID" value="CAA43872.1"/>
    <property type="molecule type" value="mRNA"/>
</dbReference>
<dbReference type="EMBL" id="X61704">
    <property type="protein sequence ID" value="CAA43873.1"/>
    <property type="molecule type" value="mRNA"/>
</dbReference>
<dbReference type="EMBL" id="X61711">
    <property type="protein sequence ID" value="CAA43880.1"/>
    <property type="molecule type" value="mRNA"/>
</dbReference>
<dbReference type="EMBL" id="M84375">
    <property type="protein sequence ID" value="AAA59599.1"/>
    <property type="molecule type" value="mRNA"/>
</dbReference>
<dbReference type="EMBL" id="U03697">
    <property type="protein sequence ID" value="AAA03720.1"/>
    <property type="molecule type" value="mRNA"/>
</dbReference>
<dbReference type="EMBL" id="L18898">
    <property type="protein sequence ID" value="AAA17012.1"/>
    <property type="molecule type" value="mRNA"/>
</dbReference>
<dbReference type="EMBL" id="D14350">
    <property type="protein sequence ID" value="BAA03279.1"/>
    <property type="molecule type" value="mRNA"/>
</dbReference>
<dbReference type="EMBL" id="U03754">
    <property type="protein sequence ID" value="AAC04322.1"/>
    <property type="molecule type" value="mRNA"/>
</dbReference>
<dbReference type="EMBL" id="D16841">
    <property type="protein sequence ID" value="BAA04117.1"/>
    <property type="molecule type" value="mRNA"/>
</dbReference>
<dbReference type="EMBL" id="U07234">
    <property type="protein sequence ID" value="AAA70162.1"/>
    <property type="molecule type" value="mRNA"/>
</dbReference>
<dbReference type="EMBL" id="AY786587">
    <property type="protein sequence ID" value="AAV53345.1"/>
    <property type="molecule type" value="mRNA"/>
</dbReference>
<dbReference type="EMBL" id="X00492">
    <property type="protein sequence ID" value="CAA25162.1"/>
    <property type="status" value="ALT_SEQ"/>
    <property type="molecule type" value="Genomic_DNA"/>
</dbReference>
<dbReference type="EMBL" id="X03070">
    <property type="protein sequence ID" value="CAB56605.1"/>
    <property type="molecule type" value="Genomic_DNA"/>
</dbReference>
<dbReference type="EMBL" id="X03071">
    <property type="protein sequence ID" value="CAB56606.1"/>
    <property type="molecule type" value="Genomic_DNA"/>
</dbReference>
<dbReference type="EMBL" id="X03158">
    <property type="protein sequence ID" value="CAB56607.1"/>
    <property type="molecule type" value="Genomic_DNA"/>
</dbReference>
<dbReference type="EMBL" id="X03159">
    <property type="protein sequence ID" value="CAB56608.1"/>
    <property type="molecule type" value="Genomic_DNA"/>
</dbReference>
<dbReference type="EMBL" id="K02883">
    <property type="protein sequence ID" value="AAA98727.1"/>
    <property type="molecule type" value="Genomic_DNA"/>
</dbReference>
<dbReference type="EMBL" id="AH003070">
    <property type="protein sequence ID" value="AAA65449.1"/>
    <property type="molecule type" value="Genomic_DNA"/>
</dbReference>
<dbReference type="EMBL" id="X55710">
    <property type="protein sequence ID" value="CAA39243.1"/>
    <property type="molecule type" value="Genomic_DNA"/>
</dbReference>
<dbReference type="EMBL" id="U02935">
    <property type="protein sequence ID" value="AAA76608.2"/>
    <property type="molecule type" value="Genomic_DNA"/>
</dbReference>
<dbReference type="EMBL" id="L78918">
    <property type="protein sequence ID" value="AAB05976.1"/>
    <property type="molecule type" value="Genomic_DNA"/>
</dbReference>
<dbReference type="EMBL" id="Z72422">
    <property type="protein sequence ID" value="CAA96532.1"/>
    <property type="molecule type" value="Genomic_DNA"/>
</dbReference>
<dbReference type="EMBL" id="Z93949">
    <property type="protein sequence ID" value="CAB07989.1"/>
    <property type="molecule type" value="Genomic_DNA"/>
</dbReference>
<dbReference type="EMBL" id="EU445484">
    <property type="protein sequence ID" value="ACA35004.1"/>
    <property type="molecule type" value="Genomic_DNA"/>
</dbReference>
<dbReference type="EMBL" id="U03907">
    <property type="protein sequence ID" value="AAA03605.1"/>
    <property type="molecule type" value="mRNA"/>
</dbReference>
<dbReference type="EMBL" id="U17569">
    <property type="protein sequence ID" value="AAA56779.1"/>
    <property type="molecule type" value="mRNA"/>
</dbReference>
<dbReference type="EMBL" id="U17570">
    <property type="protein sequence ID" value="AAA56780.1"/>
    <property type="molecule type" value="mRNA"/>
</dbReference>
<dbReference type="EMBL" id="U32184">
    <property type="protein sequence ID" value="AAB63980.1"/>
    <property type="molecule type" value="mRNA"/>
</dbReference>
<dbReference type="EMBL" id="AJ748743">
    <property type="protein sequence ID" value="CAG38621.1"/>
    <property type="molecule type" value="Genomic_DNA"/>
</dbReference>
<dbReference type="EMBL" id="BC003069">
    <property type="protein sequence ID" value="AAH03069.1"/>
    <property type="molecule type" value="mRNA"/>
</dbReference>
<dbReference type="EMBL" id="BC008611">
    <property type="protein sequence ID" value="AAH08611.1"/>
    <property type="molecule type" value="mRNA"/>
</dbReference>
<dbReference type="EMBL" id="AL671277">
    <property type="status" value="NOT_ANNOTATED_CDS"/>
    <property type="molecule type" value="Genomic_DNA"/>
</dbReference>
<dbReference type="CCDS" id="CCDS34373.1">
    <molecule id="P04439-1"/>
</dbReference>
<dbReference type="RefSeq" id="NP_001229687.1">
    <property type="nucleotide sequence ID" value="NM_001242758.1"/>
</dbReference>
<dbReference type="RefSeq" id="NP_002107.3">
    <molecule id="P04439-1"/>
    <property type="nucleotide sequence ID" value="NM_002116.7"/>
</dbReference>
<dbReference type="PDB" id="1AKJ">
    <property type="method" value="X-ray"/>
    <property type="resolution" value="2.65 A"/>
    <property type="chains" value="A=25-300"/>
</dbReference>
<dbReference type="PDB" id="1AO7">
    <property type="method" value="X-ray"/>
    <property type="resolution" value="2.60 A"/>
    <property type="chains" value="A=25-299"/>
</dbReference>
<dbReference type="PDB" id="1AQD">
    <property type="method" value="X-ray"/>
    <property type="resolution" value="2.45 A"/>
    <property type="chains" value="C/F/I/L=127-141"/>
</dbReference>
<dbReference type="PDB" id="1B0G">
    <property type="method" value="X-ray"/>
    <property type="resolution" value="2.50 A"/>
    <property type="chains" value="A/D=25-299"/>
</dbReference>
<dbReference type="PDB" id="1B0R">
    <property type="method" value="X-ray"/>
    <property type="resolution" value="2.90 A"/>
    <property type="chains" value="A=25-299"/>
</dbReference>
<dbReference type="PDB" id="1BD2">
    <property type="method" value="X-ray"/>
    <property type="resolution" value="2.50 A"/>
    <property type="chains" value="A=25-299"/>
</dbReference>
<dbReference type="PDB" id="1DUY">
    <property type="method" value="X-ray"/>
    <property type="resolution" value="2.15 A"/>
    <property type="chains" value="A/D=25-299"/>
</dbReference>
<dbReference type="PDB" id="1DUZ">
    <property type="method" value="X-ray"/>
    <property type="resolution" value="1.80 A"/>
    <property type="chains" value="A/D=25-299"/>
</dbReference>
<dbReference type="PDB" id="1EEY">
    <property type="method" value="X-ray"/>
    <property type="resolution" value="2.25 A"/>
    <property type="chains" value="A/D=25-299"/>
</dbReference>
<dbReference type="PDB" id="1EEZ">
    <property type="method" value="X-ray"/>
    <property type="resolution" value="2.30 A"/>
    <property type="chains" value="A/D=25-299"/>
</dbReference>
<dbReference type="PDB" id="1HHG">
    <property type="method" value="X-ray"/>
    <property type="resolution" value="2.60 A"/>
    <property type="chains" value="A/D=25-299"/>
</dbReference>
<dbReference type="PDB" id="1HHH">
    <property type="method" value="X-ray"/>
    <property type="resolution" value="3.00 A"/>
    <property type="chains" value="A=25-299"/>
</dbReference>
<dbReference type="PDB" id="1HHI">
    <property type="method" value="X-ray"/>
    <property type="resolution" value="2.50 A"/>
    <property type="chains" value="A/D=25-299"/>
</dbReference>
<dbReference type="PDB" id="1HHJ">
    <property type="method" value="X-ray"/>
    <property type="resolution" value="2.50 A"/>
    <property type="chains" value="A/D=25-299"/>
</dbReference>
<dbReference type="PDB" id="1HHK">
    <property type="method" value="X-ray"/>
    <property type="resolution" value="2.50 A"/>
    <property type="chains" value="A/D=25-299"/>
</dbReference>
<dbReference type="PDB" id="1HLA">
    <property type="method" value="X-ray"/>
    <property type="resolution" value="3.50 A"/>
    <property type="chains" value="A=25-294"/>
</dbReference>
<dbReference type="PDB" id="1HSB">
    <property type="method" value="X-ray"/>
    <property type="resolution" value="1.90 A"/>
    <property type="chains" value="A=25-294"/>
</dbReference>
<dbReference type="PDB" id="1I1F">
    <property type="method" value="X-ray"/>
    <property type="resolution" value="2.80 A"/>
    <property type="chains" value="A/D=25-299"/>
</dbReference>
<dbReference type="PDB" id="1I1Y">
    <property type="method" value="X-ray"/>
    <property type="resolution" value="2.20 A"/>
    <property type="chains" value="A/D=25-299"/>
</dbReference>
<dbReference type="PDB" id="1I4F">
    <property type="method" value="X-ray"/>
    <property type="resolution" value="1.40 A"/>
    <property type="chains" value="A=25-299"/>
</dbReference>
<dbReference type="PDB" id="1I7R">
    <property type="method" value="X-ray"/>
    <property type="resolution" value="2.20 A"/>
    <property type="chains" value="A/D=25-299"/>
</dbReference>
<dbReference type="PDB" id="1I7T">
    <property type="method" value="X-ray"/>
    <property type="resolution" value="2.80 A"/>
    <property type="chains" value="A/D=25-299"/>
</dbReference>
<dbReference type="PDB" id="1I7U">
    <property type="method" value="X-ray"/>
    <property type="resolution" value="1.80 A"/>
    <property type="chains" value="A/D=25-299"/>
</dbReference>
<dbReference type="PDB" id="1IM3">
    <property type="method" value="X-ray"/>
    <property type="resolution" value="2.20 A"/>
    <property type="chains" value="A/E/I/M=25-299"/>
</dbReference>
<dbReference type="PDB" id="1JF1">
    <property type="method" value="X-ray"/>
    <property type="resolution" value="1.85 A"/>
    <property type="chains" value="A=25-299"/>
</dbReference>
<dbReference type="PDB" id="1JHT">
    <property type="method" value="X-ray"/>
    <property type="resolution" value="2.15 A"/>
    <property type="chains" value="A=25-299"/>
</dbReference>
<dbReference type="PDB" id="1LP9">
    <property type="method" value="X-ray"/>
    <property type="resolution" value="2.00 A"/>
    <property type="chains" value="A/H=25-299"/>
</dbReference>
<dbReference type="PDB" id="1OGA">
    <property type="method" value="X-ray"/>
    <property type="resolution" value="1.40 A"/>
    <property type="chains" value="A=25-300"/>
</dbReference>
<dbReference type="PDB" id="1P7Q">
    <property type="method" value="X-ray"/>
    <property type="resolution" value="3.40 A"/>
    <property type="chains" value="A=25-300"/>
</dbReference>
<dbReference type="PDB" id="1Q94">
    <property type="method" value="X-ray"/>
    <property type="resolution" value="2.40 A"/>
    <property type="chains" value="A/D=25-299"/>
</dbReference>
<dbReference type="PDB" id="1QEW">
    <property type="method" value="X-ray"/>
    <property type="resolution" value="2.20 A"/>
    <property type="chains" value="A=25-299"/>
</dbReference>
<dbReference type="PDB" id="1QR1">
    <property type="method" value="X-ray"/>
    <property type="resolution" value="2.40 A"/>
    <property type="chains" value="A/D=25-299"/>
</dbReference>
<dbReference type="PDB" id="1QRN">
    <property type="method" value="X-ray"/>
    <property type="resolution" value="2.80 A"/>
    <property type="chains" value="A=25-298"/>
</dbReference>
<dbReference type="PDB" id="1QSE">
    <property type="method" value="X-ray"/>
    <property type="resolution" value="2.80 A"/>
    <property type="chains" value="A=25-298"/>
</dbReference>
<dbReference type="PDB" id="1QSF">
    <property type="method" value="X-ray"/>
    <property type="resolution" value="2.80 A"/>
    <property type="chains" value="A=25-298"/>
</dbReference>
<dbReference type="PDB" id="1QVO">
    <property type="method" value="X-ray"/>
    <property type="resolution" value="2.22 A"/>
    <property type="chains" value="A/D=25-299"/>
</dbReference>
<dbReference type="PDB" id="1S8D">
    <property type="method" value="X-ray"/>
    <property type="resolution" value="2.20 A"/>
    <property type="chains" value="A=25-299"/>
</dbReference>
<dbReference type="PDB" id="1S9W">
    <property type="method" value="X-ray"/>
    <property type="resolution" value="2.20 A"/>
    <property type="chains" value="A=25-298"/>
</dbReference>
<dbReference type="PDB" id="1S9X">
    <property type="method" value="X-ray"/>
    <property type="resolution" value="2.50 A"/>
    <property type="chains" value="A=25-298"/>
</dbReference>
<dbReference type="PDB" id="1S9Y">
    <property type="method" value="X-ray"/>
    <property type="resolution" value="2.30 A"/>
    <property type="chains" value="A=25-298"/>
</dbReference>
<dbReference type="PDB" id="1T1W">
    <property type="method" value="X-ray"/>
    <property type="resolution" value="2.20 A"/>
    <property type="chains" value="A=25-299"/>
</dbReference>
<dbReference type="PDB" id="1T1X">
    <property type="method" value="X-ray"/>
    <property type="resolution" value="2.20 A"/>
    <property type="chains" value="A=25-299"/>
</dbReference>
<dbReference type="PDB" id="1T1Y">
    <property type="method" value="X-ray"/>
    <property type="resolution" value="2.00 A"/>
    <property type="chains" value="A=25-299"/>
</dbReference>
<dbReference type="PDB" id="1T1Z">
    <property type="method" value="X-ray"/>
    <property type="resolution" value="1.90 A"/>
    <property type="chains" value="A=25-299"/>
</dbReference>
<dbReference type="PDB" id="1T20">
    <property type="method" value="X-ray"/>
    <property type="resolution" value="2.20 A"/>
    <property type="chains" value="A=25-299"/>
</dbReference>
<dbReference type="PDB" id="1T21">
    <property type="method" value="X-ray"/>
    <property type="resolution" value="2.19 A"/>
    <property type="chains" value="A=25-299"/>
</dbReference>
<dbReference type="PDB" id="1T22">
    <property type="method" value="X-ray"/>
    <property type="resolution" value="2.20 A"/>
    <property type="chains" value="A=25-299"/>
</dbReference>
<dbReference type="PDB" id="1TMC">
    <property type="method" value="X-ray"/>
    <property type="resolution" value="2.30 A"/>
    <property type="chains" value="A=25-199"/>
</dbReference>
<dbReference type="PDB" id="1TVB">
    <property type="method" value="X-ray"/>
    <property type="resolution" value="1.80 A"/>
    <property type="chains" value="A/D=25-299"/>
</dbReference>
<dbReference type="PDB" id="1TVH">
    <property type="method" value="X-ray"/>
    <property type="resolution" value="1.80 A"/>
    <property type="chains" value="A/D=25-299"/>
</dbReference>
<dbReference type="PDB" id="1W72">
    <property type="method" value="X-ray"/>
    <property type="resolution" value="2.15 A"/>
    <property type="chains" value="A/D=25-298"/>
</dbReference>
<dbReference type="PDB" id="1X7Q">
    <property type="method" value="X-ray"/>
    <property type="resolution" value="1.45 A"/>
    <property type="chains" value="A=25-299"/>
</dbReference>
<dbReference type="PDB" id="2AV1">
    <property type="method" value="X-ray"/>
    <property type="resolution" value="1.95 A"/>
    <property type="chains" value="A/D=25-299"/>
</dbReference>
<dbReference type="PDB" id="2AV7">
    <property type="method" value="X-ray"/>
    <property type="resolution" value="2.05 A"/>
    <property type="chains" value="A/D=25-299"/>
</dbReference>
<dbReference type="PDB" id="2BCK">
    <property type="method" value="X-ray"/>
    <property type="resolution" value="2.80 A"/>
    <property type="chains" value="A/D=25-300"/>
</dbReference>
<dbReference type="PDB" id="2BNQ">
    <property type="method" value="X-ray"/>
    <property type="resolution" value="1.70 A"/>
    <property type="chains" value="A=25-300"/>
</dbReference>
<dbReference type="PDB" id="2BNR">
    <property type="method" value="X-ray"/>
    <property type="resolution" value="1.90 A"/>
    <property type="chains" value="A=25-300"/>
</dbReference>
<dbReference type="PDB" id="2C7U">
    <property type="method" value="X-ray"/>
    <property type="resolution" value="2.38 A"/>
    <property type="chains" value="A/D=25-300"/>
</dbReference>
<dbReference type="PDB" id="2CLR">
    <property type="method" value="X-ray"/>
    <property type="resolution" value="2.00 A"/>
    <property type="chains" value="A/D=25-299"/>
</dbReference>
<dbReference type="PDB" id="2F53">
    <property type="method" value="X-ray"/>
    <property type="resolution" value="2.10 A"/>
    <property type="chains" value="A=25-299"/>
</dbReference>
<dbReference type="PDB" id="2F54">
    <property type="method" value="X-ray"/>
    <property type="resolution" value="2.70 A"/>
    <property type="chains" value="A/F=25-298"/>
</dbReference>
<dbReference type="PDB" id="2GIT">
    <property type="method" value="X-ray"/>
    <property type="resolution" value="1.70 A"/>
    <property type="chains" value="A/D=25-299"/>
</dbReference>
<dbReference type="PDB" id="2GJ6">
    <property type="method" value="X-ray"/>
    <property type="resolution" value="2.56 A"/>
    <property type="chains" value="A=25-299"/>
</dbReference>
<dbReference type="PDB" id="2GT9">
    <property type="method" value="X-ray"/>
    <property type="resolution" value="1.75 A"/>
    <property type="chains" value="A/D=25-299"/>
</dbReference>
<dbReference type="PDB" id="2GTW">
    <property type="method" value="X-ray"/>
    <property type="resolution" value="1.55 A"/>
    <property type="chains" value="A/D=25-299"/>
</dbReference>
<dbReference type="PDB" id="2GTZ">
    <property type="method" value="X-ray"/>
    <property type="resolution" value="1.70 A"/>
    <property type="chains" value="A/D=25-299"/>
</dbReference>
<dbReference type="PDB" id="2GUO">
    <property type="method" value="X-ray"/>
    <property type="resolution" value="1.90 A"/>
    <property type="chains" value="A/D=25-299"/>
</dbReference>
<dbReference type="PDB" id="2HLA">
    <property type="method" value="X-ray"/>
    <property type="resolution" value="2.60 A"/>
    <property type="chains" value="A=25-294"/>
</dbReference>
<dbReference type="PDB" id="2HN7">
    <property type="method" value="X-ray"/>
    <property type="resolution" value="1.60 A"/>
    <property type="chains" value="A=25-299"/>
</dbReference>
<dbReference type="PDB" id="2J8U">
    <property type="method" value="X-ray"/>
    <property type="resolution" value="2.88 A"/>
    <property type="chains" value="A/H=25-299"/>
</dbReference>
<dbReference type="PDB" id="2JCC">
    <property type="method" value="X-ray"/>
    <property type="resolution" value="2.50 A"/>
    <property type="chains" value="A/H=25-299"/>
</dbReference>
<dbReference type="PDB" id="2P5E">
    <property type="method" value="X-ray"/>
    <property type="resolution" value="1.89 A"/>
    <property type="chains" value="A=25-300"/>
</dbReference>
<dbReference type="PDB" id="2P5W">
    <property type="method" value="X-ray"/>
    <property type="resolution" value="2.20 A"/>
    <property type="chains" value="A=25-300"/>
</dbReference>
<dbReference type="PDB" id="2PYE">
    <property type="method" value="X-ray"/>
    <property type="resolution" value="2.30 A"/>
    <property type="chains" value="A=25-300"/>
</dbReference>
<dbReference type="PDB" id="2UWE">
    <property type="method" value="X-ray"/>
    <property type="resolution" value="2.40 A"/>
    <property type="chains" value="A/H=25-299"/>
</dbReference>
<dbReference type="PDB" id="2V2W">
    <property type="method" value="X-ray"/>
    <property type="resolution" value="1.60 A"/>
    <property type="chains" value="A/D=25-300"/>
</dbReference>
<dbReference type="PDB" id="2V2X">
    <property type="method" value="X-ray"/>
    <property type="resolution" value="1.60 A"/>
    <property type="chains" value="A/D=25-300"/>
</dbReference>
<dbReference type="PDB" id="2VLJ">
    <property type="method" value="X-ray"/>
    <property type="resolution" value="2.40 A"/>
    <property type="chains" value="A=25-300"/>
</dbReference>
<dbReference type="PDB" id="2VLK">
    <property type="method" value="X-ray"/>
    <property type="resolution" value="2.50 A"/>
    <property type="chains" value="A=25-300"/>
</dbReference>
<dbReference type="PDB" id="2VLL">
    <property type="method" value="X-ray"/>
    <property type="resolution" value="1.60 A"/>
    <property type="chains" value="A/D=25-300"/>
</dbReference>
<dbReference type="PDB" id="2VLR">
    <property type="method" value="X-ray"/>
    <property type="resolution" value="2.30 A"/>
    <property type="chains" value="A/F=25-300"/>
</dbReference>
<dbReference type="PDB" id="2X4N">
    <property type="method" value="X-ray"/>
    <property type="resolution" value="2.34 A"/>
    <property type="chains" value="A/D=25-299"/>
</dbReference>
<dbReference type="PDB" id="2X4O">
    <property type="method" value="X-ray"/>
    <property type="resolution" value="2.30 A"/>
    <property type="chains" value="A/D=25-299"/>
</dbReference>
<dbReference type="PDB" id="2X4P">
    <property type="method" value="X-ray"/>
    <property type="resolution" value="2.30 A"/>
    <property type="chains" value="A/D=25-299"/>
</dbReference>
<dbReference type="PDB" id="2X4Q">
    <property type="method" value="X-ray"/>
    <property type="resolution" value="1.90 A"/>
    <property type="chains" value="A/D=25-299"/>
</dbReference>
<dbReference type="PDB" id="2X4R">
    <property type="method" value="X-ray"/>
    <property type="resolution" value="2.30 A"/>
    <property type="chains" value="A/D=25-299"/>
</dbReference>
<dbReference type="PDB" id="2X4S">
    <property type="method" value="X-ray"/>
    <property type="resolution" value="2.55 A"/>
    <property type="chains" value="A/D=25-299"/>
</dbReference>
<dbReference type="PDB" id="2X4T">
    <property type="method" value="X-ray"/>
    <property type="resolution" value="2.30 A"/>
    <property type="chains" value="A/D=25-299"/>
</dbReference>
<dbReference type="PDB" id="2X4U">
    <property type="method" value="X-ray"/>
    <property type="resolution" value="2.10 A"/>
    <property type="chains" value="A/D=25-299"/>
</dbReference>
<dbReference type="PDB" id="2X70">
    <property type="method" value="X-ray"/>
    <property type="resolution" value="2.00 A"/>
    <property type="chains" value="A/D=25-299"/>
</dbReference>
<dbReference type="PDB" id="2XPG">
    <property type="method" value="X-ray"/>
    <property type="resolution" value="2.60 A"/>
    <property type="chains" value="A=25-298"/>
</dbReference>
<dbReference type="PDB" id="3BGM">
    <property type="method" value="X-ray"/>
    <property type="resolution" value="1.60 A"/>
    <property type="chains" value="A=25-298"/>
</dbReference>
<dbReference type="PDB" id="3BH8">
    <property type="method" value="X-ray"/>
    <property type="resolution" value="1.65 A"/>
    <property type="chains" value="A=25-298"/>
</dbReference>
<dbReference type="PDB" id="3BH9">
    <property type="method" value="X-ray"/>
    <property type="resolution" value="1.70 A"/>
    <property type="chains" value="A=25-299"/>
</dbReference>
<dbReference type="PDB" id="3BHB">
    <property type="method" value="X-ray"/>
    <property type="resolution" value="2.20 A"/>
    <property type="chains" value="A=25-298"/>
</dbReference>
<dbReference type="PDB" id="3BO8">
    <property type="method" value="X-ray"/>
    <property type="resolution" value="1.80 A"/>
    <property type="chains" value="A=25-298"/>
</dbReference>
<dbReference type="PDB" id="3D25">
    <property type="method" value="X-ray"/>
    <property type="resolution" value="1.30 A"/>
    <property type="chains" value="A=25-298"/>
</dbReference>
<dbReference type="PDB" id="3D39">
    <property type="method" value="X-ray"/>
    <property type="resolution" value="2.81 A"/>
    <property type="chains" value="A=25-299"/>
</dbReference>
<dbReference type="PDB" id="3D3V">
    <property type="method" value="X-ray"/>
    <property type="resolution" value="2.80 A"/>
    <property type="chains" value="A=25-299"/>
</dbReference>
<dbReference type="PDB" id="3FQN">
    <property type="method" value="X-ray"/>
    <property type="resolution" value="1.65 A"/>
    <property type="chains" value="A=25-299"/>
</dbReference>
<dbReference type="PDB" id="3FQR">
    <property type="method" value="X-ray"/>
    <property type="resolution" value="1.70 A"/>
    <property type="chains" value="A=25-299"/>
</dbReference>
<dbReference type="PDB" id="3FQT">
    <property type="method" value="X-ray"/>
    <property type="resolution" value="1.80 A"/>
    <property type="chains" value="A=25-299"/>
</dbReference>
<dbReference type="PDB" id="3FQU">
    <property type="method" value="X-ray"/>
    <property type="resolution" value="1.80 A"/>
    <property type="chains" value="A=25-299"/>
</dbReference>
<dbReference type="PDB" id="3FQW">
    <property type="method" value="X-ray"/>
    <property type="resolution" value="1.93 A"/>
    <property type="chains" value="A=25-299"/>
</dbReference>
<dbReference type="PDB" id="3FQX">
    <property type="method" value="X-ray"/>
    <property type="resolution" value="1.70 A"/>
    <property type="chains" value="A=25-299"/>
</dbReference>
<dbReference type="PDB" id="3FT2">
    <property type="method" value="X-ray"/>
    <property type="resolution" value="1.80 A"/>
    <property type="chains" value="A=25-299"/>
</dbReference>
<dbReference type="PDB" id="3FT3">
    <property type="method" value="X-ray"/>
    <property type="resolution" value="1.95 A"/>
    <property type="chains" value="A=25-299"/>
</dbReference>
<dbReference type="PDB" id="3FT4">
    <property type="method" value="X-ray"/>
    <property type="resolution" value="1.90 A"/>
    <property type="chains" value="A=25-299"/>
</dbReference>
<dbReference type="PDB" id="3GIV">
    <property type="method" value="X-ray"/>
    <property type="resolution" value="2.00 A"/>
    <property type="chains" value="A/D=25-299"/>
</dbReference>
<dbReference type="PDB" id="3GJF">
    <property type="method" value="X-ray"/>
    <property type="resolution" value="1.90 A"/>
    <property type="chains" value="A/D=25-300"/>
</dbReference>
<dbReference type="PDB" id="3GSN">
    <property type="method" value="X-ray"/>
    <property type="resolution" value="2.80 A"/>
    <property type="chains" value="H=25-298"/>
</dbReference>
<dbReference type="PDB" id="3GSO">
    <property type="method" value="X-ray"/>
    <property type="resolution" value="1.60 A"/>
    <property type="chains" value="A=25-298"/>
</dbReference>
<dbReference type="PDB" id="3GSQ">
    <property type="method" value="X-ray"/>
    <property type="resolution" value="2.12 A"/>
    <property type="chains" value="A=25-298"/>
</dbReference>
<dbReference type="PDB" id="3GSR">
    <property type="method" value="X-ray"/>
    <property type="resolution" value="1.95 A"/>
    <property type="chains" value="A=25-298"/>
</dbReference>
<dbReference type="PDB" id="3GSU">
    <property type="method" value="X-ray"/>
    <property type="resolution" value="1.80 A"/>
    <property type="chains" value="A=25-299"/>
</dbReference>
<dbReference type="PDB" id="3GSV">
    <property type="method" value="X-ray"/>
    <property type="resolution" value="1.90 A"/>
    <property type="chains" value="A=25-299"/>
</dbReference>
<dbReference type="PDB" id="3GSW">
    <property type="method" value="X-ray"/>
    <property type="resolution" value="1.81 A"/>
    <property type="chains" value="A=25-298"/>
</dbReference>
<dbReference type="PDB" id="3GSX">
    <property type="method" value="X-ray"/>
    <property type="resolution" value="2.10 A"/>
    <property type="chains" value="A=25-298"/>
</dbReference>
<dbReference type="PDB" id="3H7B">
    <property type="method" value="X-ray"/>
    <property type="resolution" value="1.88 A"/>
    <property type="chains" value="A/D=25-299"/>
</dbReference>
<dbReference type="PDB" id="3H9H">
    <property type="method" value="X-ray"/>
    <property type="resolution" value="2.00 A"/>
    <property type="chains" value="A/D=25-299"/>
</dbReference>
<dbReference type="PDB" id="3H9S">
    <property type="method" value="X-ray"/>
    <property type="resolution" value="2.70 A"/>
    <property type="chains" value="A=25-299"/>
</dbReference>
<dbReference type="PDB" id="3HAE">
    <property type="method" value="X-ray"/>
    <property type="resolution" value="2.90 A"/>
    <property type="chains" value="A/D/J/P=25-300"/>
</dbReference>
<dbReference type="PDB" id="3HLA">
    <property type="method" value="X-ray"/>
    <property type="resolution" value="2.60 A"/>
    <property type="chains" value="A=25-294"/>
</dbReference>
<dbReference type="PDB" id="3HPJ">
    <property type="method" value="X-ray"/>
    <property type="resolution" value="2.00 A"/>
    <property type="chains" value="A/D=25-299"/>
</dbReference>
<dbReference type="PDB" id="3I6G">
    <property type="method" value="X-ray"/>
    <property type="resolution" value="2.20 A"/>
    <property type="chains" value="A/D=25-299"/>
</dbReference>
<dbReference type="PDB" id="3I6K">
    <property type="method" value="X-ray"/>
    <property type="resolution" value="2.80 A"/>
    <property type="chains" value="A/E=25-299"/>
</dbReference>
<dbReference type="PDB" id="3I6L">
    <property type="method" value="X-ray"/>
    <property type="resolution" value="2.40 A"/>
    <property type="chains" value="D=25-298"/>
</dbReference>
<dbReference type="PDB" id="3IXA">
    <property type="method" value="X-ray"/>
    <property type="resolution" value="2.10 A"/>
    <property type="chains" value="A/D=25-299"/>
</dbReference>
<dbReference type="PDB" id="3KLA">
    <property type="method" value="X-ray"/>
    <property type="resolution" value="1.65 A"/>
    <property type="chains" value="A/D=25-299"/>
</dbReference>
<dbReference type="PDB" id="3MGO">
    <property type="method" value="X-ray"/>
    <property type="resolution" value="2.30 A"/>
    <property type="chains" value="A/D/G/J=25-299"/>
</dbReference>
<dbReference type="PDB" id="3MGT">
    <property type="method" value="X-ray"/>
    <property type="resolution" value="2.20 A"/>
    <property type="chains" value="A/D/G/J=25-299"/>
</dbReference>
<dbReference type="PDB" id="3MR9">
    <property type="method" value="X-ray"/>
    <property type="resolution" value="1.93 A"/>
    <property type="chains" value="A=25-300"/>
</dbReference>
<dbReference type="PDB" id="3MRB">
    <property type="method" value="X-ray"/>
    <property type="resolution" value="1.40 A"/>
    <property type="chains" value="A=25-300"/>
</dbReference>
<dbReference type="PDB" id="3MRC">
    <property type="method" value="X-ray"/>
    <property type="resolution" value="1.80 A"/>
    <property type="chains" value="A=25-300"/>
</dbReference>
<dbReference type="PDB" id="3MRD">
    <property type="method" value="X-ray"/>
    <property type="resolution" value="1.70 A"/>
    <property type="chains" value="A=25-300"/>
</dbReference>
<dbReference type="PDB" id="3MRE">
    <property type="method" value="X-ray"/>
    <property type="resolution" value="1.10 A"/>
    <property type="chains" value="A=25-300"/>
</dbReference>
<dbReference type="PDB" id="3MRF">
    <property type="method" value="X-ray"/>
    <property type="resolution" value="2.30 A"/>
    <property type="chains" value="A=25-300"/>
</dbReference>
<dbReference type="PDB" id="3MRG">
    <property type="method" value="X-ray"/>
    <property type="resolution" value="1.30 A"/>
    <property type="chains" value="A=25-300"/>
</dbReference>
<dbReference type="PDB" id="3MRH">
    <property type="method" value="X-ray"/>
    <property type="resolution" value="2.40 A"/>
    <property type="chains" value="A=25-300"/>
</dbReference>
<dbReference type="PDB" id="3MRI">
    <property type="method" value="X-ray"/>
    <property type="resolution" value="2.10 A"/>
    <property type="chains" value="A=25-300"/>
</dbReference>
<dbReference type="PDB" id="3MRJ">
    <property type="method" value="X-ray"/>
    <property type="resolution" value="1.87 A"/>
    <property type="chains" value="A=25-300"/>
</dbReference>
<dbReference type="PDB" id="3MRK">
    <property type="method" value="X-ray"/>
    <property type="resolution" value="1.40 A"/>
    <property type="chains" value="A=25-300"/>
</dbReference>
<dbReference type="PDB" id="3MRL">
    <property type="method" value="X-ray"/>
    <property type="resolution" value="2.41 A"/>
    <property type="chains" value="A=25-300"/>
</dbReference>
<dbReference type="PDB" id="3MRM">
    <property type="method" value="X-ray"/>
    <property type="resolution" value="1.90 A"/>
    <property type="chains" value="A=25-300"/>
</dbReference>
<dbReference type="PDB" id="3MRN">
    <property type="method" value="X-ray"/>
    <property type="resolution" value="2.30 A"/>
    <property type="chains" value="A=25-300"/>
</dbReference>
<dbReference type="PDB" id="3MRO">
    <property type="method" value="X-ray"/>
    <property type="resolution" value="2.35 A"/>
    <property type="chains" value="A=25-300"/>
</dbReference>
<dbReference type="PDB" id="3MRP">
    <property type="method" value="X-ray"/>
    <property type="resolution" value="2.10 A"/>
    <property type="chains" value="A=25-300"/>
</dbReference>
<dbReference type="PDB" id="3MRQ">
    <property type="method" value="X-ray"/>
    <property type="resolution" value="2.20 A"/>
    <property type="chains" value="A=25-300"/>
</dbReference>
<dbReference type="PDB" id="3MRR">
    <property type="method" value="X-ray"/>
    <property type="resolution" value="1.60 A"/>
    <property type="chains" value="A=25-300"/>
</dbReference>
<dbReference type="PDB" id="3MYJ">
    <property type="method" value="X-ray"/>
    <property type="resolution" value="1.89 A"/>
    <property type="chains" value="A/D=25-299"/>
</dbReference>
<dbReference type="PDB" id="3NFN">
    <property type="method" value="X-ray"/>
    <property type="resolution" value="2.39 A"/>
    <property type="chains" value="A=25-298"/>
</dbReference>
<dbReference type="PDB" id="3O3A">
    <property type="method" value="X-ray"/>
    <property type="resolution" value="1.80 A"/>
    <property type="chains" value="A/D=25-299"/>
</dbReference>
<dbReference type="PDB" id="3O3B">
    <property type="method" value="X-ray"/>
    <property type="resolution" value="1.90 A"/>
    <property type="chains" value="A/D=25-299"/>
</dbReference>
<dbReference type="PDB" id="3O3D">
    <property type="method" value="X-ray"/>
    <property type="resolution" value="1.70 A"/>
    <property type="chains" value="A/D=25-299"/>
</dbReference>
<dbReference type="PDB" id="3O3E">
    <property type="method" value="X-ray"/>
    <property type="resolution" value="1.85 A"/>
    <property type="chains" value="A/D=25-299"/>
</dbReference>
<dbReference type="PDB" id="3O4L">
    <property type="method" value="X-ray"/>
    <property type="resolution" value="2.54 A"/>
    <property type="chains" value="A=25-300"/>
</dbReference>
<dbReference type="PDB" id="3PWJ">
    <property type="method" value="X-ray"/>
    <property type="resolution" value="1.70 A"/>
    <property type="chains" value="A/D=25-299"/>
</dbReference>
<dbReference type="PDB" id="3PWL">
    <property type="method" value="X-ray"/>
    <property type="resolution" value="1.65 A"/>
    <property type="chains" value="A/D=25-299"/>
</dbReference>
<dbReference type="PDB" id="3PWN">
    <property type="method" value="X-ray"/>
    <property type="resolution" value="1.60 A"/>
    <property type="chains" value="A/D=25-299"/>
</dbReference>
<dbReference type="PDB" id="3PWP">
    <property type="method" value="X-ray"/>
    <property type="resolution" value="2.69 A"/>
    <property type="chains" value="A=25-299"/>
</dbReference>
<dbReference type="PDB" id="3QDG">
    <property type="method" value="X-ray"/>
    <property type="resolution" value="2.69 A"/>
    <property type="chains" value="A=25-299"/>
</dbReference>
<dbReference type="PDB" id="3QDJ">
    <property type="method" value="X-ray"/>
    <property type="resolution" value="2.30 A"/>
    <property type="chains" value="A=25-299"/>
</dbReference>
<dbReference type="PDB" id="3QDM">
    <property type="method" value="X-ray"/>
    <property type="resolution" value="2.80 A"/>
    <property type="chains" value="A=25-299"/>
</dbReference>
<dbReference type="PDB" id="3QEQ">
    <property type="method" value="X-ray"/>
    <property type="resolution" value="2.59 A"/>
    <property type="chains" value="A=25-299"/>
</dbReference>
<dbReference type="PDB" id="3QFD">
    <property type="method" value="X-ray"/>
    <property type="resolution" value="1.68 A"/>
    <property type="chains" value="A/D=25-299"/>
</dbReference>
<dbReference type="PDB" id="3QFJ">
    <property type="method" value="X-ray"/>
    <property type="resolution" value="2.29 A"/>
    <property type="chains" value="A=25-299"/>
</dbReference>
<dbReference type="PDB" id="3QZW">
    <property type="method" value="X-ray"/>
    <property type="resolution" value="2.80 A"/>
    <property type="chains" value="A/D=25-298"/>
</dbReference>
<dbReference type="PDB" id="3REW">
    <property type="method" value="X-ray"/>
    <property type="resolution" value="1.90 A"/>
    <property type="chains" value="A/D=25-299"/>
</dbReference>
<dbReference type="PDB" id="3RL1">
    <property type="method" value="X-ray"/>
    <property type="resolution" value="2.00 A"/>
    <property type="chains" value="A=25-298"/>
</dbReference>
<dbReference type="PDB" id="3RL2">
    <property type="method" value="X-ray"/>
    <property type="resolution" value="2.39 A"/>
    <property type="chains" value="A=25-298"/>
</dbReference>
<dbReference type="PDB" id="3TO2">
    <property type="method" value="X-ray"/>
    <property type="resolution" value="2.60 A"/>
    <property type="chains" value="A=25-299"/>
</dbReference>
<dbReference type="PDB" id="3UTQ">
    <property type="method" value="X-ray"/>
    <property type="resolution" value="1.67 A"/>
    <property type="chains" value="A=25-300"/>
</dbReference>
<dbReference type="PDB" id="3UTS">
    <property type="method" value="X-ray"/>
    <property type="resolution" value="2.71 A"/>
    <property type="chains" value="A/F=25-300"/>
</dbReference>
<dbReference type="PDB" id="3UTT">
    <property type="method" value="X-ray"/>
    <property type="resolution" value="2.60 A"/>
    <property type="chains" value="A/F=25-299"/>
</dbReference>
<dbReference type="PDB" id="3V5D">
    <property type="method" value="X-ray"/>
    <property type="resolution" value="2.00 A"/>
    <property type="chains" value="A/D=25-299"/>
</dbReference>
<dbReference type="PDB" id="3V5H">
    <property type="method" value="X-ray"/>
    <property type="resolution" value="1.63 A"/>
    <property type="chains" value="A/D=25-299"/>
</dbReference>
<dbReference type="PDB" id="3V5K">
    <property type="method" value="X-ray"/>
    <property type="resolution" value="2.31 A"/>
    <property type="chains" value="A/D=25-299"/>
</dbReference>
<dbReference type="PDB" id="3VXM">
    <property type="method" value="X-ray"/>
    <property type="resolution" value="2.50 A"/>
    <property type="chains" value="A=25-298"/>
</dbReference>
<dbReference type="PDB" id="3VXN">
    <property type="method" value="X-ray"/>
    <property type="resolution" value="1.95 A"/>
    <property type="chains" value="A=25-298"/>
</dbReference>
<dbReference type="PDB" id="3VXO">
    <property type="method" value="X-ray"/>
    <property type="resolution" value="2.61 A"/>
    <property type="chains" value="A/D=25-298"/>
</dbReference>
<dbReference type="PDB" id="3VXP">
    <property type="method" value="X-ray"/>
    <property type="resolution" value="2.50 A"/>
    <property type="chains" value="A/D=25-298"/>
</dbReference>
<dbReference type="PDB" id="3VXR">
    <property type="method" value="X-ray"/>
    <property type="resolution" value="2.40 A"/>
    <property type="chains" value="A=25-298"/>
</dbReference>
<dbReference type="PDB" id="3VXS">
    <property type="method" value="X-ray"/>
    <property type="resolution" value="1.80 A"/>
    <property type="chains" value="A=25-298"/>
</dbReference>
<dbReference type="PDB" id="3VXU">
    <property type="method" value="X-ray"/>
    <property type="resolution" value="2.70 A"/>
    <property type="chains" value="A/F=25-298"/>
</dbReference>
<dbReference type="PDB" id="3W0W">
    <property type="method" value="X-ray"/>
    <property type="resolution" value="2.60 A"/>
    <property type="chains" value="A=25-298"/>
</dbReference>
<dbReference type="PDB" id="3WL9">
    <property type="method" value="X-ray"/>
    <property type="resolution" value="1.66 A"/>
    <property type="chains" value="A=25-298"/>
</dbReference>
<dbReference type="PDB" id="3WLB">
    <property type="method" value="X-ray"/>
    <property type="resolution" value="2.00 A"/>
    <property type="chains" value="A=25-298"/>
</dbReference>
<dbReference type="PDB" id="4E5X">
    <property type="method" value="X-ray"/>
    <property type="resolution" value="1.95 A"/>
    <property type="chains" value="A/D=25-299"/>
</dbReference>
<dbReference type="PDB" id="4EMZ">
    <property type="method" value="X-ray"/>
    <property type="resolution" value="2.90 A"/>
    <property type="chains" value="D/E=338-365"/>
</dbReference>
<dbReference type="PDB" id="4EN2">
    <property type="method" value="X-ray"/>
    <property type="resolution" value="2.58 A"/>
    <property type="chains" value="D/E=338-365"/>
</dbReference>
<dbReference type="PDB" id="4EUP">
    <property type="method" value="X-ray"/>
    <property type="resolution" value="2.88 A"/>
    <property type="chains" value="A/D=25-299"/>
</dbReference>
<dbReference type="PDB" id="4F7M">
    <property type="method" value="X-ray"/>
    <property type="resolution" value="2.40 A"/>
    <property type="chains" value="A/D=25-298"/>
</dbReference>
<dbReference type="PDB" id="4F7P">
    <property type="method" value="X-ray"/>
    <property type="resolution" value="1.90 A"/>
    <property type="chains" value="A=25-298"/>
</dbReference>
<dbReference type="PDB" id="4F7T">
    <property type="method" value="X-ray"/>
    <property type="resolution" value="1.70 A"/>
    <property type="chains" value="A/D=25-298"/>
</dbReference>
<dbReference type="PDB" id="4FTV">
    <property type="method" value="X-ray"/>
    <property type="resolution" value="2.74 A"/>
    <property type="chains" value="A=25-299"/>
</dbReference>
<dbReference type="PDB" id="4GKN">
    <property type="method" value="X-ray"/>
    <property type="resolution" value="2.75 A"/>
    <property type="chains" value="A/D=25-300"/>
</dbReference>
<dbReference type="PDB" id="4GKS">
    <property type="method" value="X-ray"/>
    <property type="resolution" value="2.35 A"/>
    <property type="chains" value="A/D=25-300"/>
</dbReference>
<dbReference type="PDB" id="4HWZ">
    <property type="method" value="X-ray"/>
    <property type="resolution" value="2.40 A"/>
    <property type="chains" value="A=25-298"/>
</dbReference>
<dbReference type="PDB" id="4HX1">
    <property type="method" value="X-ray"/>
    <property type="resolution" value="1.80 A"/>
    <property type="chains" value="A=25-296"/>
</dbReference>
<dbReference type="PDB" id="4I48">
    <property type="method" value="X-ray"/>
    <property type="resolution" value="2.80 A"/>
    <property type="chains" value="A=25-296"/>
</dbReference>
<dbReference type="PDB" id="4I4W">
    <property type="method" value="X-ray"/>
    <property type="resolution" value="1.77 A"/>
    <property type="chains" value="A=25-300"/>
</dbReference>
<dbReference type="PDB" id="4JFD">
    <property type="method" value="X-ray"/>
    <property type="resolution" value="2.46 A"/>
    <property type="chains" value="A=25-300"/>
</dbReference>
<dbReference type="PDB" id="4JFE">
    <property type="method" value="X-ray"/>
    <property type="resolution" value="2.70 A"/>
    <property type="chains" value="A=25-300"/>
</dbReference>
<dbReference type="PDB" id="4JFF">
    <property type="method" value="X-ray"/>
    <property type="resolution" value="2.43 A"/>
    <property type="chains" value="A=25-300"/>
</dbReference>
<dbReference type="PDB" id="4JFO">
    <property type="method" value="X-ray"/>
    <property type="resolution" value="2.11 A"/>
    <property type="chains" value="A/D=25-299"/>
</dbReference>
<dbReference type="PDB" id="4JFP">
    <property type="method" value="X-ray"/>
    <property type="resolution" value="1.91 A"/>
    <property type="chains" value="A/D=25-300"/>
</dbReference>
<dbReference type="PDB" id="4JFQ">
    <property type="method" value="X-ray"/>
    <property type="resolution" value="1.90 A"/>
    <property type="chains" value="A/D=25-300"/>
</dbReference>
<dbReference type="PDB" id="4K7F">
    <property type="method" value="X-ray"/>
    <property type="resolution" value="2.00 A"/>
    <property type="chains" value="A/D=25-299"/>
</dbReference>
<dbReference type="PDB" id="4L29">
    <property type="method" value="X-ray"/>
    <property type="resolution" value="3.09 A"/>
    <property type="chains" value="A/C/E/G/I/K/M/O/Q/S/U/W/Y/a=25-300"/>
</dbReference>
<dbReference type="PDB" id="4L3C">
    <property type="method" value="X-ray"/>
    <property type="resolution" value="2.64 A"/>
    <property type="chains" value="A/C/E/G/I/K/M/O/Q/S/U/W/Y/a=25-300"/>
</dbReference>
<dbReference type="PDB" id="4L3E">
    <property type="method" value="X-ray"/>
    <property type="resolution" value="2.56 A"/>
    <property type="chains" value="A=25-299"/>
</dbReference>
<dbReference type="PDB" id="4MJ5">
    <property type="method" value="X-ray"/>
    <property type="resolution" value="2.40 A"/>
    <property type="chains" value="A=25-298"/>
</dbReference>
<dbReference type="PDB" id="4MJ6">
    <property type="method" value="X-ray"/>
    <property type="resolution" value="2.57 A"/>
    <property type="chains" value="A=25-298"/>
</dbReference>
<dbReference type="PDB" id="4MNQ">
    <property type="method" value="X-ray"/>
    <property type="resolution" value="2.74 A"/>
    <property type="chains" value="A=25-300"/>
</dbReference>
<dbReference type="PDB" id="4N8V">
    <property type="method" value="X-ray"/>
    <property type="resolution" value="2.50 A"/>
    <property type="chains" value="A/D=25-298"/>
</dbReference>
<dbReference type="PDB" id="4NNX">
    <property type="method" value="X-ray"/>
    <property type="resolution" value="2.10 A"/>
    <property type="chains" value="A=25-298"/>
</dbReference>
<dbReference type="PDB" id="4NNY">
    <property type="method" value="X-ray"/>
    <property type="resolution" value="1.90 A"/>
    <property type="chains" value="A=25-298"/>
</dbReference>
<dbReference type="PDB" id="4NO0">
    <property type="method" value="X-ray"/>
    <property type="resolution" value="2.70 A"/>
    <property type="chains" value="A=25-300"/>
</dbReference>
<dbReference type="PDB" id="4NO2">
    <property type="method" value="X-ray"/>
    <property type="resolution" value="2.00 A"/>
    <property type="chains" value="A=25-298"/>
</dbReference>
<dbReference type="PDB" id="4NO3">
    <property type="method" value="X-ray"/>
    <property type="resolution" value="1.70 A"/>
    <property type="chains" value="A=25-298"/>
</dbReference>
<dbReference type="PDB" id="4NO5">
    <property type="method" value="X-ray"/>
    <property type="resolution" value="2.10 A"/>
    <property type="chains" value="A=25-299"/>
</dbReference>
<dbReference type="PDB" id="4NQV">
    <property type="method" value="X-ray"/>
    <property type="resolution" value="2.39 A"/>
    <property type="chains" value="A/C/E/G/I/K=25-298"/>
</dbReference>
<dbReference type="PDB" id="4NQX">
    <property type="method" value="X-ray"/>
    <property type="resolution" value="2.00 A"/>
    <property type="chains" value="A/C/E/G/I/K=25-308"/>
</dbReference>
<dbReference type="PDB" id="4OV5">
    <property type="method" value="X-ray"/>
    <property type="resolution" value="2.20 A"/>
    <property type="chains" value="C/F/I/L/O/R=128-141"/>
</dbReference>
<dbReference type="PDB" id="4QOK">
    <property type="method" value="X-ray"/>
    <property type="resolution" value="3.00 A"/>
    <property type="chains" value="A=25-300"/>
</dbReference>
<dbReference type="PDB" id="4U6X">
    <property type="method" value="X-ray"/>
    <property type="resolution" value="1.68 A"/>
    <property type="chains" value="A=25-300"/>
</dbReference>
<dbReference type="PDB" id="4U6Y">
    <property type="method" value="X-ray"/>
    <property type="resolution" value="1.47 A"/>
    <property type="chains" value="A=25-300"/>
</dbReference>
<dbReference type="PDB" id="4UQ2">
    <property type="method" value="X-ray"/>
    <property type="resolution" value="2.43 A"/>
    <property type="chains" value="A/C=25-299"/>
</dbReference>
<dbReference type="PDB" id="4UQ3">
    <property type="method" value="X-ray"/>
    <property type="resolution" value="2.10 A"/>
    <property type="chains" value="A/C=25-299"/>
</dbReference>
<dbReference type="PDB" id="4WJ5">
    <property type="method" value="X-ray"/>
    <property type="resolution" value="1.65 A"/>
    <property type="chains" value="A/D=25-299"/>
</dbReference>
<dbReference type="PDB" id="4WU5">
    <property type="method" value="X-ray"/>
    <property type="resolution" value="2.40 A"/>
    <property type="chains" value="A/D=25-298"/>
</dbReference>
<dbReference type="PDB" id="4WU7">
    <property type="method" value="X-ray"/>
    <property type="resolution" value="2.30 A"/>
    <property type="chains" value="A/D=25-298"/>
</dbReference>
<dbReference type="PDB" id="4WUU">
    <property type="method" value="X-ray"/>
    <property type="resolution" value="3.05 A"/>
    <property type="chains" value="A=25-300"/>
</dbReference>
<dbReference type="PDB" id="5BRZ">
    <property type="method" value="X-ray"/>
    <property type="resolution" value="2.62 A"/>
    <property type="chains" value="A=25-298"/>
</dbReference>
<dbReference type="PDB" id="5BS0">
    <property type="method" value="X-ray"/>
    <property type="resolution" value="2.40 A"/>
    <property type="chains" value="A=25-298"/>
</dbReference>
<dbReference type="PDB" id="5C07">
    <property type="method" value="X-ray"/>
    <property type="resolution" value="2.11 A"/>
    <property type="chains" value="A/F=25-300"/>
</dbReference>
<dbReference type="PDB" id="5C08">
    <property type="method" value="X-ray"/>
    <property type="resolution" value="2.33 A"/>
    <property type="chains" value="A/F=25-300"/>
</dbReference>
<dbReference type="PDB" id="5C09">
    <property type="method" value="X-ray"/>
    <property type="resolution" value="2.48 A"/>
    <property type="chains" value="A/F=25-300"/>
</dbReference>
<dbReference type="PDB" id="5C0A">
    <property type="method" value="X-ray"/>
    <property type="resolution" value="2.46 A"/>
    <property type="chains" value="A/F=25-300"/>
</dbReference>
<dbReference type="PDB" id="5C0B">
    <property type="method" value="X-ray"/>
    <property type="resolution" value="2.03 A"/>
    <property type="chains" value="A/F=25-299"/>
</dbReference>
<dbReference type="PDB" id="5C0C">
    <property type="method" value="X-ray"/>
    <property type="resolution" value="1.97 A"/>
    <property type="chains" value="A/F=25-300"/>
</dbReference>
<dbReference type="PDB" id="5C0D">
    <property type="method" value="X-ray"/>
    <property type="resolution" value="1.68 A"/>
    <property type="chains" value="A=25-300"/>
</dbReference>
<dbReference type="PDB" id="5C0E">
    <property type="method" value="X-ray"/>
    <property type="resolution" value="1.49 A"/>
    <property type="chains" value="A=25-300"/>
</dbReference>
<dbReference type="PDB" id="5C0F">
    <property type="method" value="X-ray"/>
    <property type="resolution" value="1.46 A"/>
    <property type="chains" value="A=25-300"/>
</dbReference>
<dbReference type="PDB" id="5C0G">
    <property type="method" value="X-ray"/>
    <property type="resolution" value="1.37 A"/>
    <property type="chains" value="A=25-300"/>
</dbReference>
<dbReference type="PDB" id="5C0I">
    <property type="method" value="X-ray"/>
    <property type="resolution" value="1.53 A"/>
    <property type="chains" value="A=25-300"/>
</dbReference>
<dbReference type="PDB" id="5C0J">
    <property type="method" value="X-ray"/>
    <property type="resolution" value="1.64 A"/>
    <property type="chains" value="A=25-300"/>
</dbReference>
<dbReference type="PDB" id="5D2L">
    <property type="method" value="X-ray"/>
    <property type="resolution" value="3.51 A"/>
    <property type="chains" value="A/C/G/M=25-299"/>
</dbReference>
<dbReference type="PDB" id="5D2N">
    <property type="method" value="X-ray"/>
    <property type="resolution" value="2.10 A"/>
    <property type="chains" value="A/H=25-299"/>
</dbReference>
<dbReference type="PDB" id="5D9S">
    <property type="method" value="X-ray"/>
    <property type="resolution" value="1.87 A"/>
    <property type="chains" value="A=25-298"/>
</dbReference>
<dbReference type="PDB" id="5DDH">
    <property type="method" value="X-ray"/>
    <property type="resolution" value="1.50 A"/>
    <property type="chains" value="A=25-298"/>
</dbReference>
<dbReference type="PDB" id="5E00">
    <property type="method" value="X-ray"/>
    <property type="resolution" value="1.70 A"/>
    <property type="chains" value="A=25-299"/>
</dbReference>
<dbReference type="PDB" id="5E6I">
    <property type="method" value="X-ray"/>
    <property type="resolution" value="4.00 A"/>
    <property type="chains" value="C/I/M/R=25-299"/>
</dbReference>
<dbReference type="PDB" id="5E9D">
    <property type="method" value="X-ray"/>
    <property type="resolution" value="2.51 A"/>
    <property type="chains" value="A/F=25-299"/>
</dbReference>
<dbReference type="PDB" id="5ENW">
    <property type="method" value="X-ray"/>
    <property type="resolution" value="1.85 A"/>
    <property type="chains" value="A=25-298"/>
</dbReference>
<dbReference type="PDB" id="5EOT">
    <property type="method" value="X-ray"/>
    <property type="resolution" value="2.10 A"/>
    <property type="chains" value="A=26-298"/>
</dbReference>
<dbReference type="PDB" id="5EU3">
    <property type="method" value="X-ray"/>
    <property type="resolution" value="1.97 A"/>
    <property type="chains" value="A=25-300"/>
</dbReference>
<dbReference type="PDB" id="5EU4">
    <property type="method" value="X-ray"/>
    <property type="resolution" value="2.12 A"/>
    <property type="chains" value="A/D=25-300"/>
</dbReference>
<dbReference type="PDB" id="5EU5">
    <property type="method" value="X-ray"/>
    <property type="resolution" value="1.54 A"/>
    <property type="chains" value="A=25-300"/>
</dbReference>
<dbReference type="PDB" id="5EU6">
    <property type="method" value="X-ray"/>
    <property type="resolution" value="2.02 A"/>
    <property type="chains" value="A=25-300"/>
</dbReference>
<dbReference type="PDB" id="5EUO">
    <property type="method" value="X-ray"/>
    <property type="resolution" value="2.10 A"/>
    <property type="chains" value="A/C=25-299"/>
</dbReference>
<dbReference type="PDB" id="5F7D">
    <property type="method" value="X-ray"/>
    <property type="resolution" value="2.30 A"/>
    <property type="chains" value="A=26-298"/>
</dbReference>
<dbReference type="PDB" id="5F9J">
    <property type="method" value="X-ray"/>
    <property type="resolution" value="2.51 A"/>
    <property type="chains" value="A=25-298"/>
</dbReference>
<dbReference type="PDB" id="5FA3">
    <property type="method" value="X-ray"/>
    <property type="resolution" value="1.86 A"/>
    <property type="chains" value="A=26-298"/>
</dbReference>
<dbReference type="PDB" id="5FA4">
    <property type="method" value="X-ray"/>
    <property type="resolution" value="2.40 A"/>
    <property type="chains" value="A=25-298"/>
</dbReference>
<dbReference type="PDB" id="5FDW">
    <property type="method" value="X-ray"/>
    <property type="resolution" value="2.70 A"/>
    <property type="chains" value="A=25-298"/>
</dbReference>
<dbReference type="PDB" id="5GRD">
    <property type="method" value="X-ray"/>
    <property type="resolution" value="1.80 A"/>
    <property type="chains" value="A=25-299"/>
</dbReference>
<dbReference type="PDB" id="5GRG">
    <property type="method" value="X-ray"/>
    <property type="resolution" value="1.94 A"/>
    <property type="chains" value="A=25-299"/>
</dbReference>
<dbReference type="PDB" id="5GSD">
    <property type="method" value="X-ray"/>
    <property type="resolution" value="2.30 A"/>
    <property type="chains" value="A=25-299"/>
</dbReference>
<dbReference type="PDB" id="5HGA">
    <property type="method" value="X-ray"/>
    <property type="resolution" value="2.20 A"/>
    <property type="chains" value="A/D=25-298"/>
</dbReference>
<dbReference type="PDB" id="5HGB">
    <property type="method" value="X-ray"/>
    <property type="resolution" value="2.40 A"/>
    <property type="chains" value="A/D/G/J=25-298"/>
</dbReference>
<dbReference type="PDB" id="5HGD">
    <property type="method" value="X-ray"/>
    <property type="resolution" value="2.07 A"/>
    <property type="chains" value="A/D=25-298"/>
</dbReference>
<dbReference type="PDB" id="5HGH">
    <property type="method" value="X-ray"/>
    <property type="resolution" value="2.39 A"/>
    <property type="chains" value="A=25-298"/>
</dbReference>
<dbReference type="PDB" id="5HHM">
    <property type="method" value="X-ray"/>
    <property type="resolution" value="2.50 A"/>
    <property type="chains" value="A/F=25-300"/>
</dbReference>
<dbReference type="PDB" id="5HHN">
    <property type="method" value="X-ray"/>
    <property type="resolution" value="2.03 A"/>
    <property type="chains" value="A=25-298"/>
</dbReference>
<dbReference type="PDB" id="5HHO">
    <property type="method" value="X-ray"/>
    <property type="resolution" value="2.95 A"/>
    <property type="chains" value="A=25-300"/>
</dbReference>
<dbReference type="PDB" id="5HHP">
    <property type="method" value="X-ray"/>
    <property type="resolution" value="1.90 A"/>
    <property type="chains" value="A=25-298"/>
</dbReference>
<dbReference type="PDB" id="5HHQ">
    <property type="method" value="X-ray"/>
    <property type="resolution" value="2.10 A"/>
    <property type="chains" value="A=25-298"/>
</dbReference>
<dbReference type="PDB" id="5HYJ">
    <property type="method" value="X-ray"/>
    <property type="resolution" value="3.06 A"/>
    <property type="chains" value="A/F=25-300"/>
</dbReference>
<dbReference type="PDB" id="5IRO">
    <property type="method" value="X-ray"/>
    <property type="resolution" value="2.64 A"/>
    <property type="chains" value="A/E/I/M/Q/U=25-299"/>
</dbReference>
<dbReference type="PDB" id="5ISZ">
    <property type="method" value="X-ray"/>
    <property type="resolution" value="2.06 A"/>
    <property type="chains" value="A=25-299"/>
</dbReference>
<dbReference type="PDB" id="5JHD">
    <property type="method" value="X-ray"/>
    <property type="resolution" value="2.46 A"/>
    <property type="chains" value="A/F=25-299"/>
</dbReference>
<dbReference type="PDB" id="5JZI">
    <property type="method" value="X-ray"/>
    <property type="resolution" value="2.50 A"/>
    <property type="chains" value="A/F=25-299"/>
</dbReference>
<dbReference type="PDB" id="5MEN">
    <property type="method" value="X-ray"/>
    <property type="resolution" value="2.81 A"/>
    <property type="chains" value="A=25-300"/>
</dbReference>
<dbReference type="PDB" id="5MEO">
    <property type="method" value="X-ray"/>
    <property type="resolution" value="1.77 A"/>
    <property type="chains" value="A=25-300"/>
</dbReference>
<dbReference type="PDB" id="5MEP">
    <property type="method" value="X-ray"/>
    <property type="resolution" value="2.71 A"/>
    <property type="chains" value="A/D=25-300"/>
</dbReference>
<dbReference type="PDB" id="5MEQ">
    <property type="method" value="X-ray"/>
    <property type="resolution" value="2.27 A"/>
    <property type="chains" value="A=25-300"/>
</dbReference>
<dbReference type="PDB" id="5MER">
    <property type="method" value="X-ray"/>
    <property type="resolution" value="1.88 A"/>
    <property type="chains" value="A/D=25-300"/>
</dbReference>
<dbReference type="PDB" id="5N1Y">
    <property type="method" value="X-ray"/>
    <property type="resolution" value="1.39 A"/>
    <property type="chains" value="A=25-300"/>
</dbReference>
<dbReference type="PDB" id="5N6B">
    <property type="method" value="X-ray"/>
    <property type="resolution" value="1.71 A"/>
    <property type="chains" value="A/D=25-300"/>
</dbReference>
<dbReference type="PDB" id="5NHT">
    <property type="method" value="X-ray"/>
    <property type="resolution" value="3.20 A"/>
    <property type="chains" value="H=25-300"/>
</dbReference>
<dbReference type="PDB" id="5NME">
    <property type="method" value="X-ray"/>
    <property type="resolution" value="2.94 A"/>
    <property type="chains" value="A/F=25-300"/>
</dbReference>
<dbReference type="PDB" id="5NMF">
    <property type="method" value="X-ray"/>
    <property type="resolution" value="2.89 A"/>
    <property type="chains" value="A/F=25-300"/>
</dbReference>
<dbReference type="PDB" id="5NMG">
    <property type="method" value="X-ray"/>
    <property type="resolution" value="2.75 A"/>
    <property type="chains" value="A/F=25-300"/>
</dbReference>
<dbReference type="PDB" id="5NMH">
    <property type="method" value="X-ray"/>
    <property type="resolution" value="1.55 A"/>
    <property type="chains" value="A=25-300"/>
</dbReference>
<dbReference type="PDB" id="5NMK">
    <property type="method" value="X-ray"/>
    <property type="resolution" value="1.66 A"/>
    <property type="chains" value="A=25-300"/>
</dbReference>
<dbReference type="PDB" id="5NQK">
    <property type="method" value="X-ray"/>
    <property type="resolution" value="3.25 A"/>
    <property type="chains" value="H=25-300"/>
</dbReference>
<dbReference type="PDB" id="5SWQ">
    <property type="method" value="X-ray"/>
    <property type="resolution" value="2.00 A"/>
    <property type="chains" value="A=25-300"/>
</dbReference>
<dbReference type="PDB" id="5TEZ">
    <property type="method" value="X-ray"/>
    <property type="resolution" value="1.70 A"/>
    <property type="chains" value="A=25-299"/>
</dbReference>
<dbReference type="PDB" id="5W1W">
    <property type="method" value="X-ray"/>
    <property type="resolution" value="3.10 A"/>
    <property type="chains" value="C/H/M/R=3-11"/>
</dbReference>
<dbReference type="PDB" id="5WJL">
    <property type="method" value="X-ray"/>
    <property type="resolution" value="3.15 A"/>
    <property type="chains" value="A/D/G=25-298"/>
</dbReference>
<dbReference type="PDB" id="5WJN">
    <property type="method" value="X-ray"/>
    <property type="resolution" value="2.85 A"/>
    <property type="chains" value="A/D/G=25-298"/>
</dbReference>
<dbReference type="PDB" id="5WKF">
    <property type="method" value="X-ray"/>
    <property type="resolution" value="2.95 A"/>
    <property type="chains" value="A/F=25-298"/>
</dbReference>
<dbReference type="PDB" id="5WKH">
    <property type="method" value="X-ray"/>
    <property type="resolution" value="3.20 A"/>
    <property type="chains" value="A/F=25-298"/>
</dbReference>
<dbReference type="PDB" id="5WSH">
    <property type="method" value="X-ray"/>
    <property type="resolution" value="2.00 A"/>
    <property type="chains" value="A=25-299"/>
</dbReference>
<dbReference type="PDB" id="5WWI">
    <property type="method" value="X-ray"/>
    <property type="resolution" value="3.19 A"/>
    <property type="chains" value="A=25-298"/>
</dbReference>
<dbReference type="PDB" id="5WWJ">
    <property type="method" value="X-ray"/>
    <property type="resolution" value="2.29 A"/>
    <property type="chains" value="A/C=25-298"/>
</dbReference>
<dbReference type="PDB" id="5WWU">
    <property type="method" value="X-ray"/>
    <property type="resolution" value="2.79 A"/>
    <property type="chains" value="A=25-298"/>
</dbReference>
<dbReference type="PDB" id="5WXC">
    <property type="method" value="X-ray"/>
    <property type="resolution" value="2.29 A"/>
    <property type="chains" value="A/C=25-298"/>
</dbReference>
<dbReference type="PDB" id="5WXD">
    <property type="method" value="X-ray"/>
    <property type="resolution" value="3.29 A"/>
    <property type="chains" value="A=25-298"/>
</dbReference>
<dbReference type="PDB" id="5XOV">
    <property type="method" value="X-ray"/>
    <property type="resolution" value="2.68 A"/>
    <property type="chains" value="A/D=25-298"/>
</dbReference>
<dbReference type="PDB" id="5YXN">
    <property type="method" value="X-ray"/>
    <property type="resolution" value="2.03 A"/>
    <property type="chains" value="C=25-299"/>
</dbReference>
<dbReference type="PDB" id="5YXU">
    <property type="method" value="X-ray"/>
    <property type="resolution" value="2.70 A"/>
    <property type="chains" value="C/E=25-299"/>
</dbReference>
<dbReference type="PDB" id="6AM5">
    <property type="method" value="X-ray"/>
    <property type="resolution" value="2.39 A"/>
    <property type="chains" value="A=25-299"/>
</dbReference>
<dbReference type="PDB" id="6AMT">
    <property type="method" value="X-ray"/>
    <property type="resolution" value="2.50 A"/>
    <property type="chains" value="A/D=25-299"/>
</dbReference>
<dbReference type="PDB" id="6AMU">
    <property type="method" value="X-ray"/>
    <property type="resolution" value="2.15 A"/>
    <property type="chains" value="A=26-298"/>
</dbReference>
<dbReference type="PDB" id="6APN">
    <property type="method" value="X-ray"/>
    <property type="resolution" value="2.22 A"/>
    <property type="chains" value="A/B=26-301"/>
</dbReference>
<dbReference type="PDB" id="6AT9">
    <property type="method" value="X-ray"/>
    <property type="resolution" value="2.95 A"/>
    <property type="chains" value="A=25-304"/>
</dbReference>
<dbReference type="PDB" id="6D78">
    <property type="method" value="X-ray"/>
    <property type="resolution" value="2.35 A"/>
    <property type="chains" value="A=25-299"/>
</dbReference>
<dbReference type="PDB" id="6D7G">
    <property type="method" value="X-ray"/>
    <property type="resolution" value="2.75 A"/>
    <property type="chains" value="A=25-299"/>
</dbReference>
<dbReference type="PDB" id="6DKP">
    <property type="method" value="X-ray"/>
    <property type="resolution" value="2.97 A"/>
    <property type="chains" value="A=25-299"/>
</dbReference>
<dbReference type="PDB" id="6EI2">
    <property type="method" value="X-ray"/>
    <property type="resolution" value="1.61 A"/>
    <property type="chains" value="A=25-299"/>
</dbReference>
<dbReference type="PDB" id="6ENY">
    <property type="method" value="EM"/>
    <property type="resolution" value="5.80 A"/>
    <property type="chains" value="F=25-365"/>
</dbReference>
<dbReference type="PDB" id="6EQA">
    <property type="method" value="X-ray"/>
    <property type="resolution" value="3.16 A"/>
    <property type="chains" value="A=25-300"/>
</dbReference>
<dbReference type="PDB" id="6EQB">
    <property type="method" value="X-ray"/>
    <property type="resolution" value="2.81 A"/>
    <property type="chains" value="A=25-300"/>
</dbReference>
<dbReference type="PDB" id="6EWA">
    <property type="method" value="X-ray"/>
    <property type="resolution" value="2.39 A"/>
    <property type="chains" value="A/E=25-300"/>
</dbReference>
<dbReference type="PDB" id="6EWC">
    <property type="method" value="X-ray"/>
    <property type="resolution" value="3.20 A"/>
    <property type="chains" value="A/E=25-300"/>
</dbReference>
<dbReference type="PDB" id="6EWO">
    <property type="method" value="X-ray"/>
    <property type="resolution" value="2.30 A"/>
    <property type="chains" value="A/E=25-300"/>
</dbReference>
<dbReference type="PDB" id="6G3J">
    <property type="method" value="X-ray"/>
    <property type="resolution" value="2.45 A"/>
    <property type="chains" value="A/D=25-300"/>
</dbReference>
<dbReference type="PDB" id="6G3K">
    <property type="method" value="X-ray"/>
    <property type="resolution" value="2.90 A"/>
    <property type="chains" value="A/D=25-300"/>
</dbReference>
<dbReference type="PDB" id="6ID4">
    <property type="method" value="X-ray"/>
    <property type="resolution" value="2.40 A"/>
    <property type="chains" value="A/E=25-299"/>
</dbReference>
<dbReference type="PDB" id="6J1W">
    <property type="method" value="X-ray"/>
    <property type="resolution" value="1.50 A"/>
    <property type="chains" value="A=25-298"/>
</dbReference>
<dbReference type="PDB" id="6J29">
    <property type="method" value="X-ray"/>
    <property type="resolution" value="1.60 A"/>
    <property type="chains" value="A=25-298"/>
</dbReference>
<dbReference type="PDB" id="6J2A">
    <property type="method" value="X-ray"/>
    <property type="resolution" value="1.40 A"/>
    <property type="chains" value="A=25-298"/>
</dbReference>
<dbReference type="PDB" id="6JOZ">
    <property type="method" value="X-ray"/>
    <property type="resolution" value="1.35 A"/>
    <property type="chains" value="A=25-299"/>
</dbReference>
<dbReference type="PDB" id="6JP3">
    <property type="method" value="X-ray"/>
    <property type="resolution" value="1.66 A"/>
    <property type="chains" value="A=25-299"/>
</dbReference>
<dbReference type="PDB" id="6MPP">
    <property type="method" value="NMR"/>
    <property type="chains" value="A=25-303"/>
</dbReference>
<dbReference type="PDB" id="6NCA">
    <property type="method" value="X-ray"/>
    <property type="resolution" value="3.30 A"/>
    <property type="chains" value="A/B/C/D/E/F/G/H/I/J/K/L/M/N/O/P/Q/R/S/T=25-299"/>
</dbReference>
<dbReference type="PDB" id="6O9B">
    <property type="method" value="X-ray"/>
    <property type="resolution" value="2.20 A"/>
    <property type="chains" value="A=25-304"/>
</dbReference>
<dbReference type="PDB" id="6O9C">
    <property type="method" value="X-ray"/>
    <property type="resolution" value="2.45 A"/>
    <property type="chains" value="A=25-304"/>
</dbReference>
<dbReference type="PDB" id="6OPD">
    <property type="method" value="X-ray"/>
    <property type="resolution" value="1.79 A"/>
    <property type="chains" value="A=25-299"/>
</dbReference>
<dbReference type="PDB" id="6PBH">
    <property type="method" value="X-ray"/>
    <property type="resolution" value="1.89 A"/>
    <property type="chains" value="A=25-302"/>
</dbReference>
<dbReference type="PDB" id="6PTB">
    <property type="method" value="X-ray"/>
    <property type="resolution" value="2.15 A"/>
    <property type="chains" value="A/D=25-299"/>
</dbReference>
<dbReference type="PDB" id="6PTE">
    <property type="method" value="X-ray"/>
    <property type="resolution" value="1.90 A"/>
    <property type="chains" value="A/E/H/K=25-299"/>
</dbReference>
<dbReference type="PDB" id="6Q3K">
    <property type="method" value="X-ray"/>
    <property type="resolution" value="1.50 A"/>
    <property type="chains" value="A=24-299"/>
</dbReference>
<dbReference type="PDB" id="6Q3S">
    <property type="method" value="X-ray"/>
    <property type="resolution" value="2.50 A"/>
    <property type="chains" value="A=25-300"/>
</dbReference>
<dbReference type="PDB" id="6R2L">
    <property type="method" value="X-ray"/>
    <property type="resolution" value="2.30 A"/>
    <property type="chains" value="A=25-299"/>
</dbReference>
<dbReference type="PDB" id="6RP9">
    <property type="method" value="X-ray"/>
    <property type="resolution" value="3.12 A"/>
    <property type="chains" value="A/F=25-299"/>
</dbReference>
<dbReference type="PDB" id="6RPA">
    <property type="method" value="X-ray"/>
    <property type="resolution" value="2.56 A"/>
    <property type="chains" value="A=25-299"/>
</dbReference>
<dbReference type="PDB" id="6RPB">
    <property type="method" value="X-ray"/>
    <property type="resolution" value="2.50 A"/>
    <property type="chains" value="A/F/K/P=25-299"/>
</dbReference>
<dbReference type="PDB" id="6RSY">
    <property type="method" value="X-ray"/>
    <property type="resolution" value="2.95 A"/>
    <property type="chains" value="A/F=25-299"/>
</dbReference>
<dbReference type="PDB" id="6SS7">
    <property type="method" value="X-ray"/>
    <property type="resolution" value="2.50 A"/>
    <property type="chains" value="A/D=25-299"/>
</dbReference>
<dbReference type="PDB" id="6SS8">
    <property type="method" value="X-ray"/>
    <property type="resolution" value="2.24 A"/>
    <property type="chains" value="A/D=25-299"/>
</dbReference>
<dbReference type="PDB" id="6SS9">
    <property type="method" value="X-ray"/>
    <property type="resolution" value="2.70 A"/>
    <property type="chains" value="A/D=25-299"/>
</dbReference>
<dbReference type="PDB" id="6SSA">
    <property type="method" value="X-ray"/>
    <property type="resolution" value="2.11 A"/>
    <property type="chains" value="A/D/G/J=25-299"/>
</dbReference>
<dbReference type="PDB" id="7L1B">
    <property type="method" value="X-ray"/>
    <property type="resolution" value="2.04 A"/>
    <property type="chains" value="A=25-298"/>
</dbReference>
<dbReference type="PDB" id="7L1C">
    <property type="method" value="X-ray"/>
    <property type="resolution" value="1.96 A"/>
    <property type="chains" value="A=25-298"/>
</dbReference>
<dbReference type="PDB" id="7L1D">
    <property type="method" value="X-ray"/>
    <property type="resolution" value="3.11 A"/>
    <property type="chains" value="A=25-298"/>
</dbReference>
<dbReference type="PDB" id="7MLE">
    <property type="method" value="X-ray"/>
    <property type="resolution" value="2.20 A"/>
    <property type="chains" value="A=25-301"/>
</dbReference>
<dbReference type="PDB" id="7PHR">
    <property type="method" value="EM"/>
    <property type="resolution" value="3.08 A"/>
    <property type="chains" value="H=25-304"/>
</dbReference>
<dbReference type="PDB" id="7QPD">
    <property type="method" value="EM"/>
    <property type="resolution" value="3.73 A"/>
    <property type="chains" value="M=25-365"/>
</dbReference>
<dbReference type="PDB" id="7RK7">
    <property type="method" value="X-ray"/>
    <property type="resolution" value="2.54 A"/>
    <property type="chains" value="A=25-299"/>
</dbReference>
<dbReference type="PDB" id="7RM4">
    <property type="method" value="X-ray"/>
    <property type="resolution" value="3.33 A"/>
    <property type="chains" value="A/F/K/P=25-299"/>
</dbReference>
<dbReference type="PDB" id="7RRG">
    <property type="method" value="X-ray"/>
    <property type="resolution" value="2.12 A"/>
    <property type="chains" value="A=25-298"/>
</dbReference>
<dbReference type="PDB" id="7STF">
    <property type="method" value="EM"/>
    <property type="resolution" value="3.14 A"/>
    <property type="chains" value="A=25-304"/>
</dbReference>
<dbReference type="PDB" id="7UC5">
    <property type="method" value="X-ray"/>
    <property type="resolution" value="1.95 A"/>
    <property type="chains" value="A/D=25-301"/>
</dbReference>
<dbReference type="PDB" id="7UX3">
    <property type="method" value="EM"/>
    <property type="resolution" value="9.60 A"/>
    <property type="chains" value="Y=334-365"/>
</dbReference>
<dbReference type="PDB" id="8D4C">
    <property type="method" value="EM"/>
    <property type="resolution" value="9.30 A"/>
    <property type="chains" value="P/Y=334-365"/>
</dbReference>
<dbReference type="PDB" id="8D4D">
    <property type="method" value="EM"/>
    <property type="resolution" value="9.60 A"/>
    <property type="chains" value="P/Y=334-365"/>
</dbReference>
<dbReference type="PDB" id="8D4E">
    <property type="method" value="EM"/>
    <property type="resolution" value="9.20 A"/>
    <property type="chains" value="Y=334-365"/>
</dbReference>
<dbReference type="PDB" id="8D4F">
    <property type="method" value="EM"/>
    <property type="resolution" value="9.80 A"/>
    <property type="chains" value="P/Y=334-365"/>
</dbReference>
<dbReference type="PDB" id="8D4G">
    <property type="method" value="EM"/>
    <property type="resolution" value="11.60 A"/>
    <property type="chains" value="P/Y=334-365"/>
</dbReference>
<dbReference type="PDB" id="8D9R">
    <property type="method" value="EM"/>
    <property type="resolution" value="20.00 A"/>
    <property type="chains" value="0/1/2/Y/y/z=334-365"/>
</dbReference>
<dbReference type="PDB" id="8D9S">
    <property type="method" value="EM"/>
    <property type="resolution" value="20.00 A"/>
    <property type="chains" value="0/1/2/Y/y/z=334-365"/>
</dbReference>
<dbReference type="PDB" id="8D9T">
    <property type="method" value="EM"/>
    <property type="resolution" value="20.00 A"/>
    <property type="chains" value="0/1/Y/x/y/z=334-365"/>
</dbReference>
<dbReference type="PDB" id="8D9U">
    <property type="method" value="EM"/>
    <property type="resolution" value="20.00 A"/>
    <property type="chains" value="0/1/Y/x/y/z=334-365"/>
</dbReference>
<dbReference type="PDB" id="8D9V">
    <property type="method" value="EM"/>
    <property type="resolution" value="9.40 A"/>
    <property type="chains" value="P/Y=334-365"/>
</dbReference>
<dbReference type="PDB" id="8D9W">
    <property type="method" value="EM"/>
    <property type="resolution" value="9.30 A"/>
    <property type="chains" value="Y/j=334-365"/>
</dbReference>
<dbReference type="PDB" id="8DVG">
    <property type="method" value="X-ray"/>
    <property type="resolution" value="2.59 A"/>
    <property type="chains" value="A=25-304"/>
</dbReference>
<dbReference type="PDB" id="8K4T">
    <property type="method" value="X-ray"/>
    <property type="resolution" value="2.30 A"/>
    <property type="chains" value="A/D=25-299"/>
</dbReference>
<dbReference type="PDB" id="8K4V">
    <property type="method" value="X-ray"/>
    <property type="resolution" value="3.10 A"/>
    <property type="chains" value="A/D/G/J=25-299"/>
</dbReference>
<dbReference type="PDB" id="8K50">
    <property type="method" value="X-ray"/>
    <property type="resolution" value="2.80 A"/>
    <property type="chains" value="A/D/G/J=25-299"/>
</dbReference>
<dbReference type="PDB" id="8RNI">
    <property type="method" value="X-ray"/>
    <property type="resolution" value="2.49 A"/>
    <property type="chains" value="A=25-301"/>
</dbReference>
<dbReference type="PDB" id="8RRO">
    <property type="method" value="X-ray"/>
    <property type="resolution" value="3.50 A"/>
    <property type="chains" value="C/H/M/R/W/b/g/l=25-302"/>
</dbReference>
<dbReference type="PDB" id="8RYM">
    <property type="method" value="X-ray"/>
    <property type="resolution" value="2.34 A"/>
    <property type="chains" value="A=25-299"/>
</dbReference>
<dbReference type="PDB" id="8RYO">
    <property type="method" value="X-ray"/>
    <property type="resolution" value="2.05 A"/>
    <property type="chains" value="A=25-299"/>
</dbReference>
<dbReference type="PDB" id="8RYP">
    <property type="method" value="X-ray"/>
    <property type="resolution" value="1.81 A"/>
    <property type="chains" value="A=25-299"/>
</dbReference>
<dbReference type="PDB" id="8UDR">
    <property type="method" value="EM"/>
    <property type="resolution" value="3.10 A"/>
    <property type="chains" value="A=25-299"/>
</dbReference>
<dbReference type="PDB" id="8VCL">
    <property type="method" value="X-ray"/>
    <property type="resolution" value="2.40 A"/>
    <property type="chains" value="A=25-298"/>
</dbReference>
<dbReference type="PDB" id="8VJZ">
    <property type="method" value="X-ray"/>
    <property type="resolution" value="1.90 A"/>
    <property type="chains" value="A=25-301"/>
</dbReference>
<dbReference type="PDB" id="8VR9">
    <property type="method" value="EM"/>
    <property type="resolution" value="3.06 A"/>
    <property type="chains" value="A=25-299"/>
</dbReference>
<dbReference type="PDB" id="8VRA">
    <property type="method" value="EM"/>
    <property type="resolution" value="3.12 A"/>
    <property type="chains" value="A=25-299"/>
</dbReference>
<dbReference type="PDB" id="9ASF">
    <property type="method" value="X-ray"/>
    <property type="resolution" value="1.77 A"/>
    <property type="chains" value="A=25-298"/>
</dbReference>
<dbReference type="PDB" id="9ASG">
    <property type="method" value="X-ray"/>
    <property type="resolution" value="2.03 A"/>
    <property type="chains" value="A=25-298"/>
</dbReference>
<dbReference type="PDBsum" id="1AKJ"/>
<dbReference type="PDBsum" id="1AO7"/>
<dbReference type="PDBsum" id="1AQD"/>
<dbReference type="PDBsum" id="1B0G"/>
<dbReference type="PDBsum" id="1B0R"/>
<dbReference type="PDBsum" id="1BD2"/>
<dbReference type="PDBsum" id="1DUY"/>
<dbReference type="PDBsum" id="1DUZ"/>
<dbReference type="PDBsum" id="1EEY"/>
<dbReference type="PDBsum" id="1EEZ"/>
<dbReference type="PDBsum" id="1HHG"/>
<dbReference type="PDBsum" id="1HHH"/>
<dbReference type="PDBsum" id="1HHI"/>
<dbReference type="PDBsum" id="1HHJ"/>
<dbReference type="PDBsum" id="1HHK"/>
<dbReference type="PDBsum" id="1HLA"/>
<dbReference type="PDBsum" id="1HSB"/>
<dbReference type="PDBsum" id="1I1F"/>
<dbReference type="PDBsum" id="1I1Y"/>
<dbReference type="PDBsum" id="1I4F"/>
<dbReference type="PDBsum" id="1I7R"/>
<dbReference type="PDBsum" id="1I7T"/>
<dbReference type="PDBsum" id="1I7U"/>
<dbReference type="PDBsum" id="1IM3"/>
<dbReference type="PDBsum" id="1JF1"/>
<dbReference type="PDBsum" id="1JHT"/>
<dbReference type="PDBsum" id="1LP9"/>
<dbReference type="PDBsum" id="1OGA"/>
<dbReference type="PDBsum" id="1P7Q"/>
<dbReference type="PDBsum" id="1Q94"/>
<dbReference type="PDBsum" id="1QEW"/>
<dbReference type="PDBsum" id="1QR1"/>
<dbReference type="PDBsum" id="1QRN"/>
<dbReference type="PDBsum" id="1QSE"/>
<dbReference type="PDBsum" id="1QSF"/>
<dbReference type="PDBsum" id="1QVO"/>
<dbReference type="PDBsum" id="1S8D"/>
<dbReference type="PDBsum" id="1S9W"/>
<dbReference type="PDBsum" id="1S9X"/>
<dbReference type="PDBsum" id="1S9Y"/>
<dbReference type="PDBsum" id="1T1W"/>
<dbReference type="PDBsum" id="1T1X"/>
<dbReference type="PDBsum" id="1T1Y"/>
<dbReference type="PDBsum" id="1T1Z"/>
<dbReference type="PDBsum" id="1T20"/>
<dbReference type="PDBsum" id="1T21"/>
<dbReference type="PDBsum" id="1T22"/>
<dbReference type="PDBsum" id="1TMC"/>
<dbReference type="PDBsum" id="1TVB"/>
<dbReference type="PDBsum" id="1TVH"/>
<dbReference type="PDBsum" id="1W72"/>
<dbReference type="PDBsum" id="1X7Q"/>
<dbReference type="PDBsum" id="2AV1"/>
<dbReference type="PDBsum" id="2AV7"/>
<dbReference type="PDBsum" id="2BCK"/>
<dbReference type="PDBsum" id="2BNQ"/>
<dbReference type="PDBsum" id="2BNR"/>
<dbReference type="PDBsum" id="2C7U"/>
<dbReference type="PDBsum" id="2CLR"/>
<dbReference type="PDBsum" id="2F53"/>
<dbReference type="PDBsum" id="2F54"/>
<dbReference type="PDBsum" id="2GIT"/>
<dbReference type="PDBsum" id="2GJ6"/>
<dbReference type="PDBsum" id="2GT9"/>
<dbReference type="PDBsum" id="2GTW"/>
<dbReference type="PDBsum" id="2GTZ"/>
<dbReference type="PDBsum" id="2GUO"/>
<dbReference type="PDBsum" id="2HLA"/>
<dbReference type="PDBsum" id="2HN7"/>
<dbReference type="PDBsum" id="2J8U"/>
<dbReference type="PDBsum" id="2JCC"/>
<dbReference type="PDBsum" id="2P5E"/>
<dbReference type="PDBsum" id="2P5W"/>
<dbReference type="PDBsum" id="2PYE"/>
<dbReference type="PDBsum" id="2UWE"/>
<dbReference type="PDBsum" id="2V2W"/>
<dbReference type="PDBsum" id="2V2X"/>
<dbReference type="PDBsum" id="2VLJ"/>
<dbReference type="PDBsum" id="2VLK"/>
<dbReference type="PDBsum" id="2VLL"/>
<dbReference type="PDBsum" id="2VLR"/>
<dbReference type="PDBsum" id="2X4N"/>
<dbReference type="PDBsum" id="2X4O"/>
<dbReference type="PDBsum" id="2X4P"/>
<dbReference type="PDBsum" id="2X4Q"/>
<dbReference type="PDBsum" id="2X4R"/>
<dbReference type="PDBsum" id="2X4S"/>
<dbReference type="PDBsum" id="2X4T"/>
<dbReference type="PDBsum" id="2X4U"/>
<dbReference type="PDBsum" id="2X70"/>
<dbReference type="PDBsum" id="2XPG"/>
<dbReference type="PDBsum" id="3BGM"/>
<dbReference type="PDBsum" id="3BH8"/>
<dbReference type="PDBsum" id="3BH9"/>
<dbReference type="PDBsum" id="3BHB"/>
<dbReference type="PDBsum" id="3BO8"/>
<dbReference type="PDBsum" id="3D25"/>
<dbReference type="PDBsum" id="3D39"/>
<dbReference type="PDBsum" id="3D3V"/>
<dbReference type="PDBsum" id="3FQN"/>
<dbReference type="PDBsum" id="3FQR"/>
<dbReference type="PDBsum" id="3FQT"/>
<dbReference type="PDBsum" id="3FQU"/>
<dbReference type="PDBsum" id="3FQW"/>
<dbReference type="PDBsum" id="3FQX"/>
<dbReference type="PDBsum" id="3FT2"/>
<dbReference type="PDBsum" id="3FT3"/>
<dbReference type="PDBsum" id="3FT4"/>
<dbReference type="PDBsum" id="3GIV"/>
<dbReference type="PDBsum" id="3GJF"/>
<dbReference type="PDBsum" id="3GSN"/>
<dbReference type="PDBsum" id="3GSO"/>
<dbReference type="PDBsum" id="3GSQ"/>
<dbReference type="PDBsum" id="3GSR"/>
<dbReference type="PDBsum" id="3GSU"/>
<dbReference type="PDBsum" id="3GSV"/>
<dbReference type="PDBsum" id="3GSW"/>
<dbReference type="PDBsum" id="3GSX"/>
<dbReference type="PDBsum" id="3H7B"/>
<dbReference type="PDBsum" id="3H9H"/>
<dbReference type="PDBsum" id="3H9S"/>
<dbReference type="PDBsum" id="3HAE"/>
<dbReference type="PDBsum" id="3HLA"/>
<dbReference type="PDBsum" id="3HPJ"/>
<dbReference type="PDBsum" id="3I6G"/>
<dbReference type="PDBsum" id="3I6K"/>
<dbReference type="PDBsum" id="3I6L"/>
<dbReference type="PDBsum" id="3IXA"/>
<dbReference type="PDBsum" id="3KLA"/>
<dbReference type="PDBsum" id="3MGO"/>
<dbReference type="PDBsum" id="3MGT"/>
<dbReference type="PDBsum" id="3MR9"/>
<dbReference type="PDBsum" id="3MRB"/>
<dbReference type="PDBsum" id="3MRC"/>
<dbReference type="PDBsum" id="3MRD"/>
<dbReference type="PDBsum" id="3MRE"/>
<dbReference type="PDBsum" id="3MRF"/>
<dbReference type="PDBsum" id="3MRG"/>
<dbReference type="PDBsum" id="3MRH"/>
<dbReference type="PDBsum" id="3MRI"/>
<dbReference type="PDBsum" id="3MRJ"/>
<dbReference type="PDBsum" id="3MRK"/>
<dbReference type="PDBsum" id="3MRL"/>
<dbReference type="PDBsum" id="3MRM"/>
<dbReference type="PDBsum" id="3MRN"/>
<dbReference type="PDBsum" id="3MRO"/>
<dbReference type="PDBsum" id="3MRP"/>
<dbReference type="PDBsum" id="3MRQ"/>
<dbReference type="PDBsum" id="3MRR"/>
<dbReference type="PDBsum" id="3MYJ"/>
<dbReference type="PDBsum" id="3NFN"/>
<dbReference type="PDBsum" id="3O3A"/>
<dbReference type="PDBsum" id="3O3B"/>
<dbReference type="PDBsum" id="3O3D"/>
<dbReference type="PDBsum" id="3O3E"/>
<dbReference type="PDBsum" id="3O4L"/>
<dbReference type="PDBsum" id="3PWJ"/>
<dbReference type="PDBsum" id="3PWL"/>
<dbReference type="PDBsum" id="3PWN"/>
<dbReference type="PDBsum" id="3PWP"/>
<dbReference type="PDBsum" id="3QDG"/>
<dbReference type="PDBsum" id="3QDJ"/>
<dbReference type="PDBsum" id="3QDM"/>
<dbReference type="PDBsum" id="3QEQ"/>
<dbReference type="PDBsum" id="3QFD"/>
<dbReference type="PDBsum" id="3QFJ"/>
<dbReference type="PDBsum" id="3QZW"/>
<dbReference type="PDBsum" id="3REW"/>
<dbReference type="PDBsum" id="3RL1"/>
<dbReference type="PDBsum" id="3RL2"/>
<dbReference type="PDBsum" id="3TO2"/>
<dbReference type="PDBsum" id="3UTQ"/>
<dbReference type="PDBsum" id="3UTS"/>
<dbReference type="PDBsum" id="3UTT"/>
<dbReference type="PDBsum" id="3V5D"/>
<dbReference type="PDBsum" id="3V5H"/>
<dbReference type="PDBsum" id="3V5K"/>
<dbReference type="PDBsum" id="3VXM"/>
<dbReference type="PDBsum" id="3VXN"/>
<dbReference type="PDBsum" id="3VXO"/>
<dbReference type="PDBsum" id="3VXP"/>
<dbReference type="PDBsum" id="3VXR"/>
<dbReference type="PDBsum" id="3VXS"/>
<dbReference type="PDBsum" id="3VXU"/>
<dbReference type="PDBsum" id="3W0W"/>
<dbReference type="PDBsum" id="3WL9"/>
<dbReference type="PDBsum" id="3WLB"/>
<dbReference type="PDBsum" id="4E5X"/>
<dbReference type="PDBsum" id="4EMZ"/>
<dbReference type="PDBsum" id="4EN2"/>
<dbReference type="PDBsum" id="4EUP"/>
<dbReference type="PDBsum" id="4F7M"/>
<dbReference type="PDBsum" id="4F7P"/>
<dbReference type="PDBsum" id="4F7T"/>
<dbReference type="PDBsum" id="4FTV"/>
<dbReference type="PDBsum" id="4GKN"/>
<dbReference type="PDBsum" id="4GKS"/>
<dbReference type="PDBsum" id="4HWZ"/>
<dbReference type="PDBsum" id="4HX1"/>
<dbReference type="PDBsum" id="4I48"/>
<dbReference type="PDBsum" id="4I4W"/>
<dbReference type="PDBsum" id="4JFD"/>
<dbReference type="PDBsum" id="4JFE"/>
<dbReference type="PDBsum" id="4JFF"/>
<dbReference type="PDBsum" id="4JFO"/>
<dbReference type="PDBsum" id="4JFP"/>
<dbReference type="PDBsum" id="4JFQ"/>
<dbReference type="PDBsum" id="4K7F"/>
<dbReference type="PDBsum" id="4L29"/>
<dbReference type="PDBsum" id="4L3C"/>
<dbReference type="PDBsum" id="4L3E"/>
<dbReference type="PDBsum" id="4MJ5"/>
<dbReference type="PDBsum" id="4MJ6"/>
<dbReference type="PDBsum" id="4MNQ"/>
<dbReference type="PDBsum" id="4N8V"/>
<dbReference type="PDBsum" id="4NNX"/>
<dbReference type="PDBsum" id="4NNY"/>
<dbReference type="PDBsum" id="4NO0"/>
<dbReference type="PDBsum" id="4NO2"/>
<dbReference type="PDBsum" id="4NO3"/>
<dbReference type="PDBsum" id="4NO5"/>
<dbReference type="PDBsum" id="4NQV"/>
<dbReference type="PDBsum" id="4NQX"/>
<dbReference type="PDBsum" id="4OV5"/>
<dbReference type="PDBsum" id="4QOK"/>
<dbReference type="PDBsum" id="4U6X"/>
<dbReference type="PDBsum" id="4U6Y"/>
<dbReference type="PDBsum" id="4UQ2"/>
<dbReference type="PDBsum" id="4UQ3"/>
<dbReference type="PDBsum" id="4WJ5"/>
<dbReference type="PDBsum" id="4WU5"/>
<dbReference type="PDBsum" id="4WU7"/>
<dbReference type="PDBsum" id="4WUU"/>
<dbReference type="PDBsum" id="5BRZ"/>
<dbReference type="PDBsum" id="5BS0"/>
<dbReference type="PDBsum" id="5C07"/>
<dbReference type="PDBsum" id="5C08"/>
<dbReference type="PDBsum" id="5C09"/>
<dbReference type="PDBsum" id="5C0A"/>
<dbReference type="PDBsum" id="5C0B"/>
<dbReference type="PDBsum" id="5C0C"/>
<dbReference type="PDBsum" id="5C0D"/>
<dbReference type="PDBsum" id="5C0E"/>
<dbReference type="PDBsum" id="5C0F"/>
<dbReference type="PDBsum" id="5C0G"/>
<dbReference type="PDBsum" id="5C0I"/>
<dbReference type="PDBsum" id="5C0J"/>
<dbReference type="PDBsum" id="5D2L"/>
<dbReference type="PDBsum" id="5D2N"/>
<dbReference type="PDBsum" id="5D9S"/>
<dbReference type="PDBsum" id="5DDH"/>
<dbReference type="PDBsum" id="5E00"/>
<dbReference type="PDBsum" id="5E6I"/>
<dbReference type="PDBsum" id="5E9D"/>
<dbReference type="PDBsum" id="5ENW"/>
<dbReference type="PDBsum" id="5EOT"/>
<dbReference type="PDBsum" id="5EU3"/>
<dbReference type="PDBsum" id="5EU4"/>
<dbReference type="PDBsum" id="5EU5"/>
<dbReference type="PDBsum" id="5EU6"/>
<dbReference type="PDBsum" id="5EUO"/>
<dbReference type="PDBsum" id="5F7D"/>
<dbReference type="PDBsum" id="5F9J"/>
<dbReference type="PDBsum" id="5FA3"/>
<dbReference type="PDBsum" id="5FA4"/>
<dbReference type="PDBsum" id="5FDW"/>
<dbReference type="PDBsum" id="5GRD"/>
<dbReference type="PDBsum" id="5GRG"/>
<dbReference type="PDBsum" id="5GSD"/>
<dbReference type="PDBsum" id="5HGA"/>
<dbReference type="PDBsum" id="5HGB"/>
<dbReference type="PDBsum" id="5HGD"/>
<dbReference type="PDBsum" id="5HGH"/>
<dbReference type="PDBsum" id="5HHM"/>
<dbReference type="PDBsum" id="5HHN"/>
<dbReference type="PDBsum" id="5HHO"/>
<dbReference type="PDBsum" id="5HHP"/>
<dbReference type="PDBsum" id="5HHQ"/>
<dbReference type="PDBsum" id="5HYJ"/>
<dbReference type="PDBsum" id="5IRO"/>
<dbReference type="PDBsum" id="5ISZ"/>
<dbReference type="PDBsum" id="5JHD"/>
<dbReference type="PDBsum" id="5JZI"/>
<dbReference type="PDBsum" id="5MEN"/>
<dbReference type="PDBsum" id="5MEO"/>
<dbReference type="PDBsum" id="5MEP"/>
<dbReference type="PDBsum" id="5MEQ"/>
<dbReference type="PDBsum" id="5MER"/>
<dbReference type="PDBsum" id="5N1Y"/>
<dbReference type="PDBsum" id="5N6B"/>
<dbReference type="PDBsum" id="5NHT"/>
<dbReference type="PDBsum" id="5NME"/>
<dbReference type="PDBsum" id="5NMF"/>
<dbReference type="PDBsum" id="5NMG"/>
<dbReference type="PDBsum" id="5NMH"/>
<dbReference type="PDBsum" id="5NMK"/>
<dbReference type="PDBsum" id="5NQK"/>
<dbReference type="PDBsum" id="5SWQ"/>
<dbReference type="PDBsum" id="5TEZ"/>
<dbReference type="PDBsum" id="5W1W"/>
<dbReference type="PDBsum" id="5WJL"/>
<dbReference type="PDBsum" id="5WJN"/>
<dbReference type="PDBsum" id="5WKF"/>
<dbReference type="PDBsum" id="5WKH"/>
<dbReference type="PDBsum" id="5WSH"/>
<dbReference type="PDBsum" id="5WWI"/>
<dbReference type="PDBsum" id="5WWJ"/>
<dbReference type="PDBsum" id="5WWU"/>
<dbReference type="PDBsum" id="5WXC"/>
<dbReference type="PDBsum" id="5WXD"/>
<dbReference type="PDBsum" id="5XOV"/>
<dbReference type="PDBsum" id="5YXN"/>
<dbReference type="PDBsum" id="5YXU"/>
<dbReference type="PDBsum" id="6AM5"/>
<dbReference type="PDBsum" id="6AMT"/>
<dbReference type="PDBsum" id="6AMU"/>
<dbReference type="PDBsum" id="6APN"/>
<dbReference type="PDBsum" id="6AT9"/>
<dbReference type="PDBsum" id="6D78"/>
<dbReference type="PDBsum" id="6D7G"/>
<dbReference type="PDBsum" id="6DKP"/>
<dbReference type="PDBsum" id="6EI2"/>
<dbReference type="PDBsum" id="6ENY"/>
<dbReference type="PDBsum" id="6EQA"/>
<dbReference type="PDBsum" id="6EQB"/>
<dbReference type="PDBsum" id="6EWA"/>
<dbReference type="PDBsum" id="6EWC"/>
<dbReference type="PDBsum" id="6EWO"/>
<dbReference type="PDBsum" id="6G3J"/>
<dbReference type="PDBsum" id="6G3K"/>
<dbReference type="PDBsum" id="6ID4"/>
<dbReference type="PDBsum" id="6J1W"/>
<dbReference type="PDBsum" id="6J29"/>
<dbReference type="PDBsum" id="6J2A"/>
<dbReference type="PDBsum" id="6JOZ"/>
<dbReference type="PDBsum" id="6JP3"/>
<dbReference type="PDBsum" id="6MPP"/>
<dbReference type="PDBsum" id="6NCA"/>
<dbReference type="PDBsum" id="6O9B"/>
<dbReference type="PDBsum" id="6O9C"/>
<dbReference type="PDBsum" id="6OPD"/>
<dbReference type="PDBsum" id="6PBH"/>
<dbReference type="PDBsum" id="6PTB"/>
<dbReference type="PDBsum" id="6PTE"/>
<dbReference type="PDBsum" id="6Q3K"/>
<dbReference type="PDBsum" id="6Q3S"/>
<dbReference type="PDBsum" id="6R2L"/>
<dbReference type="PDBsum" id="6RP9"/>
<dbReference type="PDBsum" id="6RPA"/>
<dbReference type="PDBsum" id="6RPB"/>
<dbReference type="PDBsum" id="6RSY"/>
<dbReference type="PDBsum" id="6SS7"/>
<dbReference type="PDBsum" id="6SS8"/>
<dbReference type="PDBsum" id="6SS9"/>
<dbReference type="PDBsum" id="6SSA"/>
<dbReference type="PDBsum" id="7L1B"/>
<dbReference type="PDBsum" id="7L1C"/>
<dbReference type="PDBsum" id="7L1D"/>
<dbReference type="PDBsum" id="7MLE"/>
<dbReference type="PDBsum" id="7PHR"/>
<dbReference type="PDBsum" id="7QPD"/>
<dbReference type="PDBsum" id="7RK7"/>
<dbReference type="PDBsum" id="7RM4"/>
<dbReference type="PDBsum" id="7RRG"/>
<dbReference type="PDBsum" id="7STF"/>
<dbReference type="PDBsum" id="7UC5"/>
<dbReference type="PDBsum" id="7UX3"/>
<dbReference type="PDBsum" id="8D4C"/>
<dbReference type="PDBsum" id="8D4D"/>
<dbReference type="PDBsum" id="8D4E"/>
<dbReference type="PDBsum" id="8D4F"/>
<dbReference type="PDBsum" id="8D4G"/>
<dbReference type="PDBsum" id="8D9R"/>
<dbReference type="PDBsum" id="8D9S"/>
<dbReference type="PDBsum" id="8D9T"/>
<dbReference type="PDBsum" id="8D9U"/>
<dbReference type="PDBsum" id="8D9V"/>
<dbReference type="PDBsum" id="8D9W"/>
<dbReference type="PDBsum" id="8DVG"/>
<dbReference type="PDBsum" id="8K4T"/>
<dbReference type="PDBsum" id="8K4V"/>
<dbReference type="PDBsum" id="8K50"/>
<dbReference type="PDBsum" id="8RNI"/>
<dbReference type="PDBsum" id="8RRO"/>
<dbReference type="PDBsum" id="8RYM"/>
<dbReference type="PDBsum" id="8RYO"/>
<dbReference type="PDBsum" id="8RYP"/>
<dbReference type="PDBsum" id="8UDR"/>
<dbReference type="PDBsum" id="8VCL"/>
<dbReference type="PDBsum" id="8VJZ"/>
<dbReference type="PDBsum" id="8VR9"/>
<dbReference type="PDBsum" id="8VRA"/>
<dbReference type="PDBsum" id="9ASF"/>
<dbReference type="PDBsum" id="9ASG"/>
<dbReference type="EMDB" id="EMD-13427"/>
<dbReference type="EMDB" id="EMD-14119"/>
<dbReference type="EMDB" id="EMD-25427"/>
<dbReference type="EMDB" id="EMD-26853"/>
<dbReference type="EMDB" id="EMD-27181"/>
<dbReference type="EMDB" id="EMD-27182"/>
<dbReference type="EMDB" id="EMD-27183"/>
<dbReference type="EMDB" id="EMD-27184"/>
<dbReference type="EMDB" id="EMD-27185"/>
<dbReference type="EMDB" id="EMD-3906"/>
<dbReference type="EMDB" id="EMD-42151"/>
<dbReference type="EMDB" id="EMD-43478"/>
<dbReference type="EMDB" id="EMD-43479"/>
<dbReference type="SMR" id="P04439"/>
<dbReference type="BioGRID" id="109350">
    <property type="interactions" value="415"/>
</dbReference>
<dbReference type="FunCoup" id="P04439">
    <property type="interactions" value="888"/>
</dbReference>
<dbReference type="IntAct" id="P04439">
    <property type="interactions" value="192"/>
</dbReference>
<dbReference type="MINT" id="P04439"/>
<dbReference type="STRING" id="9606.ENSP00000379873"/>
<dbReference type="BindingDB" id="P04439"/>
<dbReference type="ChEMBL" id="CHEMBL2632"/>
<dbReference type="DrugBank" id="DB11294">
    <property type="generic name" value="Coccidioides immitis spherule"/>
</dbReference>
<dbReference type="DrugBank" id="DB06226">
    <property type="generic name" value="Nelipepimut-S"/>
</dbReference>
<dbReference type="DrugCentral" id="P04439"/>
<dbReference type="TCDB" id="9.A.75.1.2">
    <property type="family name" value="the mhc ii receptor (mhc2r) family"/>
</dbReference>
<dbReference type="TCDB" id="9.A.75.1.3">
    <property type="family name" value="the mhc ii receptor (mhc2r) family"/>
</dbReference>
<dbReference type="GlyConnect" id="1315">
    <property type="glycosylation" value="3 N-Linked glycans (1 site)"/>
</dbReference>
<dbReference type="GlyConnect" id="1316">
    <property type="glycosylation" value="3 N-Linked glycans (1 site)"/>
</dbReference>
<dbReference type="GlyConnect" id="1317">
    <property type="glycosylation" value="4 N-Linked glycans (1 site)"/>
</dbReference>
<dbReference type="GlyConnect" id="1318">
    <property type="glycosylation" value="1 N-Linked glycan (1 site)"/>
</dbReference>
<dbReference type="GlyConnect" id="1319">
    <property type="glycosylation" value="3 N-Linked glycans (1 site)"/>
</dbReference>
<dbReference type="GlyConnect" id="1320">
    <property type="glycosylation" value="3 N-Linked glycans (1 site)"/>
</dbReference>
<dbReference type="GlyConnect" id="1321">
    <property type="glycosylation" value="1 N-Linked glycan (1 site)"/>
</dbReference>
<dbReference type="GlyConnect" id="1322">
    <property type="glycosylation" value="1 N-Linked glycan (1 site)"/>
</dbReference>
<dbReference type="GlyConnect" id="1323">
    <property type="glycosylation" value="4 N-Linked glycans (1 site)"/>
</dbReference>
<dbReference type="GlyConnect" id="1324">
    <property type="glycosylation" value="3 N-Linked glycans (1 site)"/>
</dbReference>
<dbReference type="GlyConnect" id="1325">
    <property type="glycosylation" value="4 N-Linked glycans (1 site)"/>
</dbReference>
<dbReference type="GlyConnect" id="1326">
    <property type="glycosylation" value="4 N-Linked glycans (1 site)"/>
</dbReference>
<dbReference type="GlyConnect" id="1327">
    <property type="glycosylation" value="1 N-Linked glycan (1 site)"/>
</dbReference>
<dbReference type="GlyConnect" id="1328">
    <property type="glycosylation" value="3 N-Linked glycans (1 site)"/>
</dbReference>
<dbReference type="GlyConnect" id="1329">
    <property type="glycosylation" value="1 N-Linked glycan (1 site)"/>
</dbReference>
<dbReference type="GlyCosmos" id="P04439">
    <property type="glycosylation" value="2 sites, 3 glycans"/>
</dbReference>
<dbReference type="GlyGen" id="P04439">
    <property type="glycosylation" value="3 sites, 27 N-linked glycans (1 site), 1 O-linked glycan (2 sites)"/>
</dbReference>
<dbReference type="iPTMnet" id="P04439"/>
<dbReference type="PhosphoSitePlus" id="P04439"/>
<dbReference type="SwissPalm" id="P04439"/>
<dbReference type="BioMuta" id="HLA-A"/>
<dbReference type="DMDM" id="13124681"/>
<dbReference type="jPOST" id="P04439"/>
<dbReference type="MassIVE" id="P04439"/>
<dbReference type="PaxDb" id="9606-ENSP00000379873"/>
<dbReference type="PeptideAtlas" id="P04439"/>
<dbReference type="ProteomicsDB" id="51505"/>
<dbReference type="ProteomicsDB" id="51506"/>
<dbReference type="ProteomicsDB" id="51714"/>
<dbReference type="ProteomicsDB" id="51843"/>
<dbReference type="ProteomicsDB" id="52596"/>
<dbReference type="ProteomicsDB" id="52597"/>
<dbReference type="ProteomicsDB" id="52979"/>
<dbReference type="ProteomicsDB" id="52980"/>
<dbReference type="ProteomicsDB" id="53320"/>
<dbReference type="ProteomicsDB" id="53321"/>
<dbReference type="ProteomicsDB" id="53322"/>
<dbReference type="ProteomicsDB" id="53564"/>
<dbReference type="ProteomicsDB" id="54669"/>
<dbReference type="ProteomicsDB" id="54670"/>
<dbReference type="ProteomicsDB" id="54671"/>
<dbReference type="ProteomicsDB" id="54672"/>
<dbReference type="ProteomicsDB" id="54673"/>
<dbReference type="ProteomicsDB" id="54674"/>
<dbReference type="ProteomicsDB" id="54675"/>
<dbReference type="ProteomicsDB" id="54676"/>
<dbReference type="ProteomicsDB" id="54707"/>
<dbReference type="ProteomicsDB" id="58716"/>
<dbReference type="Pumba" id="P04439"/>
<dbReference type="ABCD" id="P04439">
    <property type="antibodies" value="62 sequenced antibodies"/>
</dbReference>
<dbReference type="Antibodypedia" id="26136">
    <property type="antibodies" value="1484 antibodies from 32 providers"/>
</dbReference>
<dbReference type="CPTC" id="P04439">
    <property type="antibodies" value="1 antibody"/>
</dbReference>
<dbReference type="DNASU" id="3105"/>
<dbReference type="Ensembl" id="ENST00000376809.10">
    <molecule id="P04439-1"/>
    <property type="protein sequence ID" value="ENSP00000366005.5"/>
    <property type="gene ID" value="ENSG00000206503.15"/>
</dbReference>
<dbReference type="Ensembl" id="ENST00000396634.5">
    <molecule id="P04439-1"/>
    <property type="protein sequence ID" value="ENSP00000379873.1"/>
    <property type="gene ID" value="ENSG00000206503.15"/>
</dbReference>
<dbReference type="Ensembl" id="ENST00000706901.1">
    <molecule id="P04439-1"/>
    <property type="protein sequence ID" value="ENSP00000516612.1"/>
    <property type="gene ID" value="ENSG00000206503.15"/>
</dbReference>
<dbReference type="Ensembl" id="ENST00000706903.1">
    <molecule id="P04439-1"/>
    <property type="protein sequence ID" value="ENSP00000516614.1"/>
    <property type="gene ID" value="ENSG00000206503.15"/>
</dbReference>
<dbReference type="Ensembl" id="ENST00000706905.1">
    <molecule id="P04439-1"/>
    <property type="protein sequence ID" value="ENSP00000516616.1"/>
    <property type="gene ID" value="ENSG00000206503.15"/>
</dbReference>
<dbReference type="GeneID" id="3105"/>
<dbReference type="KEGG" id="hsa:3105"/>
<dbReference type="MANE-Select" id="ENST00000376809.10">
    <property type="protein sequence ID" value="ENSP00000366005.5"/>
    <property type="RefSeq nucleotide sequence ID" value="NM_002116.8"/>
    <property type="RefSeq protein sequence ID" value="NP_002107.3"/>
</dbReference>
<dbReference type="UCSC" id="uc021zos.2">
    <property type="organism name" value="human"/>
</dbReference>
<dbReference type="AGR" id="HGNC:4931"/>
<dbReference type="CTD" id="3105"/>
<dbReference type="DisGeNET" id="3105"/>
<dbReference type="GeneCards" id="HLA-A"/>
<dbReference type="HGNC" id="HGNC:4931">
    <property type="gene designation" value="HLA-A"/>
</dbReference>
<dbReference type="HPA" id="ENSG00000206503">
    <property type="expression patterns" value="Low tissue specificity"/>
</dbReference>
<dbReference type="MalaCards" id="HLA-A"/>
<dbReference type="MIM" id="126200">
    <property type="type" value="phenotype"/>
</dbReference>
<dbReference type="MIM" id="142800">
    <property type="type" value="gene"/>
</dbReference>
<dbReference type="MIM" id="222100">
    <property type="type" value="phenotype"/>
</dbReference>
<dbReference type="neXtProt" id="NX_P04439"/>
<dbReference type="OpenTargets" id="ENSG00000206503"/>
<dbReference type="Orphanet" id="179">
    <property type="disease" value="Birdshot chorioretinopathy"/>
</dbReference>
<dbReference type="PharmGKB" id="PA35055"/>
<dbReference type="VEuPathDB" id="HostDB:ENSG00000206503"/>
<dbReference type="eggNOG" id="ENOG502RQEK">
    <property type="taxonomic scope" value="Eukaryota"/>
</dbReference>
<dbReference type="GeneTree" id="ENSGT01120000271826"/>
<dbReference type="InParanoid" id="P04439"/>
<dbReference type="OMA" id="GMEFRIC"/>
<dbReference type="OrthoDB" id="9447187at2759"/>
<dbReference type="PhylomeDB" id="P04439"/>
<dbReference type="TreeFam" id="TF336617"/>
<dbReference type="PathwayCommons" id="P04439"/>
<dbReference type="Reactome" id="R-HSA-1236974">
    <property type="pathway name" value="ER-Phagosome pathway"/>
</dbReference>
<dbReference type="Reactome" id="R-HSA-1236977">
    <property type="pathway name" value="Endosomal/Vacuolar pathway"/>
</dbReference>
<dbReference type="Reactome" id="R-HSA-164940">
    <property type="pathway name" value="Nef mediated downregulation of MHC class I complex cell surface expression"/>
</dbReference>
<dbReference type="Reactome" id="R-HSA-198933">
    <property type="pathway name" value="Immunoregulatory interactions between a Lymphoid and a non-Lymphoid cell"/>
</dbReference>
<dbReference type="Reactome" id="R-HSA-877300">
    <property type="pathway name" value="Interferon gamma signaling"/>
</dbReference>
<dbReference type="Reactome" id="R-HSA-8866654">
    <property type="pathway name" value="E3 ubiquitin ligases ubiquitinate target proteins"/>
</dbReference>
<dbReference type="Reactome" id="R-HSA-909733">
    <property type="pathway name" value="Interferon alpha/beta signaling"/>
</dbReference>
<dbReference type="Reactome" id="R-HSA-9705671">
    <property type="pathway name" value="SARS-CoV-2 activates/modulates innate and adaptive immune responses"/>
</dbReference>
<dbReference type="Reactome" id="R-HSA-983170">
    <property type="pathway name" value="Antigen Presentation: Folding, assembly and peptide loading of class I MHC"/>
</dbReference>
<dbReference type="SignaLink" id="P04439"/>
<dbReference type="SIGNOR" id="P04439"/>
<dbReference type="BioGRID-ORCS" id="3105">
    <property type="hits" value="27 hits in 1067 CRISPR screens"/>
</dbReference>
<dbReference type="ChiTaRS" id="HLA-A">
    <property type="organism name" value="human"/>
</dbReference>
<dbReference type="EvolutionaryTrace" id="P04439"/>
<dbReference type="GeneWiki" id="HLA-A"/>
<dbReference type="GenomeRNAi" id="3105"/>
<dbReference type="Pharos" id="P04439">
    <property type="development level" value="Tclin"/>
</dbReference>
<dbReference type="PRO" id="PR:P04439"/>
<dbReference type="Proteomes" id="UP000005640">
    <property type="component" value="Chromosome 6"/>
</dbReference>
<dbReference type="Bgee" id="ENSG00000206503">
    <property type="expression patterns" value="Expressed in blood and 104 other cell types or tissues"/>
</dbReference>
<dbReference type="ExpressionAtlas" id="P04439">
    <property type="expression patterns" value="baseline and differential"/>
</dbReference>
<dbReference type="GO" id="GO:0009986">
    <property type="term" value="C:cell surface"/>
    <property type="evidence" value="ECO:0000314"/>
    <property type="project" value="UniProtKB"/>
</dbReference>
<dbReference type="GO" id="GO:0031901">
    <property type="term" value="C:early endosome membrane"/>
    <property type="evidence" value="ECO:0000304"/>
    <property type="project" value="Reactome"/>
</dbReference>
<dbReference type="GO" id="GO:0005783">
    <property type="term" value="C:endoplasmic reticulum"/>
    <property type="evidence" value="ECO:0000314"/>
    <property type="project" value="UniProtKB"/>
</dbReference>
<dbReference type="GO" id="GO:0070971">
    <property type="term" value="C:endoplasmic reticulum exit site"/>
    <property type="evidence" value="ECO:0000314"/>
    <property type="project" value="UniProtKB"/>
</dbReference>
<dbReference type="GO" id="GO:0005789">
    <property type="term" value="C:endoplasmic reticulum membrane"/>
    <property type="evidence" value="ECO:0000304"/>
    <property type="project" value="Reactome"/>
</dbReference>
<dbReference type="GO" id="GO:0012507">
    <property type="term" value="C:ER to Golgi transport vesicle membrane"/>
    <property type="evidence" value="ECO:0000304"/>
    <property type="project" value="Reactome"/>
</dbReference>
<dbReference type="GO" id="GO:0009897">
    <property type="term" value="C:external side of plasma membrane"/>
    <property type="evidence" value="ECO:0000318"/>
    <property type="project" value="GO_Central"/>
</dbReference>
<dbReference type="GO" id="GO:0070062">
    <property type="term" value="C:extracellular exosome"/>
    <property type="evidence" value="ECO:0007005"/>
    <property type="project" value="UniProtKB"/>
</dbReference>
<dbReference type="GO" id="GO:0005615">
    <property type="term" value="C:extracellular space"/>
    <property type="evidence" value="ECO:0000318"/>
    <property type="project" value="GO_Central"/>
</dbReference>
<dbReference type="GO" id="GO:0005794">
    <property type="term" value="C:Golgi apparatus"/>
    <property type="evidence" value="ECO:0000314"/>
    <property type="project" value="UniProtKB"/>
</dbReference>
<dbReference type="GO" id="GO:0005797">
    <property type="term" value="C:Golgi medial cisterna"/>
    <property type="evidence" value="ECO:0000314"/>
    <property type="project" value="UniProtKB"/>
</dbReference>
<dbReference type="GO" id="GO:0000139">
    <property type="term" value="C:Golgi membrane"/>
    <property type="evidence" value="ECO:0000304"/>
    <property type="project" value="Reactome"/>
</dbReference>
<dbReference type="GO" id="GO:0098553">
    <property type="term" value="C:lumenal side of endoplasmic reticulum membrane"/>
    <property type="evidence" value="ECO:0000304"/>
    <property type="project" value="Reactome"/>
</dbReference>
<dbReference type="GO" id="GO:0016020">
    <property type="term" value="C:membrane"/>
    <property type="evidence" value="ECO:0007005"/>
    <property type="project" value="UniProtKB"/>
</dbReference>
<dbReference type="GO" id="GO:0042824">
    <property type="term" value="C:MHC class I peptide loading complex"/>
    <property type="evidence" value="ECO:0000314"/>
    <property type="project" value="UniProtKB"/>
</dbReference>
<dbReference type="GO" id="GO:0042612">
    <property type="term" value="C:MHC class I protein complex"/>
    <property type="evidence" value="ECO:0000314"/>
    <property type="project" value="UniProtKB"/>
</dbReference>
<dbReference type="GO" id="GO:0030670">
    <property type="term" value="C:phagocytic vesicle membrane"/>
    <property type="evidence" value="ECO:0000304"/>
    <property type="project" value="Reactome"/>
</dbReference>
<dbReference type="GO" id="GO:0005886">
    <property type="term" value="C:plasma membrane"/>
    <property type="evidence" value="ECO:0000314"/>
    <property type="project" value="UniProtKB"/>
</dbReference>
<dbReference type="GO" id="GO:0055038">
    <property type="term" value="C:recycling endosome membrane"/>
    <property type="evidence" value="ECO:0000304"/>
    <property type="project" value="Reactome"/>
</dbReference>
<dbReference type="GO" id="GO:0030881">
    <property type="term" value="F:beta-2-microglobulin binding"/>
    <property type="evidence" value="ECO:0000314"/>
    <property type="project" value="UniProtKB"/>
</dbReference>
<dbReference type="GO" id="GO:0042610">
    <property type="term" value="F:CD8 receptor binding"/>
    <property type="evidence" value="ECO:0000314"/>
    <property type="project" value="UniProtKB"/>
</dbReference>
<dbReference type="GO" id="GO:0042605">
    <property type="term" value="F:peptide antigen binding"/>
    <property type="evidence" value="ECO:0000314"/>
    <property type="project" value="UniProtKB"/>
</dbReference>
<dbReference type="GO" id="GO:0003723">
    <property type="term" value="F:RNA binding"/>
    <property type="evidence" value="ECO:0007005"/>
    <property type="project" value="UniProtKB"/>
</dbReference>
<dbReference type="GO" id="GO:0005102">
    <property type="term" value="F:signaling receptor binding"/>
    <property type="evidence" value="ECO:0000353"/>
    <property type="project" value="BHF-UCL"/>
</dbReference>
<dbReference type="GO" id="GO:0042608">
    <property type="term" value="F:T cell receptor binding"/>
    <property type="evidence" value="ECO:0000314"/>
    <property type="project" value="UniProtKB"/>
</dbReference>
<dbReference type="GO" id="GO:0046977">
    <property type="term" value="F:TAP binding"/>
    <property type="evidence" value="ECO:0000314"/>
    <property type="project" value="UniProtKB"/>
</dbReference>
<dbReference type="GO" id="GO:0062061">
    <property type="term" value="F:TAP complex binding"/>
    <property type="evidence" value="ECO:0000314"/>
    <property type="project" value="UniProtKB"/>
</dbReference>
<dbReference type="GO" id="GO:0019731">
    <property type="term" value="P:antibacterial humoral response"/>
    <property type="evidence" value="ECO:0000314"/>
    <property type="project" value="UniProtKB"/>
</dbReference>
<dbReference type="GO" id="GO:0019885">
    <property type="term" value="P:antigen processing and presentation of endogenous peptide antigen via MHC class I"/>
    <property type="evidence" value="ECO:0000314"/>
    <property type="project" value="UniProtKB"/>
</dbReference>
<dbReference type="GO" id="GO:0002485">
    <property type="term" value="P:antigen processing and presentation of endogenous peptide antigen via MHC class I via ER pathway, TAP-dependent"/>
    <property type="evidence" value="ECO:0000315"/>
    <property type="project" value="UniProtKB"/>
</dbReference>
<dbReference type="GO" id="GO:0002486">
    <property type="term" value="P:antigen processing and presentation of endogenous peptide antigen via MHC class I via ER pathway, TAP-independent"/>
    <property type="evidence" value="ECO:0000314"/>
    <property type="project" value="UniProtKB"/>
</dbReference>
<dbReference type="GO" id="GO:0002476">
    <property type="term" value="P:antigen processing and presentation of endogenous peptide antigen via MHC class Ib"/>
    <property type="evidence" value="ECO:0000318"/>
    <property type="project" value="GO_Central"/>
</dbReference>
<dbReference type="GO" id="GO:0042590">
    <property type="term" value="P:antigen processing and presentation of exogenous peptide antigen via MHC class I"/>
    <property type="evidence" value="ECO:0000314"/>
    <property type="project" value="UniProtKB"/>
</dbReference>
<dbReference type="GO" id="GO:0036037">
    <property type="term" value="P:CD8-positive, alpha-beta T cell activation"/>
    <property type="evidence" value="ECO:0000314"/>
    <property type="project" value="UniProtKB"/>
</dbReference>
<dbReference type="GO" id="GO:0050830">
    <property type="term" value="P:defense response to Gram-positive bacterium"/>
    <property type="evidence" value="ECO:0000314"/>
    <property type="project" value="UniProtKB"/>
</dbReference>
<dbReference type="GO" id="GO:0016045">
    <property type="term" value="P:detection of bacterium"/>
    <property type="evidence" value="ECO:0000315"/>
    <property type="project" value="UniProtKB"/>
</dbReference>
<dbReference type="GO" id="GO:0006955">
    <property type="term" value="P:immune response"/>
    <property type="evidence" value="ECO:0000315"/>
    <property type="project" value="UniProtKB"/>
</dbReference>
<dbReference type="GO" id="GO:0045087">
    <property type="term" value="P:innate immune response"/>
    <property type="evidence" value="ECO:0007669"/>
    <property type="project" value="UniProtKB-KW"/>
</dbReference>
<dbReference type="GO" id="GO:0002502">
    <property type="term" value="P:peptide antigen assembly with MHC class I protein complex"/>
    <property type="evidence" value="ECO:0000314"/>
    <property type="project" value="UniProt"/>
</dbReference>
<dbReference type="GO" id="GO:2001187">
    <property type="term" value="P:positive regulation of CD8-positive, alpha-beta T cell activation"/>
    <property type="evidence" value="ECO:0000314"/>
    <property type="project" value="BHF-UCL"/>
</dbReference>
<dbReference type="GO" id="GO:2000566">
    <property type="term" value="P:positive regulation of CD8-positive, alpha-beta T cell proliferation"/>
    <property type="evidence" value="ECO:0000314"/>
    <property type="project" value="UniProtKB"/>
</dbReference>
<dbReference type="GO" id="GO:2000568">
    <property type="term" value="P:positive regulation of memory T cell activation"/>
    <property type="evidence" value="ECO:0000314"/>
    <property type="project" value="UniProtKB"/>
</dbReference>
<dbReference type="GO" id="GO:0002726">
    <property type="term" value="P:positive regulation of T cell cytokine production"/>
    <property type="evidence" value="ECO:0000314"/>
    <property type="project" value="BHF-UCL"/>
</dbReference>
<dbReference type="GO" id="GO:0001916">
    <property type="term" value="P:positive regulation of T cell mediated cytotoxicity"/>
    <property type="evidence" value="ECO:0000314"/>
    <property type="project" value="UniProtKB"/>
</dbReference>
<dbReference type="GO" id="GO:0032729">
    <property type="term" value="P:positive regulation of type II interferon production"/>
    <property type="evidence" value="ECO:0000314"/>
    <property type="project" value="UniProtKB"/>
</dbReference>
<dbReference type="GO" id="GO:0042270">
    <property type="term" value="P:protection from natural killer cell mediated cytotoxicity"/>
    <property type="evidence" value="ECO:0000314"/>
    <property type="project" value="UniProtKB"/>
</dbReference>
<dbReference type="GO" id="GO:0001913">
    <property type="term" value="P:T cell mediated cytotoxicity"/>
    <property type="evidence" value="ECO:0000314"/>
    <property type="project" value="UniProtKB"/>
</dbReference>
<dbReference type="GO" id="GO:0002419">
    <property type="term" value="P:T cell mediated cytotoxicity directed against tumor cell target"/>
    <property type="evidence" value="ECO:0000314"/>
    <property type="project" value="UniProtKB"/>
</dbReference>
<dbReference type="GO" id="GO:0050852">
    <property type="term" value="P:T cell receptor signaling pathway"/>
    <property type="evidence" value="ECO:0000314"/>
    <property type="project" value="UniProtKB"/>
</dbReference>
<dbReference type="CDD" id="cd21026">
    <property type="entry name" value="IgC1_MHC_Ia_HLA-B"/>
    <property type="match status" value="1"/>
</dbReference>
<dbReference type="FunFam" id="2.60.40.10:FF:000014">
    <property type="entry name" value="H-2 class I histocompatibility antigen, alpha chain"/>
    <property type="match status" value="1"/>
</dbReference>
<dbReference type="FunFam" id="3.30.500.10:FF:000001">
    <property type="entry name" value="H-2 class I histocompatibility antigen, alpha chain"/>
    <property type="match status" value="1"/>
</dbReference>
<dbReference type="Gene3D" id="2.60.40.10">
    <property type="entry name" value="Immunoglobulins"/>
    <property type="match status" value="1"/>
</dbReference>
<dbReference type="Gene3D" id="3.30.500.10">
    <property type="entry name" value="MHC class I-like antigen recognition-like"/>
    <property type="match status" value="1"/>
</dbReference>
<dbReference type="InterPro" id="IPR007110">
    <property type="entry name" value="Ig-like_dom"/>
</dbReference>
<dbReference type="InterPro" id="IPR036179">
    <property type="entry name" value="Ig-like_dom_sf"/>
</dbReference>
<dbReference type="InterPro" id="IPR013783">
    <property type="entry name" value="Ig-like_fold"/>
</dbReference>
<dbReference type="InterPro" id="IPR003006">
    <property type="entry name" value="Ig/MHC_CS"/>
</dbReference>
<dbReference type="InterPro" id="IPR003597">
    <property type="entry name" value="Ig_C1-set"/>
</dbReference>
<dbReference type="InterPro" id="IPR050208">
    <property type="entry name" value="MHC_class-I_related"/>
</dbReference>
<dbReference type="InterPro" id="IPR011161">
    <property type="entry name" value="MHC_I-like_Ag-recog"/>
</dbReference>
<dbReference type="InterPro" id="IPR037055">
    <property type="entry name" value="MHC_I-like_Ag-recog_sf"/>
</dbReference>
<dbReference type="InterPro" id="IPR011162">
    <property type="entry name" value="MHC_I/II-like_Ag-recog"/>
</dbReference>
<dbReference type="InterPro" id="IPR001039">
    <property type="entry name" value="MHC_I_a_a1/a2"/>
</dbReference>
<dbReference type="InterPro" id="IPR010579">
    <property type="entry name" value="MHC_I_a_C"/>
</dbReference>
<dbReference type="PANTHER" id="PTHR16675:SF229">
    <property type="entry name" value="HLA CLASS I HISTOCOMPATIBILITY ANTIGEN, A ALPHA CHAIN"/>
    <property type="match status" value="1"/>
</dbReference>
<dbReference type="PANTHER" id="PTHR16675">
    <property type="entry name" value="MHC CLASS I-RELATED"/>
    <property type="match status" value="1"/>
</dbReference>
<dbReference type="Pfam" id="PF07654">
    <property type="entry name" value="C1-set"/>
    <property type="match status" value="1"/>
</dbReference>
<dbReference type="Pfam" id="PF00129">
    <property type="entry name" value="MHC_I"/>
    <property type="match status" value="1"/>
</dbReference>
<dbReference type="Pfam" id="PF06623">
    <property type="entry name" value="MHC_I_C"/>
    <property type="match status" value="1"/>
</dbReference>
<dbReference type="PRINTS" id="PR01638">
    <property type="entry name" value="MHCCLASSI"/>
</dbReference>
<dbReference type="SMART" id="SM00407">
    <property type="entry name" value="IGc1"/>
    <property type="match status" value="1"/>
</dbReference>
<dbReference type="SUPFAM" id="SSF48726">
    <property type="entry name" value="Immunoglobulin"/>
    <property type="match status" value="1"/>
</dbReference>
<dbReference type="SUPFAM" id="SSF54452">
    <property type="entry name" value="MHC antigen-recognition domain"/>
    <property type="match status" value="1"/>
</dbReference>
<dbReference type="PROSITE" id="PS50835">
    <property type="entry name" value="IG_LIKE"/>
    <property type="match status" value="1"/>
</dbReference>
<dbReference type="PROSITE" id="PS00290">
    <property type="entry name" value="IG_MHC"/>
    <property type="match status" value="1"/>
</dbReference>
<comment type="function">
    <text evidence="4 9 10 11 13 17 20 22 26 33 34 35 40 47 50 51 54 57 58 60 61 71 72 73 74 93">Antigen-presenting major histocompatibility complex class I (MHCI) molecule. In complex with B2M/beta 2 microglobulin displays primarily viral and tumor-derived peptides on antigen-presenting cells for recognition by alpha-beta T cell receptor (TCR) on HLA-A-restricted CD8-positive T cells, guiding antigen-specific T cell immune response to eliminate infected or transformed cells (PubMed:10449296, PubMed:12138174, PubMed:12393434, PubMed:1402688, PubMed:15893615, PubMed:17189421, PubMed:19543285, PubMed:21498667, PubMed:24192765, PubMed:24395804, PubMed:2456340, PubMed:2784196, PubMed:28250417, PubMed:7504010, PubMed:7694806, PubMed:9862734). May also present self-peptides derived from the signal sequence of secreted or membrane proteins, although T cells specific for these peptides are usually inactivated to prevent autoreactivity (PubMed:25880248, PubMed:7506728, PubMed:7679507). Both the peptide and the MHC molecule are recognized by TCR, the peptide is responsible for the fine specificity of antigen recognition and MHC residues account for the MHC restriction of T cells (PubMed:12796775, PubMed:18275829, PubMed:19542454, PubMed:28250417). Typically presents intracellular peptide antigens of 8 to 13 amino acids that arise from cytosolic proteolysis via IFNG-induced immunoproteasome or via endopeptidase IDE/insulin-degrading enzyme (PubMed:17079320, PubMed:17189421, PubMed:20364150, PubMed:26929325, PubMed:27049119). Can bind different peptides containing allele-specific binding motifs, which are mainly defined by anchor residues at position 2 and 9 (PubMed:7504010, PubMed:9862734).</text>
</comment>
<comment type="function">
    <text evidence="13 22 28 32 35 50 54 55 64 71">Allele A*01:01: Presents a restricted peptide repertoire including viral epitopes derived from IAV NP/nucleoprotein (CTELKLSDY), IAV PB1/polymerase basic protein 1 (VSDGGPNLY), HAdV-11 capsid L3/hexon protein (LTDLGQNLLY), SARS-CoV-2 3a/ORF3a (FTSDYYQLY) as well as tumor peptide antigens including MAGE1 (EADPTGHSY), MAGEA3 (EVDPIGHLY) and WT1 (TSEKRPFMCAY), all having in common a canonical motif with a negatively charged Asp or Glu residue at position 3 and a Tyr anchor residue at the C-terminus (PubMed:1402688, PubMed:17189421, PubMed:19177349, PubMed:20364150, PubMed:24395804, PubMed:25880248, PubMed:26758806, PubMed:30530481, PubMed:32887977, PubMed:7504010). A number of HLA-A*01:01-restricted peptides carry a post-translational modification with oxidation and N-terminal acetylation being the most frequent (PubMed:25880248). Fails to present highly immunogenic peptides from the EBV latent antigens (PubMed:18779413).</text>
</comment>
<comment type="function">
    <text evidence="7 9 11 20 26 33 36 43 57 60 61 74 77 84 86 87 89">Allele A*02:01: A major allele in human populations, presents immunodominant viral epitopes derived from IAV M/matrix protein 1 (GILGFVFTL), HIV-1 env (TLTSCNTSV), HIV-1 gag-pol (ILKEPVHGV), HTLV-1 Tax (LLFGYPVYV), HBV C/core antigen (FLPSDFFPS), HCMV UL83/pp65 (NLVPMVATV) as well as tumor peptide antigens including MAGEA4 (GVYDGREHTV), WT1 (RMFPNAPYL) and CTAG1A/NY-ESO-1 (SLLMWITQC), all having in common hydrophobic amino acids at position 2 and at the C-terminal anchors.</text>
</comment>
<comment type="function">
    <text evidence="34 42 51 58 71 73 93">Allele A*03:01: Presents viral epitopes derived from IAV NP (ILRGSVAHK), HIV-1 nef (QVPLRPMTYK), HIV-1 gag-pol (AIFQSSMTK), SARS-CoV-2 N/nucleoprotein (KTFPPTEPK) as well as tumor peptide antigens including PMEL (LIYRRRLMK), NODAL (HAYIQSLLK), TRP-2 (RMYNMVPFF), all having in common hydrophobic amino acids at position 2 and Lys or Arg anchor residues at the C-terminus (PubMed:19543285, PubMed:21943705, PubMed:2456340, PubMed:32887977, PubMed:7504010, PubMed:7679507, PubMed:9862734). May also display spliced peptides resulting from the ligation of two separate proteasomal cleavage products that are not contiguous in the parental protein (PubMed:27049119).</text>
</comment>
<comment type="function">
    <text evidence="4 66">Allele A*11:01: Presents several immunodominant epitopes derived from HIV-1 gag-pol and HHV-4 EBNA4, containing the peptide motif with Val, Ile, Thr, Leu, Tyr or Phe at position 2 and Lys anchor residue at the C-terminus. Important in the control of HIV-1, EBV and HBV infections (PubMed:10449296). Presents an immunodominant epitope derived from SARS-CoV-2 N/nucleoprotein (KTFPPTEPK) (PubMed:32887977).</text>
</comment>
<comment type="function">
    <text evidence="21">Allele A*23:01: Interacts with natural killer (NK) cell receptor KIR3DL1 and may contribute to functional maturation of NK cells and self-nonself discrimination during innate immune response.</text>
</comment>
<comment type="function">
    <text evidence="10 21 27 37 47 88">Allele A*24:02: Presents viral epitopes derived from HIV-1 nef (RYPLTFGWCF), EBV lytic- and latent-cycle antigens BRLF1 (TYPVLEEMF), BMLF1 (DYNFVKQLF) and LMP2 (IYVLVMLVL), SARS-CoV nucleocapsid/N (QFKDNVILL), as well as tumor peptide antigens including PRAME (LYVDSLFFL), all sharing a common signature motif, namely an aromatic residue Tyr or Phe at position 2 and a nonhydrophobic anchor residue Phe, Leu or Iso at the C-terminus (PubMed:12393434, PubMed:20844028, PubMed:24192765, PubMed:9047241). Interacts with natural killer (NK) cell receptor KIR3DL1 and may contribute to functional maturation of NK cells and self-nonself discrimination during innate immune response (PubMed:17182537, PubMed:18502829).</text>
</comment>
<comment type="function">
    <text evidence="17">Allele A*26:01: Presents several epitopes derived from HIV-1 gag-pol (EVIPMFSAL, ETKLGKAGY) and env (LVSDGGPNLY), carrying as anchor residues preferentially Glu at position 1, Val or Thr at position 2 and Tyr at the C-terminus.</text>
</comment>
<comment type="function">
    <text evidence="83">Allele A*29:02: Presents peptides having a common motif, namely a Glu residue at position 2 and Tyr or Leu anchor residues at the C-terminus.</text>
</comment>
<comment type="function">
    <text evidence="21">Allele A*32:01: Interacts with natural killer (NK) cell receptor KIR3DL1 and may contribute to functional maturation of NK cells and self-nonself discrimination during innate immune response.</text>
</comment>
<comment type="function">
    <text evidence="15 16 60">Allele A*68:01: Presents viral epitopes derived from IAV NP (KTGGPIYKR) and HIV-1 tat (ITKGLGISYGR), having a common signature motif namely, Val or Thr at position 2 and positively charged residues Arg or Lys at the C-terminal anchor.</text>
</comment>
<comment type="function">
    <text evidence="40">Allele A*74:01: Presents immunodominant HIV-1 epitopes derived from gag-pol (GQMVHQAISPR, QIYPGIKVR) and rev (RQIHSISER), carrying an aliphatic residue at position 2 and Arg anchor residue at the C-terminus. May contribute to viral load control in chronic HIV-1 infection.</text>
</comment>
<comment type="subunit">
    <text evidence="7 11 21 26 27 32 38 42 43 50 55 56 60 61 68 71 72 73 74 77 84 86 89">Heterotrimer that consists of an alpha chain HLA-A, a beta chain B2M and a peptide (peptide-HLA-A-B2M) (PubMed:11502003, PubMed:18275829, PubMed:19177349, PubMed:19542454, PubMed:21943705, PubMed:22245737, PubMed:24395804, PubMed:26758806, PubMed:28250417, PubMed:7504010, PubMed:7506728, PubMed:7679507, PubMed:7694806, PubMed:7935798, PubMed:8805302, PubMed:8906788, PubMed:9177355). Early in biogenesis, HLA-A-B2M dimer interacts with the components of the peptide-loading complex composed of TAPBP, TAP1-TAP2, TAPBPL, PDIA3/ERP57 and CALR (PubMed:21263072). Interacts with TAP1-TAP2 transporter via TAPBP; this interaction is obligatory for the loading of peptide epitopes delivered to the ER by TAP1-TAP2 transporter (PubMed:21263072, PubMed:8630735, PubMed:8805302). Interacts with TAPBPL; TAPBPL binds peptide-free HLA-A-B2M complexes or those loaded with low affinity peptides, likely facilitating peptide exchange for higher affinity peptides (PubMed:26869717, PubMed:35725941). Only optimally assembled peptide-HLA-B2M trimer translocates to the surface of antigen-presenting cells, where it interacts with TCR and CD8 coreceptor on the surface of T cells. HLA-A (via polymorphic alpha-1 and alpha-2 domains) interacts with antigen-specific TCR (via CDR3 domains) (PubMed:12796775, PubMed:18275829, PubMed:22245737). One HLA-A molecule (mainly via nonpolymorphic alpha-3 domain) interacts with one CD8A homodimer (via CDR-like loop); this interaction ensures peptide-HLA-A-B2M recognition by CD8-positive T cells only (PubMed:2784196, PubMed:9177355). Alleles A*23:01; A*24:02 and A*32:01 interact (via Bw4 motif) with KIR3DL1 on NK cells; this interaction is direct.</text>
</comment>
<comment type="subunit">
    <text evidence="8">(Microbial infection) Interacts with HHV-8 MIR1 protein.</text>
</comment>
<comment type="subunit">
    <text evidence="6">(Microbial infection) Interacts with HTLV-1 accessory protein p12I.</text>
</comment>
<comment type="subcellular location">
    <subcellularLocation>
        <location evidence="38 54 86">Cell membrane</location>
        <topology evidence="1">Single-pass type I membrane protein</topology>
    </subcellularLocation>
    <subcellularLocation>
        <location evidence="97">Endoplasmic reticulum membrane</location>
        <topology evidence="1">Single-pass type I membrane protein</topology>
    </subcellularLocation>
</comment>
<comment type="alternative products">
    <event type="alternative splicing"/>
    <isoform>
        <id>P04439-1</id>
        <name>1</name>
        <sequence type="displayed"/>
    </isoform>
    <isoform>
        <id>P04439-2</id>
        <name>2</name>
        <sequence type="described" ref="VSP_060391 VSP_060392"/>
    </isoform>
</comment>
<comment type="tissue specificity">
    <text evidence="95">Ubiquitous.</text>
</comment>
<comment type="induction">
    <text evidence="38 43">Up-regulated by IFNG, and pro-inflammatory cytokines IL1B and TNF.</text>
</comment>
<comment type="domain">
    <text evidence="32 33 36 37 42 43 50 55 60 74 87">The alpha-1 domain is a structural part of the peptide-binding cleft.</text>
</comment>
<comment type="domain">
    <text evidence="32 33 36 37 41 42 43 50 55 60 61 74 86 87">The alpha-2 domain is a structural part of the peptide-binding cleft (PubMed:19177349, PubMed:19542454, PubMed:20619457, PubMed:20844028, PubMed:21543847, PubMed:21943705, PubMed:22245737, PubMed:24395804, PubMed:26758806, PubMed:2784196, PubMed:28250417, PubMed:7694806, PubMed:8906788). Mediates the interaction with TAP1-TAP2 complex (PubMed:8805302).</text>
</comment>
<comment type="domain">
    <text evidence="60">The alpha-3 Ig-like domain mediates the interaction with CD8 coreceptor.</text>
</comment>
<comment type="domain">
    <text evidence="69">The VL9 peptide/epitope (VMAPRT[V/L][L/V/I/F]L) derived from the signal sequence is loaded onto HLA-E and enables HLA-E expression at the plasma membrane. Distinct VL9 peptides presented by HLA-E variably affect its recognition by KLRD1-KLRC1 or KLRD1-KLRC2 receptors on NK cells, setting NK cell activation threshold. Common HLA-A allotypes contain functional VL9 peptides (VMAPRTLLL, VMAPRTLVL and VPAPRTLLL).</text>
</comment>
<comment type="PTM">
    <text evidence="8">(Microbial infection) Polyubiquitinated in a post ER compartment by interaction with human herpesvirus 8 MIR1 protein. This targets the protein for rapid degradation via the ubiquitin system.</text>
</comment>
<comment type="PTM">
    <text evidence="31 38">N-linked glycosylation at Asn-110.</text>
</comment>
<comment type="polymorphism">
    <text evidence="39 62 69">Highly polymorphic. Polymorphic residues encode for alpha-1 and alpha-2 domains of the peptide-binding cleft, where they contribute to variations in peptide binding and TCR recognition among different alleles. The human population is estimated to have millions of HLA-A alleles. But only 11 common HLA-A alleles are considered core alleles, representing all functionally significant variation (polymorphism) in alpha-1 and alpha-2 domains. These are: A*01:01; A*02:01; A*02:05; A*03:01; A*11:01; A*24:02; A*26:01; A*29:02; A*30:01; A*74:01 and A*80:01. Among these, A*02:01; A*11:01; A*24:02 and A*26:01, were likely passed by introgression from archaic to modern humans. Functional alleles of more recent origin (non-core) were derived by recombination (PubMed:28650991). The sequence shown is that of A*03:01. The sequences of core alleles and common representative alleles of serologically distinct allele groups are described as variants of A*03:01 (PubMed:28650991). Allelic variations of HLA-A signal peptide regulate HLA-E recognition by KLRD1-KLRC1 and KLRD1-KLRC2 receptors in viral infection and tumorigenesis by affecting its processing and by changing the affinity of HLA-E-VL9 complex for KLRD1-KLRC1 and KLRD1-KLRC2 receptors (PubMed:37264229). Allele A*31:01 is associated with carbamazepine-induced hypersensitivity reactions among subjects of Northern European ancestry [MIM:608579] (PubMed:21428769).</text>
</comment>
<comment type="disease">
    <text evidence="19 29 43 45">Alleles A*02:01 and A*24:02 are associated with increased susceptibility to diabetes mellitus, insulin-dependent (IDDM) (PubMed:16731854, PubMed:18802479, PubMed:22245737, PubMed:22522618). In a glucose-dependent way, allele A*02:01 may aberrantly present the signal peptide of preproinsulin (ALWGPDPAAA) on the surface of pancreatic beta cells to autoreactive CD8-positive T cells, potentially driving T-cell mediated cytotoxicity in pancreatic islets (PubMed:18802479, PubMed:22245737). Allele A*24:02 may present the signal peptide of preproinsulin (LWMRLLPLL) and contribute to acute pancreatic beta-cell destruction and early onset of IDDM (PubMed:16731854, PubMed:22522618).</text>
</comment>
<comment type="disease">
    <text evidence="5 30">Allele A*03:01 is associated with increased susceptibility to multiple sclerosis (MS), an autoimmune disease of the central nervous system (PubMed:10746785). May contribute to the initiation phase of the disease by presenting myelin PLP1 self-peptide (KLIETYFSK) to autoreactive CD8-positive T cells capable of initiating the first autoimmune attacks (PubMed:18953350).</text>
</comment>
<comment type="disease">
    <text evidence="65">Allele A*26:01 is associated with increased susceptibility to Behcet disease (BD) in the Northeast Asian population. Especially in the HLA-B*51-negative BD populations, HLA-A*26 is significantly associated with the onset of BD.</text>
</comment>
<comment type="disease">
    <text evidence="23">Allele A*29:02 is associated with increased susceptibility to birdshot chorioretinopathy (BSCR). May aberrantly present retinal autoantigens and induce autoimmune uveitis.</text>
</comment>
<comment type="similarity">
    <text evidence="95">Belongs to the MHC class I family.</text>
</comment>
<comment type="sequence caution" evidence="96">
    <conflict type="erroneous gene model prediction">
        <sequence resource="EMBL-CDS" id="CAA25162"/>
    </conflict>
</comment>
<sequence>MAVMAPRTLLLLLSGALALTQTWAGSHSMRYFFTSVSRPGRGEPRFIAVGYVDDTQFVRFDSDAASQRMEPRAPWIEQEGPEYWDQETRNVKAQSQTDRVDLGTLRGYYNQSEAGSHTIQIMYGCDVGSDGRFLRGYRQDAYDGKDYIALNEDLRSWTAADMAAQITKRKWEAAHEAEQLRAYLDGTCVEWLRRYLENGKETLQRTDPPKTHMTHHPISDHEATLRCWALGFYPAEITLTWQRDGEDQTQDTELVETRPAGDGTFQKWAAVVVPSGEEQRYTCHVQHEGLPKPLTLRWELSSQPTIPIVGIIAGLVLLGAVITGAVVAAVMWRRKSSDRKGGSYTQAASSDSAQGSDVSLTACKV</sequence>
<proteinExistence type="evidence at protein level"/>
<accession>P04439</accession>
<accession>B1PKZ3</accession>
<accession>O02939</accession>
<accession>O02954</accession>
<accession>O02955</accession>
<accession>O02963</accession>
<accession>O19509</accession>
<accession>O19546</accession>
<accession>O19598</accession>
<accession>O19605</accession>
<accession>O19606</accession>
<accession>O19619</accession>
<accession>O19647</accession>
<accession>O19673</accession>
<accession>O19687</accession>
<accession>O19695</accession>
<accession>O19756</accession>
<accession>O19794</accession>
<accession>O19795</accession>
<accession>O43906</accession>
<accession>O43907</accession>
<accession>O46874</accession>
<accession>O62921</accession>
<accession>O62924</accession>
<accession>O77937</accession>
<accession>O77938</accession>
<accession>O77964</accession>
<accession>O78073</accession>
<accession>O78171</accession>
<accession>O98009</accession>
<accession>O98010</accession>
<accession>O98011</accession>
<accession>O98137</accession>
<accession>P01891</accession>
<accession>P01892</accession>
<accession>P05534</accession>
<accession>P06338</accession>
<accession>P10313</accession>
<accession>P10314</accession>
<accession>P10315</accession>
<accession>P10316</accession>
<accession>P13746</accession>
<accession>P16188</accession>
<accession>P16189</accession>
<accession>P16190</accession>
<accession>P18462</accession>
<accession>P30443</accession>
<accession>P30444</accession>
<accession>P30445</accession>
<accession>P30446</accession>
<accession>P30447</accession>
<accession>P30448</accession>
<accession>P30449</accession>
<accession>P30450</accession>
<accession>P30451</accession>
<accession>P30452</accession>
<accession>P30453</accession>
<accession>P30454</accession>
<accession>P30455</accession>
<accession>P30456</accession>
<accession>P30457</accession>
<accession>P30458</accession>
<accession>P30459</accession>
<accession>P30512</accession>
<accession>P30514</accession>
<accession>P79505</accession>
<accession>P79562</accession>
<accession>P79563</accession>
<accession>Q09160</accession>
<accession>Q29680</accession>
<accession>Q29747</accession>
<accession>Q29835</accession>
<accession>Q29837</accession>
<accession>Q29838</accession>
<accession>Q29899</accession>
<accession>Q29908</accession>
<accession>Q29909</accession>
<accession>Q29910</accession>
<accession>Q30208</accession>
<accession>Q31623</accession>
<accession>Q5S3G1</accession>
<accession>Q65A82</accession>
<accession>Q8MHM1</accession>
<accession>Q8MHN9</accession>
<accession>Q95352</accession>
<accession>Q95355</accession>
<accession>Q95362</accession>
<accession>Q95377</accession>
<accession>Q95380</accession>
<accession>Q95IZ5</accession>
<accession>Q9BCN0</accession>
<accession>Q9BD15</accession>
<accession>Q9BD19</accession>
<accession>Q9GJE6</accession>
<accession>Q9GJE7</accession>
<accession>Q9GJE8</accession>
<accession>Q9MW42</accession>
<accession>Q9MY89</accession>
<accession>Q9MYA3</accession>
<accession>Q9MYA5</accession>
<accession>Q9MYC4</accession>
<accession>Q9MYE6</accession>
<accession>Q9MYE9</accession>
<accession>Q9MYG4</accession>
<accession>Q9MYG5</accession>
<accession>Q9MYI5</accession>
<accession>Q9TP25</accession>
<accession>Q9TPQ3</accession>
<accession>Q9TPR8</accession>
<accession>Q9TPX8</accession>
<accession>Q9TPX9</accession>
<accession>Q9TPY0</accession>
<accession>Q9TQ24</accession>
<accession>Q9TQE8</accession>
<accession>Q9TQE9</accession>
<accession>Q9TQF1</accession>
<accession>Q9TQF5</accession>
<accession>Q9TQF8</accession>
<accession>Q9TQF9</accession>
<accession>Q9TQG0</accession>
<accession>Q9TQG5</accession>
<accession>Q9TQG7</accession>
<accession>Q9TQH5</accession>
<accession>Q9TQI3</accession>
<accession>Q9TQK5</accession>
<accession>Q9TQM6</accession>
<accession>Q9TQN5</accession>
<accession>Q9TQP5</accession>
<accession>Q9TQP6</accession>
<accession>Q9TQP7</accession>
<accession>Q9UIN1</accession>
<accession>Q9UIN2</accession>
<accession>Q9UIP7</accession>
<accession>Q9UQU3</accession>
<accession>Q9UQU6</accession>
<accession>Q9UQU7</accession>
<feature type="signal peptide" evidence="90">
    <location>
        <begin position="1"/>
        <end position="24"/>
    </location>
</feature>
<feature type="chain" id="PRO_0000018815" description="HLA class I histocompatibility antigen, A alpha chain">
    <location>
        <begin position="25"/>
        <end position="365"/>
    </location>
</feature>
<feature type="topological domain" description="Extracellular" evidence="1">
    <location>
        <begin position="25"/>
        <end position="308"/>
    </location>
</feature>
<feature type="transmembrane region" description="Helical" evidence="1">
    <location>
        <begin position="309"/>
        <end position="332"/>
    </location>
</feature>
<feature type="topological domain" description="Cytoplasmic" evidence="1">
    <location>
        <begin position="333"/>
        <end position="365"/>
    </location>
</feature>
<feature type="domain" description="Ig-like C1-type" evidence="1">
    <location>
        <begin position="209"/>
        <end position="295"/>
    </location>
</feature>
<feature type="region of interest" description="VL9 epitope" evidence="69">
    <location>
        <begin position="3"/>
        <end position="11"/>
    </location>
</feature>
<feature type="region of interest" description="Alpha-1" evidence="1">
    <location>
        <begin position="25"/>
        <end position="114"/>
    </location>
</feature>
<feature type="region of interest" description="Alpha-2" evidence="1">
    <location>
        <begin position="115"/>
        <end position="206"/>
    </location>
</feature>
<feature type="region of interest" description="Alpha-3" evidence="1">
    <location>
        <begin position="207"/>
        <end position="298"/>
    </location>
</feature>
<feature type="region of interest" description="Connecting peptide" evidence="1">
    <location>
        <begin position="299"/>
        <end position="308"/>
    </location>
</feature>
<feature type="region of interest" description="Disordered" evidence="3">
    <location>
        <begin position="339"/>
        <end position="365"/>
    </location>
</feature>
<feature type="compositionally biased region" description="Low complexity" evidence="3">
    <location>
        <begin position="346"/>
        <end position="359"/>
    </location>
</feature>
<feature type="binding site" evidence="42">
    <location>
        <position position="31"/>
    </location>
    <ligand>
        <name>a peptide antigen</name>
        <dbReference type="ChEBI" id="CHEBI:166823"/>
        <label>1</label>
        <note>pathogen-derived peptide antigen</note>
    </ligand>
</feature>
<feature type="binding site" evidence="42">
    <location>
        <position position="97"/>
    </location>
    <ligand>
        <name>a peptide antigen</name>
        <dbReference type="ChEBI" id="CHEBI:166823"/>
        <label>1</label>
        <note>pathogen-derived peptide antigen</note>
    </ligand>
</feature>
<feature type="binding site" evidence="42">
    <location>
        <position position="108"/>
    </location>
    <ligand>
        <name>a peptide antigen</name>
        <dbReference type="ChEBI" id="CHEBI:166823"/>
        <label>1</label>
        <note>pathogen-derived peptide antigen</note>
    </ligand>
</feature>
<feature type="binding site" evidence="41">
    <location>
        <position position="140"/>
    </location>
    <ligand>
        <name>a peptide antigen</name>
        <dbReference type="ChEBI" id="CHEBI:166823"/>
        <label>2</label>
        <note>self-peptide antigen</note>
    </ligand>
</feature>
<feature type="binding site" evidence="42">
    <location>
        <position position="167"/>
    </location>
    <ligand>
        <name>a peptide antigen</name>
        <dbReference type="ChEBI" id="CHEBI:166823"/>
        <label>1</label>
        <note>pathogen-derived peptide antigen</note>
    </ligand>
</feature>
<feature type="binding site" evidence="42">
    <location>
        <position position="170"/>
    </location>
    <ligand>
        <name>a peptide antigen</name>
        <dbReference type="ChEBI" id="CHEBI:166823"/>
        <label>1</label>
        <note>pathogen-derived peptide antigen</note>
    </ligand>
</feature>
<feature type="binding site" evidence="42">
    <location>
        <position position="183"/>
    </location>
    <ligand>
        <name>a peptide antigen</name>
        <dbReference type="ChEBI" id="CHEBI:166823"/>
        <label>1</label>
        <note>pathogen-derived peptide antigen</note>
    </ligand>
</feature>
<feature type="binding site" evidence="41">
    <location>
        <position position="183"/>
    </location>
    <ligand>
        <name>a peptide antigen</name>
        <dbReference type="ChEBI" id="CHEBI:166823"/>
        <label>2</label>
        <note>self-peptide antigen</note>
    </ligand>
</feature>
<feature type="binding site" evidence="42">
    <location>
        <position position="195"/>
    </location>
    <ligand>
        <name>a peptide antigen</name>
        <dbReference type="ChEBI" id="CHEBI:166823"/>
        <label>1</label>
        <note>pathogen-derived peptide antigen</note>
    </ligand>
</feature>
<feature type="modified residue" description="Sulfotyrosine" evidence="1">
    <location>
        <position position="83"/>
    </location>
</feature>
<feature type="modified residue" description="Phosphoserine" evidence="100">
    <location>
        <position position="343"/>
    </location>
</feature>
<feature type="modified residue" description="Phosphotyrosine" evidence="100">
    <location>
        <position position="344"/>
    </location>
</feature>
<feature type="modified residue" description="Phosphoserine" evidence="100">
    <location>
        <position position="349"/>
    </location>
</feature>
<feature type="modified residue" description="Phosphoserine" evidence="100">
    <location>
        <position position="350"/>
    </location>
</feature>
<feature type="modified residue" description="Phosphoserine" evidence="100">
    <location>
        <position position="352"/>
    </location>
</feature>
<feature type="modified residue" description="Phosphoserine" evidence="99 100">
    <location>
        <position position="356"/>
    </location>
</feature>
<feature type="modified residue" description="Phosphoserine" evidence="99 100">
    <location>
        <position position="359"/>
    </location>
</feature>
<feature type="glycosylation site" description="N-linked (GlcNAc...) asparagine" evidence="31">
    <location>
        <position position="110"/>
    </location>
</feature>
<feature type="disulfide bond" evidence="2 18 32 37 41 42 55 61 74">
    <location>
        <begin position="125"/>
        <end position="188"/>
    </location>
</feature>
<feature type="disulfide bond" evidence="2 18 32 37 41 42 55 61 74">
    <location>
        <begin position="227"/>
        <end position="283"/>
    </location>
</feature>
<feature type="splice variant" id="VSP_060391" description="In isoform 2.">
    <original>EAEQLRAYLDGT</original>
    <variation>AAEQQRAYLEGR</variation>
    <location>
        <begin position="176"/>
        <end position="187"/>
    </location>
</feature>
<feature type="splice variant" id="VSP_060392" description="In isoform 2.">
    <original>S</original>
    <variation>SGGEGVK</variation>
    <location>
        <position position="337"/>
    </location>
</feature>
<feature type="sequence variant" id="VAR_082315" description="In allele A*34:01." evidence="14">
    <original>V</original>
    <variation>I</variation>
    <location>
        <position position="3"/>
    </location>
</feature>
<feature type="sequence variant" id="VAR_082316" description="In allele A*80:01; does not alter the affinity of VL9 peptide for HLA-E or HLA-E expression at the plasma membrane; facilitates KLRD1-KLRC1 and KLRD1-KLRC2 receptor engagement and signaling." evidence="69 80 81">
    <original>A</original>
    <variation>P</variation>
    <location>
        <position position="5"/>
    </location>
</feature>
<feature type="sequence variant" id="VAR_082317" description="In allele A*02:01, allele A*02:05, allele A*23:01, allele A*24:02, allele A*25:01, allele A*26:01, allele A*34:01, allele A*43:01, allele A*66:01, allele A*68:01 and allele A*69:01; does not alter the affinity of VL9 peptide for HLA-E or HLA-E expression at the plasma membrane; decreases KLRD1-KLRC1 and KLRD1-KLRC2 receptor engagement and signaling." evidence="14 24 46 63 67 69 70 75 79 82 91">
    <original>L</original>
    <variation>V</variation>
    <location>
        <position position="10"/>
    </location>
</feature>
<feature type="sequence variant" id="VAR_082318" description="In allele A*29:02, allele A*31:01, allele A*32:01, allele A*33:01 and allele A*74:01; impairs VL9 peptide processing and HLA-E expression at the plasma membrane." evidence="12 14 25 48 53 69 85 94">
    <original>S</original>
    <variation>L</variation>
    <location>
        <position position="14"/>
    </location>
</feature>
<feature type="sequence variant" id="VAR_082319" description="In allele A*74:01." evidence="14">
    <original>W</original>
    <variation>R</variation>
    <location>
        <position position="23"/>
    </location>
</feature>
<feature type="sequence variant" id="VAR_082320" description="In allele A*23:01, allele A*24:02 and allele A*30:01; dbSNP:rs2075684." evidence="24 53 76 91">
    <original>F</original>
    <variation>S</variation>
    <location>
        <position position="33"/>
    </location>
</feature>
<feature type="sequence variant" id="VAR_082321" description="In allele A*29:02, allele A*31:01 and allele A*33:01; requires 2 nucleotide substitutions." evidence="12 25 53 85">
    <original>F</original>
    <variation>T</variation>
    <location>
        <position position="33"/>
    </location>
</feature>
<feature type="sequence variant" id="VAR_082322" description="In allele A*02:05, allele A*11:01, allele A*25:01, allele A*26:01, allele A*34:01, allele A*43:01, allele A*66:01, allele A*68:01 and allele A*69:01; dbSNP:rs2075684." evidence="14 46 49 52 67 70 78 79 82">
    <original>F</original>
    <variation>Y</variation>
    <location>
        <position position="33"/>
    </location>
</feature>
<feature type="sequence variant" id="VAR_082323" description="In allele A*30:01; dbSNP:rs1059423." evidence="53 76">
    <original>R</original>
    <variation>S</variation>
    <location>
        <position position="41"/>
    </location>
</feature>
<feature type="sequence variant" id="VAR_082324" description="In allele A*80:01." evidence="80 81">
    <original>T</original>
    <variation>S</variation>
    <location>
        <position position="55"/>
    </location>
</feature>
<feature type="sequence variant" id="VAR_082325" description="In allele A*80:01." evidence="80 81">
    <original>R</original>
    <variation>Q</variation>
    <location>
        <position position="59"/>
    </location>
</feature>
<feature type="sequence variant" id="VAR_082326" description="In allele A*02:05; dbSNP:rs41559117." evidence="67">
    <original>Q</original>
    <variation>R</variation>
    <location>
        <position position="67"/>
    </location>
</feature>
<feature type="sequence variant" id="VAR_082327" description="In alleles A*01:01 and allele A*36:01." evidence="14 44 59 92">
    <original>R</original>
    <variation>K</variation>
    <location>
        <position position="68"/>
    </location>
</feature>
<feature type="sequence variant" id="VAR_082328" description="In allele A*80:01." evidence="80 81">
    <original>G</original>
    <variation>E</variation>
    <location>
        <position position="80"/>
    </location>
</feature>
<feature type="sequence variant" id="VAR_082329" description="In allele A*30:01 and allele A*31:01; dbSNP:rs1059449." evidence="12 53 76 85">
    <original>G</original>
    <variation>R</variation>
    <location>
        <position position="80"/>
    </location>
</feature>
<feature type="sequence variant" id="VAR_082330" description="In allele A*23:01, allele 24:02 and allele A*80:01." evidence="24 80 81 91">
    <original>Q</original>
    <variation>E</variation>
    <location>
        <position position="86"/>
    </location>
</feature>
<feature type="sequence variant" id="VAR_082331" description="In allele A*02:01 and allele A*02:05; requires 2 nucleotide substitutions." evidence="46 63 67 75">
    <original>Q</original>
    <variation>G</variation>
    <location>
        <position position="86"/>
    </location>
</feature>
<feature type="sequence variant" id="VAR_082332" description="In alleles A*29:02 and allele A*43:01." evidence="14 25">
    <original>Q</original>
    <variation>L</variation>
    <location>
        <position position="86"/>
    </location>
</feature>
<feature type="sequence variant" id="VAR_082333" description="In allele A*25:01, allele A*26:01, allele A*33:01, allele A*34:01, allele A*66:01, allele A*68:01 and allele A*69:01." evidence="14 46 53 70 79 82">
    <original>Q</original>
    <variation>R</variation>
    <location>
        <position position="86"/>
    </location>
</feature>
<feature type="sequence variant" id="VAR_082334" description="In alleles A*25:01, allele A*26:01, allele A*33:01, allele A*34:01, allele A*66:01, allele A*68:01 and allele A*69:01; requires 2 nucleotide substitutions." evidence="14 46 53 70 79 82">
    <original>E</original>
    <variation>N</variation>
    <location>
        <position position="87"/>
    </location>
</feature>
<feature type="sequence variant" id="VAR_082335" description="In allele A*29:02 and allele A*43:01." evidence="14 25">
    <original>E</original>
    <variation>Q</variation>
    <location>
        <position position="87"/>
    </location>
</feature>
<feature type="sequence variant" id="VAR_082336" description="In allele A*23:01 and allele 24:02; dbSNP:rs199474430." evidence="24 91">
    <original>R</original>
    <variation>G</variation>
    <location>
        <position position="89"/>
    </location>
</feature>
<feature type="sequence variant" id="VAR_082337" description="In allele A*02:01, allele A*02:05, allele A*23:01, allele 24:02 and allele A*34:01; dbSNP:rs199474436." evidence="14 24 46 63 67 75 91">
    <original>N</original>
    <variation>K</variation>
    <location>
        <position position="90"/>
    </location>
</feature>
<feature type="sequence variant" id="VAR_082338" description="In allele A*01:01 and allele A*36:01." evidence="14 44 59 92">
    <original>V</original>
    <variation>M</variation>
    <location>
        <position position="91"/>
    </location>
</feature>
<feature type="sequence variant" id="VAR_082339" description="In allele A*01:01, allele A*02:01, allele A*02:05, allele A*23:01, allele 24:02, allele A*25:01, allele A*26:01, allele A*31:01, allele A*32:01, allele A*33:01, allele A*36:01, allele A*43:01, allele A*74:01 and allele A*80:01; dbSNP:rs78306866." evidence="12 14 24 44 46 48 53 59 63 67 75 79 80 81 82 85 91 92 94">
    <original>Q</original>
    <variation>H</variation>
    <location>
        <position position="94"/>
    </location>
</feature>
<feature type="sequence variant" id="VAR_082340" description="In allele A*31:01 and allele A*33:01; dbSNP:rs199474457." evidence="12 53 85">
    <original>T</original>
    <variation>I</variation>
    <location>
        <position position="97"/>
    </location>
</feature>
<feature type="sequence variant" id="VAR_082341" description="In allele A*02:01 and allele A*02:05." evidence="46 63 67 75">
    <original>D</original>
    <variation>H</variation>
    <location>
        <position position="98"/>
    </location>
</feature>
<feature type="sequence variant" id="VAR_082342" description="In allele A*80:01." evidence="80 81">
    <original>D</original>
    <variation>N</variation>
    <location>
        <position position="98"/>
    </location>
</feature>
<feature type="sequence variant" id="VAR_082343" description="In allele A*01:01, allele A*26:01, allele A*29:02, allele A*36:01, allele A*43:01 and allele A*80:01." evidence="14 25 44 59 79 80 81 82 92">
    <original>V</original>
    <variation>A</variation>
    <location>
        <position position="100"/>
    </location>
</feature>
<feature type="sequence variant" id="VAR_082344" description="In allele A*23:01, allele A*24:02, allele A*25:01 and allele A*32:01; dbSNP:rs1071742." evidence="24 46 48 91 94">
    <original>V</original>
    <variation>E</variation>
    <location>
        <position position="100"/>
    </location>
</feature>
<feature type="sequence variant" id="VAR_082345" description="Allele A*01:01, allele A*23:01, allele A*24:02, allele A*26:01, allele A*29:02, allele A*36:01, allele A*43:01 and allele A*80:01; dbSNP:rs1136688." evidence="14 24 25 44 59 79 80 81 82 91 92">
    <original>D</original>
    <variation>N</variation>
    <location>
        <position position="101"/>
    </location>
</feature>
<feature type="sequence variant" id="VAR_082346" description="In allele A*25:01 and allele A*32:01; requires 2 nucleotide substitutions." evidence="46 48 94">
    <original>D</original>
    <variation>S</variation>
    <location>
        <position position="101"/>
    </location>
</feature>
<feature type="sequence variant" id="VAR_082347" description="In allele A*23:01, allele A*24:02, allele A*25:01 and allele A*32:01; Bw4 motif RIALR is involved in the recognition of NK cell inhibitory receptor KIR3DL1." evidence="21 24 27 46 48 91 94">
    <original>GTLRG</original>
    <variation>RIALR</variation>
    <location>
        <begin position="103"/>
        <end position="107"/>
    </location>
</feature>
<feature type="sequence variant" id="VAR_082348" description="In allele A*01:01, allele A*11:01, allele A*25:01, allele A*26:01, allele A*34:01, allele A*36:01, allele A*43:01, allele A*66:01 and allele A*80:01; dbSNP:rs1136692." evidence="14 44 46 49 52 59 78 79 80 81 82 92">
    <original>A</original>
    <variation>D</variation>
    <location>
        <position position="114"/>
    </location>
</feature>
<feature type="sequence variant" id="VAR_082349" description="In allele A*02:05, allele A*23:01 and allele 24:02; dbSNP:rs1071743." evidence="24 67 91">
    <original>I</original>
    <variation>L</variation>
    <location>
        <position position="119"/>
    </location>
</feature>
<feature type="sequence variant" id="VAR_082350" description="In allele A*02:01 and allele A*69:01." evidence="46 63 70 75">
    <original>I</original>
    <variation>V</variation>
    <location>
        <position position="119"/>
    </location>
</feature>
<feature type="sequence variant" id="VAR_082351" description="In allele A*23:01, allele 24:02, allele A*29:02, allele A*31:01, allele A*32:01, allele A*33:01, allele A*68:01 and allele A*74:01; dbSNP:rs1136695." evidence="12 14 24 25 48 53 70 85 91 94">
    <original>I</original>
    <variation>M</variation>
    <location>
        <position position="121"/>
    </location>
</feature>
<feature type="sequence variant" id="VAR_082352" description="In allele A*02:01, allele A*02:05, allele A*25:01, allele A*26:01, allele A*34:01, allele A*43:01, allele A*66:01 and allele A*69:01." evidence="14 46 63 67 70 75 79 82">
    <original>I</original>
    <variation>R</variation>
    <location>
        <position position="121"/>
    </location>
</feature>
<feature type="sequence variant" id="VAR_082353" description="In allele A*23:01, allele 24:02; dbSNP:rs1136697." evidence="24 91">
    <original>Y</original>
    <variation>F</variation>
    <location>
        <position position="123"/>
    </location>
</feature>
<feature type="sequence variant" id="VAR_082354" description="In allele A*01:01, allele A*11:01, allele A*25:01, allele A*26:01, allele A*32:01, allele A*34:01, allele A*36:01, allele A*43:01, allele A*66:01 and allele A*74:01; dbSNP:rs1136700." evidence="14 44 46 48 49 52 59 78 79 82 92 94">
    <original>S</original>
    <variation>P</variation>
    <location>
        <position position="129"/>
    </location>
</feature>
<feature type="sequence variant" id="VAR_082355" description="In allele A*02:01, allele A*02:05 and allele A*69:01; dbSNP:rs1136702." evidence="46 63 67 70 75">
    <original>G</original>
    <variation>W</variation>
    <location>
        <position position="131"/>
    </location>
</feature>
<feature type="sequence variant" id="VAR_082356" description="In allele A*32:01 and allele A*74:01; dbSNP:rs1059488." evidence="14 48 94">
    <original>F</original>
    <variation>L</variation>
    <location>
        <position position="133"/>
    </location>
</feature>
<feature type="sequence variant" id="VAR_082357" description="In allele A*30:01; requires 2 nucleotide substitutions." evidence="53 76">
    <original>R</original>
    <variation>E</variation>
    <location>
        <position position="138"/>
    </location>
</feature>
<feature type="sequence variant" id="VAR_082358" description="In allele A*02:01, allele A*02:05, allele A*23:01, allele A*24:02, allele A*69:01." evidence="24 46 63 67 70 75 91">
    <original>R</original>
    <variation>H</variation>
    <location>
        <position position="138"/>
    </location>
</feature>
<feature type="sequence variant" id="VAR_082359" description="In allele A*25:01, allele A*26:01, allele A*31:01, allele A*32:01, allele A*33:01, allele A*34:01, allele A*43:01, allele A*66:01, allele A*74:01." evidence="12 14 46 48 53 79 82 85 94">
    <original>R</original>
    <variation>Q</variation>
    <location>
        <position position="138"/>
    </location>
</feature>
<feature type="sequence variant" id="VAR_082360" description="In allele A*30:01." evidence="53 76">
    <original>D</original>
    <variation>H</variation>
    <location>
        <position position="140"/>
    </location>
</feature>
<feature type="sequence variant" id="VAR_082361" description="In allele A*02:01, allele A*02:05, allele A*23:01, allele A*24:02 and allele A*69:01." evidence="24 46 63 67 70 75 91">
    <original>D</original>
    <variation>Y</variation>
    <location>
        <position position="140"/>
    </location>
</feature>
<feature type="sequence variant" id="VAR_082362" description="In allele A*02:01, allele A*02:05, allele A*23:01, allele A*24:02, allele A*68:01 and allele A*69:01; dbSNP:rs1059509." evidence="24 46 63 67 70 75 91">
    <original>N</original>
    <variation>K</variation>
    <location>
        <position position="151"/>
    </location>
</feature>
<feature type="sequence variant" id="VAR_082363" description="In allele A*02:01, allele A*02:05, allele A*68:01 and allele A*69:01; dbSNP:rs1059516." evidence="46 63 67 70 75">
    <original>I</original>
    <variation>T</variation>
    <location>
        <position position="166"/>
    </location>
</feature>
<feature type="sequence variant" id="VAR_082364" description="In allele A*23:01, allele A*25:01, allele A*26:01, allele A*29:02, allele A*30:01, allele A*31:01, allele A*32:01, allele A*33:01, allele A*34:01, allele A*43:01, allele A*66:01 and allele A*74:01." evidence="12 14 24 25 46 48 53 76 79 82 85 94">
    <original>K</original>
    <variation>Q</variation>
    <location>
        <position position="168"/>
    </location>
</feature>
<feature type="sequence variant" id="VAR_082365" description="In allele A*02:01, allele A*02:05, allele A*68:01 and allele A*69:01; dbSNP:rs1059520." evidence="46 63 67 70 75">
    <original>R</original>
    <variation>H</variation>
    <location>
        <position position="169"/>
    </location>
</feature>
<feature type="sequence variant" id="VAR_082366" description="In allele A*25:01, allele A*26:01, allele A*34:01, allele A*43:01 and allele A*66:01; dbSNP:rs1059526." evidence="14 46 79 82">
    <original>A</original>
    <variation>T</variation>
    <location>
        <position position="173"/>
    </location>
</feature>
<feature type="sequence variant" id="VAR_082367" description="In allele A*01:01 and allele A*36:01." evidence="14 44 59 92">
    <original>A</original>
    <variation>V</variation>
    <location>
        <position position="174"/>
    </location>
</feature>
<feature type="sequence variant" id="VAR_082368" description="In allele A*23:01, allele A*29:02, allele A*30:01, allele A*31:01, allele A*32:01, allele A*33:01, allele A*74:01 and allele A*80:01." evidence="12 14 24 25 48 53 76 80 81 85 94">
    <original>H</original>
    <variation>R</variation>
    <location>
        <position position="175"/>
    </location>
</feature>
<feature type="sequence variant" id="VAR_082369" description="In allele A*01:01, allele A*11:01 and allele A*36:01." evidence="14 44 49 52 59 78 92">
    <original>E</original>
    <variation>A</variation>
    <location>
        <position position="176"/>
    </location>
</feature>
<feature type="sequence variant" id="VAR_082370" description="In allele A*80:01; requires 2 nucleotide substitutions." evidence="80 81">
    <original>E</original>
    <variation>R</variation>
    <location>
        <position position="176"/>
    </location>
</feature>
<feature type="sequence variant" id="VAR_082371" description="In allele A*02:01, allele A*02:05, allele A*23:01, allele A*24:02, allele A*29:02, allele A*31:01, allele A*32:01, allele A*33:01, allele A*68:01, allele A*69:01 and allele A*74:01; results in inefficient T cell recognition of epitopes derived from influenza A virus.; dbSNP:rs9256983." evidence="12 14 24 25 46 48 51 53 63 67 70 75 85 91 94">
    <original>E</original>
    <variation>V</variation>
    <location>
        <position position="176"/>
    </location>
</feature>
<feature type="sequence variant" id="VAR_082372" description="In allele A*30:01; requires 2 nucleotide substitutions." evidence="53 76">
    <original>E</original>
    <variation>W</variation>
    <location>
        <position position="176"/>
    </location>
</feature>
<feature type="sequence variant" id="VAR_082373" description="In allele A*11:01 and allele A*24:02." evidence="24 49 52 78 91">
    <original>L</original>
    <variation>Q</variation>
    <location>
        <position position="180"/>
    </location>
</feature>
<feature type="sequence variant" id="VAR_082374" description="In allele A*01:01 and allele A*36:01." evidence="14 44 59 92">
    <original>L</original>
    <variation>R</variation>
    <location>
        <position position="180"/>
    </location>
</feature>
<feature type="sequence variant" id="VAR_082375" description="In allele A*02:05, allele A*25:01, allele A*26:01, allele A*34:01, allele A*43:01, allele A*66:01, allele A*68:01; dbSNP:rs9260156." evidence="14 46 67 70 79 82">
    <original>L</original>
    <variation>W</variation>
    <location>
        <position position="180"/>
    </location>
</feature>
<feature type="sequence variant" id="VAR_082376" description="In allele A*01:01 and allele A*36:01." evidence="14 44 59 92">
    <original>A</original>
    <variation>V</variation>
    <location>
        <position position="182"/>
    </location>
</feature>
<feature type="sequence variant" id="VAR_082377" description="In allele A*01:01, allele A*02:01, allele A*02:05, allele A*11:01, allele A*23:01, allele A*24:02, allele A*25:01, allele A*26:01, allele A*29:02, allele A*30:01, allele A*31:01, allele A*32:01, allele A*33:01, allele A*34:01, allele A*36:01, allele A*43:01, allele A*66:01, allele A*68:01, allele A*69:01, allele A*74:01 and allele A*80:01; dbSNP:rs1059542." evidence="12 14 24 25 44 46 48 49 52 53 59 63 67 70 75 76 78 79 80 81 82 85 91 92 94">
    <original>D</original>
    <variation>E</variation>
    <location>
        <position position="185"/>
    </location>
</feature>
<feature type="sequence variant" id="VAR_082378" description="In allele A*80:01; requires 2 nucleotide substitutions." evidence="80 81">
    <original>T</original>
    <variation>E</variation>
    <location>
        <position position="187"/>
    </location>
</feature>
<feature type="sequence variant" id="VAR_082379" description="In allele A*01:01, allele A*11:01, allele A*25:01, allele A*26:01, allele A*43:01 and allele A*66:01." evidence="14 44 46 49 52 59 78 79 82 92">
    <original>T</original>
    <variation>R</variation>
    <location>
        <position position="187"/>
    </location>
</feature>
<feature type="sequence variant" id="VAR_082380" description="In allele A*01:01, allele A*23:01, allele A*24:02 and allele A*80:01; dbSNP:rs879577815." evidence="24 44 59 80 81 91 92">
    <original>E</original>
    <variation>D</variation>
    <location>
        <position position="190"/>
    </location>
</feature>
<feature type="sequence variant" id="VAR_082381" description="In allele A*01:01, allele A*23:01, allele A*24:02 and allele A*80:01; dbSNP:rs3098019." evidence="24 44 59 80 81 91 92">
    <original>W</original>
    <variation>G</variation>
    <location>
        <position position="191"/>
    </location>
</feature>
<feature type="sequence variant" id="VAR_082382" description="In allele A*33:01." evidence="53">
    <original>Y</original>
    <variation>H</variation>
    <location>
        <position position="195"/>
    </location>
</feature>
<feature type="sequence variant" id="VAR_082383" description="In allele A*02:01, allele A*02:05, allele A*25:01, allele A*26:01, allele A*29:02, allele A*32:01, allele A*34:01, allele A*43:01, allele A*66:01, allele A*68:01, allele A*69:01 and allele A*74:01." evidence="14 25 46 48 63 67 70 75 79 82 94">
    <original>P</original>
    <variation>A</variation>
    <location>
        <position position="208"/>
    </location>
</feature>
<feature type="sequence variant" id="VAR_082384" description="In allele A*33:01." evidence="53">
    <original>K</original>
    <variation>R</variation>
    <location>
        <position position="210"/>
    </location>
</feature>
<feature type="sequence variant" id="VAR_082385" description="In allele A*02:01, allele A*02:05, allele A*25:01, allele A*26:01, allele A*29:02, allele A*31:01, allele A*32:01, allele A*33:01, allele A*34:01, allele A*43:01, allele A*66:01, allele A*68:01, allele A*69:01, allele A*74:01." evidence="12 14 25 46 48 53 63 67 70 75 79 82 85 94">
    <original>P</original>
    <variation>A</variation>
    <location>
        <position position="217"/>
    </location>
</feature>
<feature type="sequence variant" id="VAR_082386" description="In allele A*02:01, allele A*02:05, allele A*25:01, allele A*26:01, allele A*29:02, allele A*31:01, allele A*32:01, allele A*33:01, allele A*34:01, allele A*43:01, allele A*66:01, allele A*68:01, allele A*69:01 and allele A*74:01." evidence="12 14 25 46 48 53 63 67 70 75 79 82 85 94">
    <original>I</original>
    <variation>V</variation>
    <location>
        <position position="218"/>
    </location>
</feature>
<feature type="sequence variant" id="VAR_082387" description="In allele A*02:01, allele A*02:05, allele A*25:01, allele A*26:01, allele A*29:02, allele A*31:01, allele A*32:01, allele A*33:01, allele A*34:01, allele A*43:01, allele A*66:01, allele A*68:01, allele A*69:01, allele A*74:01 and allele A*80:01." evidence="12 14 25 46 48 53 63 67 70 75 79 80 81 82 85 94">
    <original>G</original>
    <variation>S</variation>
    <location>
        <position position="231"/>
    </location>
</feature>
<feature type="sequence variant" id="VAR_082388" description="In allele A*68:01; impairs binding to CD8A and reduces recognition by antigen-specific CD8-positive T cells." evidence="60 70">
    <original>A</original>
    <variation>V</variation>
    <location>
        <position position="269"/>
    </location>
</feature>
<feature type="sequence variant" id="VAR_082389" description="In allele A*25:01, allele A*26:01, allele A*29:02, allele A*31:01, allele A*32:01, allele A*33:01, allele A*34:01, allele A*43:01, allele A*66:01 and allele A*74:01." evidence="14 25 46 48 53 79 82 94">
    <original>A</original>
    <variation>S</variation>
    <location>
        <position position="270"/>
    </location>
</feature>
<feature type="sequence variant" id="VAR_082390" description="In allele A*80:01." evidence="80 81">
    <original>E</original>
    <variation>K</variation>
    <location>
        <position position="277"/>
    </location>
</feature>
<feature type="sequence variant" id="VAR_082391" description="In allele A*02:01, allele A*02:05, allele A*25:01, allele A*26:01, allele A*29:02, allele A*31:01, allele A*32:01, allele A*33:01, allele A*34:01, allele A*43:01, allele A*66:01, allele A*68:01, allele A*69:01 and allele A*74:01." evidence="12 14 25 46 48 53 63 67 70 75 79 82 85 94">
    <original>E</original>
    <variation>Q</variation>
    <location>
        <position position="277"/>
    </location>
</feature>
<feature type="sequence variant" id="VAR_082392" description="In allele A*80:01." evidence="80 81">
    <original>Q</original>
    <variation>K</variation>
    <location>
        <position position="279"/>
    </location>
</feature>
<feature type="sequence variant" id="VAR_082393" description="In allele A*80:01." evidence="80 81">
    <original>K</original>
    <variation>E</variation>
    <location>
        <position position="292"/>
    </location>
</feature>
<feature type="sequence variant" id="VAR_082394" description="In allele A*02:01, allele A*02:05, allele A*23:01, allele A*24:02, allele A*25:01, allele A*26:01, allele A*29:02, allele A*31:01, allele A*32:01, allele A*33:01, allele A*34:01, allele A*43:01, allele A*66:01, allele A*68:01, allele A*69:01, allele A*74:01 and allele A*80:01." evidence="12 14 24 25 46 48 53 63 67 70 75 79 80 81 82 85 91 94">
    <original>L</original>
    <variation>P</variation>
    <location>
        <position position="300"/>
    </location>
</feature>
<feature type="sequence variant" id="VAR_082395" description="In allele A*23:01 and allele A*24:02." evidence="24 91">
    <original>I</original>
    <variation>V</variation>
    <location>
        <position position="306"/>
    </location>
</feature>
<feature type="sequence variant" id="VAR_082396" description="In allele A*23:01." evidence="24">
    <original>P</original>
    <variation>H</variation>
    <location>
        <position position="307"/>
    </location>
</feature>
<feature type="sequence variant" id="VAR_082397" description="In allele A*34:01." evidence="14">
    <original>I</original>
    <variation>L</variation>
    <location>
        <position position="312"/>
    </location>
</feature>
<feature type="sequence variant" id="VAR_082398" description="In allele A*02:01, allele A*02:05, allele A*25:01, allele A*26:01, allele A*29:02, allele A*31:01, allele A*32:01, allele A*33:01, allele A*34:01, allele A*43:01, allele A*66:01, allele A*68:01, allele A*69:01 and allele A*74:01." evidence="12 14 25 46 48 53 63 67 70 75 79 82 85 94">
    <original>L</original>
    <variation>F</variation>
    <location>
        <position position="318"/>
    </location>
</feature>
<feature type="sequence variant" id="VAR_082399" description="In allele A*32:01 and allele A*74:01." evidence="14 48 94">
    <original>V</original>
    <variation>M</variation>
    <location>
        <position position="321"/>
    </location>
</feature>
<feature type="sequence variant" id="VAR_082400" description="In allele A*29:02, allele A*31:01, allele A*32:01, allele A*33:01 and allele A*74:01." evidence="12 14 25 48 53 85 94">
    <original>I</original>
    <variation>F</variation>
    <location>
        <position position="322"/>
    </location>
</feature>
<feature type="sequence variant" id="VAR_082401" description="In allele A*25:01, allele A*26:01, allele A*29:02, allele A*31:01, allele A*32:01, allele A*33:01, allele A*34:01, allele A*43:01, allele A*66:01, allele A*74:01 and allele A*80:01." evidence="12 14 25 46 48 53 79 80 81 82 85 94">
    <original>T</original>
    <variation>A</variation>
    <location>
        <position position="323"/>
    </location>
</feature>
<feature type="sequence variant" id="VAR_082402" description="In allele A*29:02, allele A*31:01, allele A*32:01, allele A*33:01 and allele A*74:01." evidence="12 14 25 48 53 85 94">
    <original>M</original>
    <variation>R</variation>
    <location>
        <position position="331"/>
    </location>
</feature>
<feature type="sequence variant" id="VAR_082403" description="Allele A*80:01." evidence="80 81">
    <original>R</original>
    <variation>K</variation>
    <location>
        <position position="334"/>
    </location>
</feature>
<feature type="sequence variant" id="VAR_082404" description="In allele A*23:01 and allele A*24:02." evidence="24 91">
    <original>K</original>
    <variation>N</variation>
    <location>
        <position position="335"/>
    </location>
</feature>
<feature type="sequence variant" id="VAR_082405" description="Allele A*80:01." evidence="80 81">
    <original>D</original>
    <variation>V</variation>
    <location>
        <position position="338"/>
    </location>
</feature>
<feature type="sequence variant" id="VAR_082406" description="In allele A*02:01, allele A*02:05, allele A*23:01, allele A*24:02, allele A*25:01, allele A*26:01, allele A*29:02, allele A*31:01, allele A*32:01, allele A*33:01, allele A*34:01, allele A*43:01, allele A*66:01, allele A*68:01 allele A*69:01, allele A*74:01 and allele A*80:01." evidence="12 14 24 25 46 48 53 63 67 70 75 79 80 81 82 85 91 94">
    <original>T</original>
    <variation>S</variation>
    <location>
        <position position="345"/>
    </location>
</feature>
<feature type="sequence variant" id="VAR_082407" description="In allele A*25:01, allele A*26:01, allele A*29:02, allele A*31:01, allele A*32:01, allele A*33:01, allele A*34:01, allele A*43:01, allele A*66:01 and allele A*74:01." evidence="12 14 25 46 48 53 79 82 85 94">
    <original>V</original>
    <variation>M</variation>
    <location>
        <position position="358"/>
    </location>
</feature>
<feature type="mutagenesis site" description="Impairs the recruitment of HLA-A*02 in the peptide-loading complex." evidence="38">
    <original>N</original>
    <variation>Q</variation>
    <location>
        <position position="110"/>
    </location>
</feature>
<feature type="mutagenesis site" description="Impairs the maturation of a peptide-receptive HLA-A*02-B2M complex." evidence="86">
    <original>S</original>
    <variation>C</variation>
    <location>
        <position position="156"/>
    </location>
</feature>
<feature type="mutagenesis site" description="Impairs binding to TAP1-TAP2 transporter, resulting in impaired presentation of intracellular peptides." evidence="84 86">
    <original>T</original>
    <variation>K</variation>
    <location>
        <position position="158"/>
    </location>
</feature>
<feature type="strand" evidence="104">
    <location>
        <begin position="27"/>
        <end position="36"/>
    </location>
</feature>
<feature type="strand" evidence="104">
    <location>
        <begin position="41"/>
        <end position="43"/>
    </location>
</feature>
<feature type="strand" evidence="104">
    <location>
        <begin position="45"/>
        <end position="52"/>
    </location>
</feature>
<feature type="strand" evidence="104">
    <location>
        <begin position="55"/>
        <end position="61"/>
    </location>
</feature>
<feature type="strand" evidence="104">
    <location>
        <begin position="64"/>
        <end position="66"/>
    </location>
</feature>
<feature type="strand" evidence="106">
    <location>
        <begin position="70"/>
        <end position="73"/>
    </location>
</feature>
<feature type="helix" evidence="104">
    <location>
        <begin position="74"/>
        <end position="78"/>
    </location>
</feature>
<feature type="helix" evidence="104">
    <location>
        <begin position="81"/>
        <end position="108"/>
    </location>
</feature>
<feature type="strand" evidence="103">
    <location>
        <begin position="113"/>
        <end position="115"/>
    </location>
</feature>
<feature type="strand" evidence="104">
    <location>
        <begin position="118"/>
        <end position="127"/>
    </location>
</feature>
<feature type="strand" evidence="104">
    <location>
        <begin position="131"/>
        <end position="142"/>
    </location>
</feature>
<feature type="strand" evidence="104">
    <location>
        <begin position="145"/>
        <end position="150"/>
    </location>
</feature>
<feature type="strand" evidence="108">
    <location>
        <begin position="152"/>
        <end position="155"/>
    </location>
</feature>
<feature type="strand" evidence="104">
    <location>
        <begin position="157"/>
        <end position="159"/>
    </location>
</feature>
<feature type="helix" evidence="104">
    <location>
        <begin position="162"/>
        <end position="173"/>
    </location>
</feature>
<feature type="helix" evidence="104">
    <location>
        <begin position="176"/>
        <end position="184"/>
    </location>
</feature>
<feature type="helix" evidence="104">
    <location>
        <begin position="187"/>
        <end position="198"/>
    </location>
</feature>
<feature type="helix" evidence="104">
    <location>
        <begin position="200"/>
        <end position="203"/>
    </location>
</feature>
<feature type="strand" evidence="104">
    <location>
        <begin position="210"/>
        <end position="235"/>
    </location>
</feature>
<feature type="strand" evidence="104">
    <location>
        <begin position="238"/>
        <end position="243"/>
    </location>
</feature>
<feature type="strand" evidence="104">
    <location>
        <begin position="246"/>
        <end position="248"/>
    </location>
</feature>
<feature type="helix" evidence="101">
    <location>
        <begin position="249"/>
        <end position="251"/>
    </location>
</feature>
<feature type="strand" evidence="104">
    <location>
        <begin position="252"/>
        <end position="254"/>
    </location>
</feature>
<feature type="strand" evidence="104">
    <location>
        <begin position="261"/>
        <end position="263"/>
    </location>
</feature>
<feature type="strand" evidence="104">
    <location>
        <begin position="265"/>
        <end position="274"/>
    </location>
</feature>
<feature type="strand" evidence="107">
    <location>
        <begin position="275"/>
        <end position="277"/>
    </location>
</feature>
<feature type="helix" evidence="104">
    <location>
        <begin position="278"/>
        <end position="280"/>
    </location>
</feature>
<feature type="strand" evidence="104">
    <location>
        <begin position="281"/>
        <end position="286"/>
    </location>
</feature>
<feature type="strand" evidence="102">
    <location>
        <begin position="290"/>
        <end position="292"/>
    </location>
</feature>
<feature type="strand" evidence="104">
    <location>
        <begin position="294"/>
        <end position="297"/>
    </location>
</feature>
<feature type="strand" evidence="105">
    <location>
        <begin position="348"/>
        <end position="350"/>
    </location>
</feature>
<gene>
    <name evidence="98" type="primary">HLA-A</name>
    <name type="synonym">HLAA</name>
</gene>
<evidence type="ECO:0000255" key="1"/>
<evidence type="ECO:0000255" key="2">
    <source>
        <dbReference type="PROSITE-ProRule" id="PRU00114"/>
    </source>
</evidence>
<evidence type="ECO:0000256" key="3">
    <source>
        <dbReference type="SAM" id="MobiDB-lite"/>
    </source>
</evidence>
<evidence type="ECO:0000269" key="4">
    <source>
    </source>
</evidence>
<evidence type="ECO:0000269" key="5">
    <source>
    </source>
</evidence>
<evidence type="ECO:0000269" key="6">
    <source>
    </source>
</evidence>
<evidence type="ECO:0000269" key="7">
    <source>
    </source>
</evidence>
<evidence type="ECO:0000269" key="8">
    <source>
    </source>
</evidence>
<evidence type="ECO:0000269" key="9">
    <source>
    </source>
</evidence>
<evidence type="ECO:0000269" key="10">
    <source>
    </source>
</evidence>
<evidence type="ECO:0000269" key="11">
    <source>
    </source>
</evidence>
<evidence type="ECO:0000269" key="12">
    <source>
    </source>
</evidence>
<evidence type="ECO:0000269" key="13">
    <source>
    </source>
</evidence>
<evidence type="ECO:0000269" key="14">
    <source>
    </source>
</evidence>
<evidence type="ECO:0000269" key="15">
    <source>
    </source>
</evidence>
<evidence type="ECO:0000269" key="16">
    <source>
    </source>
</evidence>
<evidence type="ECO:0000269" key="17">
    <source>
    </source>
</evidence>
<evidence type="ECO:0000269" key="18">
    <source>
    </source>
</evidence>
<evidence type="ECO:0000269" key="19">
    <source>
    </source>
</evidence>
<evidence type="ECO:0000269" key="20">
    <source>
    </source>
</evidence>
<evidence type="ECO:0000269" key="21">
    <source>
    </source>
</evidence>
<evidence type="ECO:0000269" key="22">
    <source>
    </source>
</evidence>
<evidence type="ECO:0000269" key="23">
    <source>
    </source>
</evidence>
<evidence type="ECO:0000269" key="24">
    <source>
    </source>
</evidence>
<evidence type="ECO:0000269" key="25">
    <source>
    </source>
</evidence>
<evidence type="ECO:0000269" key="26">
    <source>
    </source>
</evidence>
<evidence type="ECO:0000269" key="27">
    <source>
    </source>
</evidence>
<evidence type="ECO:0000269" key="28">
    <source>
    </source>
</evidence>
<evidence type="ECO:0000269" key="29">
    <source>
    </source>
</evidence>
<evidence type="ECO:0000269" key="30">
    <source>
    </source>
</evidence>
<evidence type="ECO:0000269" key="31">
    <source>
    </source>
</evidence>
<evidence type="ECO:0000269" key="32">
    <source>
    </source>
</evidence>
<evidence type="ECO:0000269" key="33">
    <source>
    </source>
</evidence>
<evidence type="ECO:0000269" key="34">
    <source>
    </source>
</evidence>
<evidence type="ECO:0000269" key="35">
    <source>
    </source>
</evidence>
<evidence type="ECO:0000269" key="36">
    <source>
    </source>
</evidence>
<evidence type="ECO:0000269" key="37">
    <source>
    </source>
</evidence>
<evidence type="ECO:0000269" key="38">
    <source>
    </source>
</evidence>
<evidence type="ECO:0000269" key="39">
    <source>
    </source>
</evidence>
<evidence type="ECO:0000269" key="40">
    <source>
    </source>
</evidence>
<evidence type="ECO:0000269" key="41">
    <source>
    </source>
</evidence>
<evidence type="ECO:0000269" key="42">
    <source>
    </source>
</evidence>
<evidence type="ECO:0000269" key="43">
    <source>
    </source>
</evidence>
<evidence type="ECO:0000269" key="44">
    <source>
    </source>
</evidence>
<evidence type="ECO:0000269" key="45">
    <source>
    </source>
</evidence>
<evidence type="ECO:0000269" key="46">
    <source>
    </source>
</evidence>
<evidence type="ECO:0000269" key="47">
    <source>
    </source>
</evidence>
<evidence type="ECO:0000269" key="48">
    <source>
    </source>
</evidence>
<evidence type="ECO:0000269" key="49">
    <source>
    </source>
</evidence>
<evidence type="ECO:0000269" key="50">
    <source>
    </source>
</evidence>
<evidence type="ECO:0000269" key="51">
    <source>
    </source>
</evidence>
<evidence type="ECO:0000269" key="52">
    <source>
    </source>
</evidence>
<evidence type="ECO:0000269" key="53">
    <source>
    </source>
</evidence>
<evidence type="ECO:0000269" key="54">
    <source>
    </source>
</evidence>
<evidence type="ECO:0000269" key="55">
    <source>
    </source>
</evidence>
<evidence type="ECO:0000269" key="56">
    <source>
    </source>
</evidence>
<evidence type="ECO:0000269" key="57">
    <source>
    </source>
</evidence>
<evidence type="ECO:0000269" key="58">
    <source>
    </source>
</evidence>
<evidence type="ECO:0000269" key="59">
    <source>
    </source>
</evidence>
<evidence type="ECO:0000269" key="60">
    <source>
    </source>
</evidence>
<evidence type="ECO:0000269" key="61">
    <source>
    </source>
</evidence>
<evidence type="ECO:0000269" key="62">
    <source>
    </source>
</evidence>
<evidence type="ECO:0000269" key="63">
    <source>
    </source>
</evidence>
<evidence type="ECO:0000269" key="64">
    <source>
    </source>
</evidence>
<evidence type="ECO:0000269" key="65">
    <source>
    </source>
</evidence>
<evidence type="ECO:0000269" key="66">
    <source>
    </source>
</evidence>
<evidence type="ECO:0000269" key="67">
    <source>
    </source>
</evidence>
<evidence type="ECO:0000269" key="68">
    <source>
    </source>
</evidence>
<evidence type="ECO:0000269" key="69">
    <source>
    </source>
</evidence>
<evidence type="ECO:0000269" key="70">
    <source>
    </source>
</evidence>
<evidence type="ECO:0000269" key="71">
    <source>
    </source>
</evidence>
<evidence type="ECO:0000269" key="72">
    <source>
    </source>
</evidence>
<evidence type="ECO:0000269" key="73">
    <source>
    </source>
</evidence>
<evidence type="ECO:0000269" key="74">
    <source>
    </source>
</evidence>
<evidence type="ECO:0000269" key="75">
    <source>
    </source>
</evidence>
<evidence type="ECO:0000269" key="76">
    <source>
    </source>
</evidence>
<evidence type="ECO:0000269" key="77">
    <source>
    </source>
</evidence>
<evidence type="ECO:0000269" key="78">
    <source>
    </source>
</evidence>
<evidence type="ECO:0000269" key="79">
    <source>
    </source>
</evidence>
<evidence type="ECO:0000269" key="80">
    <source>
    </source>
</evidence>
<evidence type="ECO:0000269" key="81">
    <source>
    </source>
</evidence>
<evidence type="ECO:0000269" key="82">
    <source>
    </source>
</evidence>
<evidence type="ECO:0000269" key="83">
    <source>
    </source>
</evidence>
<evidence type="ECO:0000269" key="84">
    <source>
    </source>
</evidence>
<evidence type="ECO:0000269" key="85">
    <source>
    </source>
</evidence>
<evidence type="ECO:0000269" key="86">
    <source>
    </source>
</evidence>
<evidence type="ECO:0000269" key="87">
    <source>
    </source>
</evidence>
<evidence type="ECO:0000269" key="88">
    <source>
    </source>
</evidence>
<evidence type="ECO:0000269" key="89">
    <source>
    </source>
</evidence>
<evidence type="ECO:0000269" key="90">
    <source>
    </source>
</evidence>
<evidence type="ECO:0000269" key="91">
    <source>
    </source>
</evidence>
<evidence type="ECO:0000269" key="92">
    <source>
    </source>
</evidence>
<evidence type="ECO:0000269" key="93">
    <source>
    </source>
</evidence>
<evidence type="ECO:0000269" key="94">
    <source ref="29"/>
</evidence>
<evidence type="ECO:0000305" key="95"/>
<evidence type="ECO:0000305" key="96">
    <source>
    </source>
</evidence>
<evidence type="ECO:0000305" key="97">
    <source>
    </source>
</evidence>
<evidence type="ECO:0000312" key="98">
    <source>
        <dbReference type="HGNC" id="HGNC:4931"/>
    </source>
</evidence>
<evidence type="ECO:0007744" key="99">
    <source>
    </source>
</evidence>
<evidence type="ECO:0007744" key="100">
    <source>
    </source>
</evidence>
<evidence type="ECO:0007829" key="101">
    <source>
        <dbReference type="PDB" id="2GTW"/>
    </source>
</evidence>
<evidence type="ECO:0007829" key="102">
    <source>
        <dbReference type="PDB" id="2V2X"/>
    </source>
</evidence>
<evidence type="ECO:0007829" key="103">
    <source>
        <dbReference type="PDB" id="3D25"/>
    </source>
</evidence>
<evidence type="ECO:0007829" key="104">
    <source>
        <dbReference type="PDB" id="3MRE"/>
    </source>
</evidence>
<evidence type="ECO:0007829" key="105">
    <source>
        <dbReference type="PDB" id="4EN2"/>
    </source>
</evidence>
<evidence type="ECO:0007829" key="106">
    <source>
        <dbReference type="PDB" id="4F7T"/>
    </source>
</evidence>
<evidence type="ECO:0007829" key="107">
    <source>
        <dbReference type="PDB" id="4JFD"/>
    </source>
</evidence>
<evidence type="ECO:0007829" key="108">
    <source>
        <dbReference type="PDB" id="6EWA"/>
    </source>
</evidence>
<organism>
    <name type="scientific">Homo sapiens</name>
    <name type="common">Human</name>
    <dbReference type="NCBI Taxonomy" id="9606"/>
    <lineage>
        <taxon>Eukaryota</taxon>
        <taxon>Metazoa</taxon>
        <taxon>Chordata</taxon>
        <taxon>Craniata</taxon>
        <taxon>Vertebrata</taxon>
        <taxon>Euteleostomi</taxon>
        <taxon>Mammalia</taxon>
        <taxon>Eutheria</taxon>
        <taxon>Euarchontoglires</taxon>
        <taxon>Primates</taxon>
        <taxon>Haplorrhini</taxon>
        <taxon>Catarrhini</taxon>
        <taxon>Hominidae</taxon>
        <taxon>Homo</taxon>
    </lineage>
</organism>
<name>HLAA_HUMAN</name>